<comment type="function">
    <text evidence="2 9 13 14 16 19 22 25 26 27 28 29 31 32 33 34 36 37 40 41 43 59">Pore-forming, alpha-1C subunit of the voltage-gated calcium channel that gives rise to L-type calcium currents (PubMed:12181424, PubMed:15454078, PubMed:15863612, PubMed:16299511, PubMed:17224476, PubMed:20953164, PubMed:23677916, PubMed:24728418, PubMed:26253506, PubMed:27218670, PubMed:29078335, PubMed:29742403, PubMed:30023270, PubMed:30172029, PubMed:34163037, PubMed:8099908). Mediates influx of calcium ions into the cytoplasm, and thereby triggers calcium release from the sarcoplasm (By similarity). Plays an important role in excitation-contraction coupling in the heart. Required for normal heart development and normal regulation of heart rhythm (PubMed:15454078, PubMed:15863612, PubMed:17224476, PubMed:24728418, PubMed:26253506). Required for normal contraction of smooth muscle cells in blood vessels and in the intestine. Essential for normal blood pressure regulation via its role in the contraction of arterial smooth muscle cells (PubMed:28119464). Long-lasting (L-type) calcium channels belong to the 'high-voltage activated' (HVA) group (Probable).</text>
</comment>
<comment type="function">
    <molecule>Isoform 12</molecule>
    <text evidence="8 42">Pore-forming, alpha-1C subunit of the voltage-gated calcium channel that gives rise to L-type calcium currents.</text>
</comment>
<comment type="function">
    <molecule>Isoform 13</molecule>
    <text evidence="18">Pore-forming, alpha-1C subunit of the voltage-gated calcium channel that gives rise to L-type calcium currents.</text>
</comment>
<comment type="function">
    <molecule>Isoform 14</molecule>
    <text evidence="18">Pore-forming, alpha-1C subunit of the voltage-gated calcium channel that gives rise to L-type calcium currents.</text>
</comment>
<comment type="function">
    <molecule>Isoform 15</molecule>
    <text evidence="18">Pore-forming, alpha-1C subunit of the voltage-gated calcium channel that gives rise to L-type calcium currents.</text>
</comment>
<comment type="function">
    <molecule>Isoform 16</molecule>
    <text evidence="46">Pore-forming, alpha-1C subunit of the voltage-gated calcium channel that gives rise to L-type calcium currents.</text>
</comment>
<comment type="function">
    <molecule>Isoform 17</molecule>
    <text evidence="46">Pore-forming, alpha-1C subunit of the voltage-gated calcium channel that gives rise to L-type calcium currents.</text>
</comment>
<comment type="function">
    <molecule>Isoform 18</molecule>
    <text evidence="44">Pore-forming, alpha-1C subunit of the voltage-gated calcium channel that gives rise to L-type calcium currents.</text>
</comment>
<comment type="function">
    <molecule>Isoform 19</molecule>
    <text evidence="42">Pore-forming, alpha-1C subunit of the voltage-gated calcium channel that gives rise to L-type calcium currents.</text>
</comment>
<comment type="function">
    <molecule>Isoform 20</molecule>
    <text evidence="42">Pore-forming, alpha-1C subunit of the voltage-gated calcium channel that gives rise to L-type calcium currents.</text>
</comment>
<comment type="function">
    <molecule>Isoform 21</molecule>
    <text evidence="47">Pore-forming, alpha-1C subunit of the voltage-gated calcium channel that gives rise to L-type calcium currents.</text>
</comment>
<comment type="function">
    <molecule>Isoform 22</molecule>
    <text evidence="47">Pore-forming, alpha-1C subunit of the voltage-gated calcium channel that gives rise to L-type calcium currents.</text>
</comment>
<comment type="function">
    <molecule>Isoform 23</molecule>
    <text evidence="47">Pore-forming, alpha-1C subunit of the voltage-gated calcium channel that gives rise to L-type calcium currents.</text>
</comment>
<comment type="function">
    <molecule>Isoform 24</molecule>
    <text evidence="18">Pore-forming, alpha-1C subunit of the voltage-gated calcium channel that gives rise to L-type calcium currents.</text>
</comment>
<comment type="function">
    <molecule>Isoform 25</molecule>
    <text evidence="18">Pore-forming, alpha-1C subunit of the voltage-gated calcium channel that gives rise to L-type calcium currents.</text>
</comment>
<comment type="function">
    <molecule>Isoform 26</molecule>
    <text evidence="45">Pore-forming, alpha-1C subunit of the voltage-gated calcium channel that gives rise to L-type calcium currents.</text>
</comment>
<comment type="function">
    <molecule>Isoform 27</molecule>
    <text evidence="45">Pore-forming, alpha-1C subunit of the voltage-gated calcium channel that gives rise to L-type calcium currents.</text>
</comment>
<comment type="function">
    <molecule>Isoform 34</molecule>
    <text evidence="7">Pore-forming, alpha-1C subunit of the voltage-gated calcium channel that gives rise to L-type calcium currents.</text>
</comment>
<comment type="function">
    <text evidence="35">(Microbial infection) Acts as a receptor for Influenzavirus (PubMed:29779930). May play a critical role in allowing virus entry when sialylated and expressed on lung tissues (PubMed:29779930).</text>
</comment>
<comment type="catalytic activity">
    <reaction evidence="9 13 14 16 19 22 25 26 27 28 29 31 32 33 36 37 40 41 43">
        <text>Ca(2+)(in) = Ca(2+)(out)</text>
        <dbReference type="Rhea" id="RHEA:29671"/>
        <dbReference type="ChEBI" id="CHEBI:29108"/>
    </reaction>
</comment>
<comment type="catalytic activity">
    <molecule>Isoform 12</molecule>
    <reaction evidence="8 42">
        <text>Ca(2+)(in) = Ca(2+)(out)</text>
        <dbReference type="Rhea" id="RHEA:29671"/>
        <dbReference type="ChEBI" id="CHEBI:29108"/>
    </reaction>
</comment>
<comment type="catalytic activity">
    <molecule>Isoform 13</molecule>
    <reaction evidence="18">
        <text>Ca(2+)(in) = Ca(2+)(out)</text>
        <dbReference type="Rhea" id="RHEA:29671"/>
        <dbReference type="ChEBI" id="CHEBI:29108"/>
    </reaction>
</comment>
<comment type="catalytic activity">
    <molecule>Isoform 14</molecule>
    <reaction evidence="18">
        <text>Ca(2+)(in) = Ca(2+)(out)</text>
        <dbReference type="Rhea" id="RHEA:29671"/>
        <dbReference type="ChEBI" id="CHEBI:29108"/>
    </reaction>
</comment>
<comment type="catalytic activity">
    <molecule>Isoform 15</molecule>
    <reaction evidence="18">
        <text>Ca(2+)(in) = Ca(2+)(out)</text>
        <dbReference type="Rhea" id="RHEA:29671"/>
        <dbReference type="ChEBI" id="CHEBI:29108"/>
    </reaction>
</comment>
<comment type="catalytic activity">
    <molecule>Isoform 16</molecule>
    <reaction evidence="46">
        <text>Ca(2+)(in) = Ca(2+)(out)</text>
        <dbReference type="Rhea" id="RHEA:29671"/>
        <dbReference type="ChEBI" id="CHEBI:29108"/>
    </reaction>
</comment>
<comment type="catalytic activity">
    <molecule>Isoform 17</molecule>
    <reaction evidence="46">
        <text>Ca(2+)(in) = Ca(2+)(out)</text>
        <dbReference type="Rhea" id="RHEA:29671"/>
        <dbReference type="ChEBI" id="CHEBI:29108"/>
    </reaction>
</comment>
<comment type="catalytic activity">
    <molecule>Isoform 18</molecule>
    <reaction evidence="44">
        <text>Ca(2+)(in) = Ca(2+)(out)</text>
        <dbReference type="Rhea" id="RHEA:29671"/>
        <dbReference type="ChEBI" id="CHEBI:29108"/>
    </reaction>
</comment>
<comment type="catalytic activity">
    <molecule>Isoform 19</molecule>
    <reaction evidence="42">
        <text>Ca(2+)(in) = Ca(2+)(out)</text>
        <dbReference type="Rhea" id="RHEA:29671"/>
        <dbReference type="ChEBI" id="CHEBI:29108"/>
    </reaction>
</comment>
<comment type="catalytic activity">
    <molecule>Isoform 20</molecule>
    <reaction evidence="42">
        <text>Ca(2+)(in) = Ca(2+)(out)</text>
        <dbReference type="Rhea" id="RHEA:29671"/>
        <dbReference type="ChEBI" id="CHEBI:29108"/>
    </reaction>
</comment>
<comment type="catalytic activity">
    <molecule>Isoform 21</molecule>
    <reaction evidence="47">
        <text>Ca(2+)(in) = Ca(2+)(out)</text>
        <dbReference type="Rhea" id="RHEA:29671"/>
        <dbReference type="ChEBI" id="CHEBI:29108"/>
    </reaction>
</comment>
<comment type="catalytic activity">
    <molecule>Isoform 22</molecule>
    <reaction evidence="47">
        <text>Ca(2+)(in) = Ca(2+)(out)</text>
        <dbReference type="Rhea" id="RHEA:29671"/>
        <dbReference type="ChEBI" id="CHEBI:29108"/>
    </reaction>
</comment>
<comment type="catalytic activity">
    <molecule>Isoform 23</molecule>
    <reaction evidence="47">
        <text>Ca(2+)(in) = Ca(2+)(out)</text>
        <dbReference type="Rhea" id="RHEA:29671"/>
        <dbReference type="ChEBI" id="CHEBI:29108"/>
    </reaction>
</comment>
<comment type="catalytic activity">
    <molecule>Isoform 24</molecule>
    <reaction evidence="18">
        <text>Ca(2+)(in) = Ca(2+)(out)</text>
        <dbReference type="Rhea" id="RHEA:29671"/>
        <dbReference type="ChEBI" id="CHEBI:29108"/>
    </reaction>
</comment>
<comment type="catalytic activity">
    <molecule>Isoform 25</molecule>
    <reaction evidence="18">
        <text>Ca(2+)(in) = Ca(2+)(out)</text>
        <dbReference type="Rhea" id="RHEA:29671"/>
        <dbReference type="ChEBI" id="CHEBI:29108"/>
    </reaction>
</comment>
<comment type="catalytic activity">
    <molecule>Isoform 26</molecule>
    <reaction evidence="45">
        <text>Ca(2+)(in) = Ca(2+)(out)</text>
        <dbReference type="Rhea" id="RHEA:29671"/>
        <dbReference type="ChEBI" id="CHEBI:29108"/>
    </reaction>
</comment>
<comment type="catalytic activity">
    <molecule>Isoform 27</molecule>
    <reaction evidence="45">
        <text>Ca(2+)(in) = Ca(2+)(out)</text>
        <dbReference type="Rhea" id="RHEA:29671"/>
        <dbReference type="ChEBI" id="CHEBI:29108"/>
    </reaction>
</comment>
<comment type="catalytic activity">
    <molecule>Isoform 34</molecule>
    <reaction evidence="7">
        <text>Ca(2+)(in) = Ca(2+)(out)</text>
        <dbReference type="Rhea" id="RHEA:29671"/>
        <dbReference type="ChEBI" id="CHEBI:29108"/>
    </reaction>
</comment>
<comment type="activity regulation">
    <text evidence="2 8 11 15 33 34 42 43 44 47 60">Inhibited by dihydropyridines (DHP), such as isradipine (PubMed:7737988, PubMed:8099908, PubMed:8392192, PubMed:9607315). Inhibited by nifedipine (By similarity). Channel activity is regulated by Ca(2+) and calmodulin (Probable) (PubMed:29742403). Binding of STAC1, STAC2 or STAC3 to a region that overlaps with the calmodulin binding site inhibits channel inactivation by Ca(2+) and calmodulin (PubMed:29078335). Binding of calmodulin or CABP1 at the same regulatory sites results in opposite effects on the channel function (PubMed:15140941, PubMed:15980432). Shear stress and pressure increases calcium channel activity (PubMed:12176756).</text>
</comment>
<comment type="subunit">
    <text evidence="2 4 7 8 9 11 12 14 15 16 17 19 20 22 24 26 33 34 59">Component of a calcium channel complex consisting of a pore-forming alpha subunit (CACNA1C) and ancillary beta, gamma and delta subunits (PubMed:12176756, PubMed:12181424, PubMed:15141227, PubMed:16299511, PubMed:20953164, PubMed:29078335, PubMed:29742403). The channel complex contains alpha, beta, gamma and delta subunits in a 1:1:1:1 ratio, i.e. it contains only one of each type of subunit (Probable). CACNA1C channel activity is modulated by ancillary subunits, such as CACNB1, CACNB2, CACNB3, CACNA2D1 and CACNA2D4 (PubMed:11741969, PubMed:12181424, PubMed:17224476, PubMed:29742403). Interacts with the gamma subunits CACNG4, CACNG6, CACNG7 and CACNG8 (By similarity). Interacts with CACNB1 (By similarity). Interacts with CACNB2 (PubMed:11741969, PubMed:12176756, PubMed:15141227, PubMed:15863612, PubMed:17224476, PubMed:20953164, PubMed:24728418, PubMed:29742403). Identified in a complex with CACNA2D4 and CACNB3 (PubMed:12181424). Interacts with CACNB3 (PubMed:12181424, PubMed:29742403). Interacts with CACNA2D1 (PubMed:15863612, PubMed:20953164, PubMed:24728418, PubMed:29742403). Interacts with CACNA2D4 (PubMed:12181424). Interacts with CALM1 (PubMed:16299511, PubMed:16338416, PubMed:19279214, PubMed:20953164, PubMed:22518098, PubMed:29742403). Interacts (via the N-terminus and the C-terminal C and IQ motifs) with CABP1; this inhibits Ca(2+)-dependent channel inactivation (PubMed:15140941, PubMed:15980432). The binding via the C motif is calcium independent whereas the binding via IQ requires the presence of calcium and is mutually exclusive with calmodulin binding (PubMed:15140941). The binding to the cytoplasmic N-terminal domain is calcium independent but is essential for the channel modulation. Interacts (via C-terminal CDB motif) with CABP5; in a calcium-dependent manner (By similarity). Interacts with CIB1; the interaction increases upon cardiomyocytes hypertrophy (By similarity). Interacts with STAC2 and STAC3; this inhibits channel inactivation (PubMed:29078335).</text>
</comment>
<comment type="subunit">
    <text evidence="35">(Microbial infection) Interacts with influenzavirus H1 hemagglutinin.</text>
</comment>
<comment type="interaction">
    <interactant intactId="EBI-1038838">
        <id>Q13936</id>
    </interactant>
    <interactant intactId="EBI-351710">
        <id>P12814</id>
        <label>ACTN1</label>
    </interactant>
    <organismsDiffer>false</organismsDiffer>
    <experiments>2</experiments>
</comment>
<comment type="interaction">
    <interactant intactId="EBI-1038838">
        <id>Q13936</id>
    </interactant>
    <interactant intactId="EBI-79306">
        <id>Q06481</id>
        <label>APLP2</label>
    </interactant>
    <organismsDiffer>false</organismsDiffer>
    <experiments>5</experiments>
</comment>
<comment type="interaction">
    <interactant intactId="EBI-1038838">
        <id>Q13936</id>
    </interactant>
    <interactant intactId="EBI-905851">
        <id>P01024</id>
        <label>C3</label>
    </interactant>
    <organismsDiffer>false</organismsDiffer>
    <experiments>2</experiments>
</comment>
<comment type="interaction">
    <interactant intactId="EBI-1038838">
        <id>Q13936</id>
    </interactant>
    <interactant intactId="EBI-907894">
        <id>Q9NZU7</id>
        <label>CABP1</label>
    </interactant>
    <organismsDiffer>false</organismsDiffer>
    <experiments>4</experiments>
</comment>
<comment type="interaction">
    <interactant intactId="EBI-1038838">
        <id>Q13936</id>
    </interactant>
    <interactant intactId="EBI-15707950">
        <id>Q02641-1</id>
        <label>CACNB1</label>
    </interactant>
    <organismsDiffer>false</organismsDiffer>
    <experiments>2</experiments>
</comment>
<comment type="interaction">
    <interactant intactId="EBI-1038838">
        <id>Q13936</id>
    </interactant>
    <interactant intactId="EBI-15707999">
        <id>Q08289-1</id>
        <label>CACNB2</label>
    </interactant>
    <organismsDiffer>false</organismsDiffer>
    <experiments>4</experiments>
</comment>
<comment type="interaction">
    <interactant intactId="EBI-1038838">
        <id>Q13936</id>
    </interactant>
    <interactant intactId="EBI-1184651">
        <id>P54284</id>
        <label>CACNB3</label>
    </interactant>
    <organismsDiffer>false</organismsDiffer>
    <experiments>8</experiments>
</comment>
<comment type="interaction">
    <interactant intactId="EBI-1038838">
        <id>Q13936</id>
    </interactant>
    <interactant intactId="EBI-397435">
        <id>P62158</id>
        <label>CALM3</label>
    </interactant>
    <organismsDiffer>false</organismsDiffer>
    <experiments>21</experiments>
</comment>
<comment type="interaction">
    <interactant intactId="EBI-1038838">
        <id>Q13936</id>
    </interactant>
    <interactant intactId="EBI-713291">
        <id>P51114</id>
        <label>FXR1</label>
    </interactant>
    <organismsDiffer>false</organismsDiffer>
    <experiments>2</experiments>
</comment>
<comment type="interaction">
    <interactant intactId="EBI-1038838">
        <id>Q13936</id>
    </interactant>
    <interactant intactId="EBI-299649">
        <id>P22626</id>
        <label>HNRNPA2B1</label>
    </interactant>
    <organismsDiffer>false</organismsDiffer>
    <experiments>2</experiments>
</comment>
<comment type="interaction">
    <interactant intactId="EBI-1038838">
        <id>Q13936</id>
    </interactant>
    <interactant intactId="EBI-311350">
        <id>Q9HCM3</id>
        <label>KIAA1549</label>
    </interactant>
    <organismsDiffer>false</organismsDiffer>
    <experiments>2</experiments>
</comment>
<comment type="interaction">
    <interactant intactId="EBI-1038838">
        <id>Q13936</id>
    </interactant>
    <interactant intactId="EBI-2684075">
        <id>Q06413</id>
        <label>MEF2C</label>
    </interactant>
    <organismsDiffer>false</organismsDiffer>
    <experiments>4</experiments>
</comment>
<comment type="interaction">
    <interactant intactId="EBI-1038838">
        <id>Q13936</id>
    </interactant>
    <interactant intactId="EBI-2462339">
        <id>Q96DH6</id>
        <label>MSI2</label>
    </interactant>
    <organismsDiffer>false</organismsDiffer>
    <experiments>2</experiments>
</comment>
<comment type="interaction">
    <interactant intactId="EBI-1038838">
        <id>Q13936</id>
    </interactant>
    <interactant intactId="EBI-6380741">
        <id>P42857</id>
        <label>NSG1</label>
    </interactant>
    <organismsDiffer>false</organismsDiffer>
    <experiments>4</experiments>
</comment>
<comment type="interaction">
    <interactant intactId="EBI-1038838">
        <id>Q13936</id>
    </interactant>
    <interactant intactId="EBI-1754151">
        <id>Q9Y5H9</id>
        <label>PCDHA2</label>
    </interactant>
    <organismsDiffer>false</organismsDiffer>
    <experiments>2</experiments>
</comment>
<comment type="interaction">
    <interactant intactId="EBI-1038838">
        <id>Q13936</id>
    </interactant>
    <interactant intactId="EBI-1045222">
        <id>Q9Y5E4</id>
        <label>PCDHB5</label>
    </interactant>
    <organismsDiffer>false</organismsDiffer>
    <experiments>4</experiments>
</comment>
<comment type="interaction">
    <interactant intactId="EBI-1038838">
        <id>Q13936</id>
    </interactant>
    <interactant intactId="EBI-1105102">
        <id>Q07343</id>
        <label>PDE4B</label>
    </interactant>
    <organismsDiffer>false</organismsDiffer>
    <experiments>2</experiments>
</comment>
<comment type="interaction">
    <interactant intactId="EBI-1038838">
        <id>Q13936</id>
    </interactant>
    <interactant intactId="EBI-79165">
        <id>Q9NRD5</id>
        <label>PICK1</label>
    </interactant>
    <organismsDiffer>false</organismsDiffer>
    <experiments>4</experiments>
</comment>
<comment type="interaction">
    <interactant intactId="EBI-1038838">
        <id>Q13936</id>
    </interactant>
    <interactant intactId="EBI-714796">
        <id>Q9UKM9</id>
        <label>RALY</label>
    </interactant>
    <organismsDiffer>false</organismsDiffer>
    <experiments>2</experiments>
</comment>
<comment type="interaction">
    <interactant intactId="EBI-1038838">
        <id>Q13936</id>
    </interactant>
    <interactant intactId="EBI-10303490">
        <id>Q9C0C4</id>
        <label>SEMA4C</label>
    </interactant>
    <organismsDiffer>false</organismsDiffer>
    <experiments>3</experiments>
</comment>
<comment type="interaction">
    <interactant intactId="EBI-1038838">
        <id>Q13936</id>
    </interactant>
    <interactant intactId="EBI-876542">
        <id>O75533</id>
        <label>SF3B1</label>
    </interactant>
    <organismsDiffer>false</organismsDiffer>
    <experiments>2</experiments>
</comment>
<comment type="interaction">
    <interactant intactId="EBI-1038838">
        <id>Q13936</id>
    </interactant>
    <interactant intactId="EBI-397530">
        <id>P62161</id>
        <label>Calm3</label>
    </interactant>
    <organismsDiffer>true</organismsDiffer>
    <experiments>2</experiments>
</comment>
<comment type="interaction">
    <interactant intactId="EBI-15896749">
        <id>Q13936-20</id>
    </interactant>
    <interactant intactId="EBI-15896740">
        <id>Q9NZU7-2</id>
        <label>CABP1</label>
    </interactant>
    <organismsDiffer>false</organismsDiffer>
    <experiments>2</experiments>
</comment>
<comment type="subcellular location">
    <subcellularLocation>
        <location evidence="7 8 9 13 14 16 18 19 22 26 29 31 33 34 42 43 44 45 46 47">Cell membrane</location>
        <topology evidence="59">Multi-pass membrane protein</topology>
    </subcellularLocation>
    <subcellularLocation>
        <location evidence="2">Cell membrane</location>
        <location evidence="2">Sarcolemma</location>
        <topology evidence="59">Multi-pass membrane protein</topology>
    </subcellularLocation>
    <subcellularLocation>
        <location evidence="3">Perikaryon</location>
    </subcellularLocation>
    <subcellularLocation>
        <location evidence="3">Postsynaptic density membrane</location>
    </subcellularLocation>
    <subcellularLocation>
        <location evidence="3">Cell projection</location>
        <location evidence="3">Dendrite</location>
    </subcellularLocation>
    <subcellularLocation>
        <location evidence="4">Cell membrane</location>
        <location evidence="4">Sarcolemma</location>
        <location evidence="4">T-tubule</location>
    </subcellularLocation>
    <text evidence="2">Colocalizes with ryanodine receptors in distinct clusters at the junctional membrane, where the sarcolemma and the sarcoplasmic reticulum are in close contact. The interaction between RRAD and CACNB2 promotes the expression of CACNA1C at the cell membrane.</text>
</comment>
<comment type="alternative products">
    <event type="alternative splicing"/>
    <isoform>
        <id>Q13936-1</id>
        <name>1</name>
        <name>HFCC</name>
        <name>Fibroblast</name>
        <sequence type="displayed"/>
    </isoform>
    <isoform>
        <id>Q13936-2</id>
        <name>2</name>
        <sequence type="described" ref="VSP_000894"/>
    </isoform>
    <isoform>
        <id>Q13936-3</id>
        <name>3</name>
        <sequence type="described" ref="VSP_000886"/>
    </isoform>
    <isoform>
        <id>Q13936-4</id>
        <name>4</name>
        <sequence type="described" ref="VSP_000887"/>
    </isoform>
    <isoform>
        <id>Q13936-5</id>
        <name>5</name>
        <sequence type="described" ref="VSP_000888"/>
    </isoform>
    <isoform>
        <id>Q13936-6</id>
        <name>6</name>
        <sequence type="described" ref="VSP_000889"/>
    </isoform>
    <isoform>
        <id>Q13936-7</id>
        <name>7</name>
        <sequence type="described" ref="VSP_000890"/>
    </isoform>
    <isoform>
        <id>Q13936-8</id>
        <name>8</name>
        <sequence type="described" ref="VSP_000891"/>
    </isoform>
    <isoform>
        <id>Q13936-9</id>
        <name>9</name>
        <sequence type="described" ref="VSP_000892"/>
    </isoform>
    <isoform>
        <id>Q13936-10</id>
        <name>10</name>
        <sequence type="described" ref="VSP_000893"/>
    </isoform>
    <isoform>
        <id>Q13936-11</id>
        <name>11</name>
        <name>Alpha-1C.90</name>
        <sequence type="described" ref="VSP_000895"/>
    </isoform>
    <isoform>
        <id>Q13936-12</id>
        <name>12</name>
        <name>Alpha-1C.70</name>
        <sequence type="described" ref="VSP_000888 VSP_000889 VSP_000895"/>
    </isoform>
    <isoform>
        <id>Q13936-13</id>
        <name>13</name>
        <name>Alpha-1C.127</name>
        <sequence type="described" ref="VSP_000888 VSP_000890 VSP_000893 VSP_000895"/>
    </isoform>
    <isoform>
        <id>Q13936-14</id>
        <name>14</name>
        <name>Alpha-1C.126</name>
        <sequence type="described" ref="VSP_000888 VSP_000889 VSP_022504 VSP_000893 VSP_000895"/>
    </isoform>
    <isoform>
        <id>Q13936-15</id>
        <name>15</name>
        <name>Alpha-1C.125</name>
        <sequence type="described" ref="VSP_000888 VSP_000889 VSP_022503 VSP_000893 VSP_000895"/>
    </isoform>
    <isoform>
        <id>Q13936-16</id>
        <name>16</name>
        <sequence type="described" ref="VSP_000885 VSP_000886 VSP_000888 VSP_000890"/>
    </isoform>
    <isoform>
        <id>Q13936-17</id>
        <name>17</name>
        <sequence type="described" ref="VSP_000885 VSP_000886 VSP_000888 VSP_000890 VSP_000895"/>
    </isoform>
    <isoform>
        <id>Q13936-18</id>
        <name>18</name>
        <name>HHT-1</name>
        <sequence type="described" ref="VSP_000885 VSP_000886 VSP_000888 VSP_000890 VSP_000894"/>
    </isoform>
    <isoform>
        <id>Q13936-19</id>
        <name>19</name>
        <name>Alpha-1C.76</name>
        <sequence type="described" ref="VSP_000887 VSP_000889 VSP_000891 VSP_000895"/>
    </isoform>
    <isoform>
        <id>Q13936-20</id>
        <name>20</name>
        <name>Alpha-1C.77</name>
        <sequence type="described" ref="VSP_000887 VSP_000889 VSP_000895"/>
    </isoform>
    <isoform>
        <id>Q13936-21</id>
        <name>21</name>
        <name>Alpha-1C.69</name>
        <sequence type="described" ref="VSP_000887 VSP_000890 VSP_000895"/>
    </isoform>
    <isoform>
        <id>Q13936-22</id>
        <name>22</name>
        <name>Alpha-1C.78</name>
        <sequence type="described" ref="VSP_000888 VSP_000890 VSP_000895"/>
    </isoform>
    <isoform>
        <id>Q13936-23</id>
        <name>23</name>
        <name>Alpha-1C.105</name>
        <sequence type="described" ref="VSP_000886 VSP_000887 VSP_000889 VSP_000895"/>
    </isoform>
    <isoform>
        <id>Q13936-24</id>
        <name>24</name>
        <name>Alpha-1C.71</name>
        <sequence type="described" ref="VSP_000888 VSP_000889 VSP_000893 VSP_000895"/>
    </isoform>
    <isoform>
        <id>Q13936-25</id>
        <name>25</name>
        <name>Alpha-1C.73</name>
        <sequence type="described" ref="VSP_000888 VSP_000889 VSP_000891 VSP_000893 VSP_000895"/>
    </isoform>
    <isoform>
        <id>Q13936-26</id>
        <name>26</name>
        <name>Alpha-1C.86</name>
        <sequence type="described" ref="VSP_000887 VSP_000889 VSP_000892 VSP_000895"/>
    </isoform>
    <isoform>
        <id>Q13936-27</id>
        <name>27</name>
        <name>Alpha-1C.72</name>
        <sequence type="described" ref="VSP_000887 VSP_000889 VSP_000893 VSP_000895"/>
    </isoform>
    <isoform>
        <id>Q13936-28</id>
        <name>28</name>
        <sequence type="described" ref="VSP_000885 VSP_000886 VSP_000888 VSP_000889 VSP_000891 VSP_000894"/>
    </isoform>
    <isoform>
        <id>Q13936-29</id>
        <name>29</name>
        <name>Alpha-1C.74</name>
        <sequence type="described" ref="VSP_000887 VSP_000889 VSP_000891 VSP_000893 VSP_000895"/>
    </isoform>
    <isoform>
        <id>Q13936-30</id>
        <name>30</name>
        <name>Alpha-1C.87</name>
        <sequence type="described" ref="VSP_000889 VSP_000895"/>
    </isoform>
    <isoform>
        <id>Q13936-31</id>
        <name>31</name>
        <name>Alpha-1C.88</name>
        <sequence type="described" ref="VSP_000888 VSP_000895"/>
    </isoform>
    <isoform>
        <id>Q13936-32</id>
        <name>32</name>
        <name>Alpha-1C.89</name>
        <sequence type="described" ref="VSP_000887 VSP_000891 VSP_000895"/>
    </isoform>
    <isoform>
        <id>Q13936-33</id>
        <name>33</name>
        <name>Alpha-1C.85</name>
        <sequence type="described" ref="VSP_000887 VSP_000889"/>
    </isoform>
    <isoform>
        <id>Q13936-34</id>
        <name>34</name>
        <name>Alpha-1C,long-NT</name>
        <sequence type="described" ref="VSP_035146"/>
    </isoform>
    <isoform>
        <id>Q13936-35</id>
        <name>35</name>
        <sequence type="described" ref="VSP_035877 VSP_000888 VSP_000890 VSP_000895"/>
    </isoform>
    <isoform>
        <id>Q13936-36</id>
        <name>36</name>
        <sequence type="described" ref="VSP_000886 VSP_000888 VSP_000890"/>
    </isoform>
    <isoform>
        <id>Q13936-37</id>
        <name>37</name>
        <sequence type="described" ref="VSP_000886 VSP_000888 VSP_000890 VSP_000895"/>
    </isoform>
    <text>Additional isoforms seem to exist. Exons 8A, 21, 22, 31, 32, 33, 40B, 43A, 41A and 45 are alternatively spliced in a variety of combinations. Experimental confirmation may be lacking for some isoforms.</text>
</comment>
<comment type="tissue specificity">
    <text evidence="8 13 18 44">Detected throughout the brain, including hippocampus, cerebellum and amygdala, throughout the heart and vascular system, including ductus arteriosus, in urinary bladder, and in retina and sclera in the eye (PubMed:15454078). Expressed in brain, heart, jejunum, ovary, pancreatic beta-cells and vascular smooth muscle. Overall expression is reduced in atherosclerotic vascular smooth muscle.</text>
</comment>
<comment type="domain">
    <text evidence="59">Each of the four internal repeats contains five hydrophobic transmembrane segments (S1, S2, S3, S5, S6) and one positively charged transmembrane segment (S4). S4 segments probably represent the voltage-sensor and are characterized by a series of positively charged amino acids at every third position.</text>
</comment>
<comment type="domain">
    <text evidence="2">Binding of intracellular calcium through the EF-hand motif inhibits the opening of the channel.</text>
</comment>
<comment type="PTM">
    <text evidence="32">Phosphorylation by PKA at Ser-1981 activates the channel. Elevated levels of blood glucose lead to increased phosphorylation by PKA.</text>
</comment>
<comment type="disease" evidence="13 14 27 29 36 37 40 43">
    <disease id="DI-02370">
        <name>Timothy syndrome</name>
        <acronym>TS</acronym>
        <description>Disorder characterized by multiorgan dysfunction including lethal arrhythmias, webbing of fingers and toes, congenital heart disease, immune deficiency, intermittent hypoglycemia, cognitive abnormalities and autism.</description>
        <dbReference type="MIM" id="601005"/>
    </disease>
    <text>The disease is caused by variants affecting the gene represented in this entry.</text>
</comment>
<comment type="disease" evidence="19 21">
    <disease id="DI-00204">
        <name>Brugada syndrome 3</name>
        <acronym>BRGDA3</acronym>
        <description>A heart disease characterized by the association of Brugada syndrome with shortened QT intervals. Brugada syndrome is a tachyarrhythmia characterized by right bundle branch block and ST segment elevation on an electrocardiogram (ECG). It can cause the ventricles to beat so fast that the blood is prevented from circulating efficiently in the body. When this situation occurs, the individual will faint and may die in a few minutes if the heart is not reset.</description>
        <dbReference type="MIM" id="611875"/>
    </disease>
    <text>The gene represented in this entry may be involved in disease pathogenesis.</text>
</comment>
<comment type="disease" evidence="25 26 28 38">
    <disease id="DI-05582">
        <name>Long QT syndrome 8</name>
        <acronym>LQT8</acronym>
        <description>A form of long QT syndrome, a heart disorder characterized by a prolonged QT interval on the ECG and polymorphic ventricular arrhythmias. They cause syncope and sudden death in response to exercise or emotional stress, and can present with a sentinel event of sudden cardiac death in infancy. LQT8 transmission pattern is consistent with autosomal dominant inheritance with incomplete penetrance.</description>
        <dbReference type="MIM" id="618447"/>
    </disease>
    <text>The disease is caused by variants affecting the gene represented in this entry.</text>
</comment>
<comment type="disease" evidence="39 41">
    <disease id="DI-06503">
        <name>Neurodevelopmental disorder with hypotonia, language delay, and skeletal defects with or without seizures</name>
        <acronym>NEDHLSS</acronym>
        <description>An autosomal dominant disorder characterized by global developmental delay apparent from infancy, intellectual disability, poor or absent speech, behavioral abnormalities, and hypotonia with delayed walking or inability to walk. Additional features include epilepsy, mild skeletal defects, and non-specific dysmorphic features.</description>
        <dbReference type="MIM" id="620029"/>
    </disease>
    <text>The disease is caused by variants affecting the gene represented in this entry.</text>
</comment>
<comment type="miscellaneous">
    <molecule>Isoform 3</molecule>
    <text evidence="59">Contains exon 8a.</text>
</comment>
<comment type="miscellaneous">
    <molecule>Isoform 4</molecule>
    <text evidence="59">Lacks exon 21.</text>
</comment>
<comment type="miscellaneous">
    <molecule>Isoform 5</molecule>
    <text evidence="59">Lacks exon 22.</text>
</comment>
<comment type="miscellaneous">
    <molecule>Isoform 6</molecule>
    <text evidence="59">Lacks exon 31.</text>
</comment>
<comment type="miscellaneous">
    <molecule>Isoform 7</molecule>
    <text evidence="59">Lacks exon 32.</text>
</comment>
<comment type="miscellaneous">
    <molecule>Isoform 8</molecule>
    <text evidence="59">Lacks exon 33.</text>
</comment>
<comment type="miscellaneous">
    <molecule>Isoform 9</molecule>
    <text evidence="59">Contains exon 40B and 43A.</text>
</comment>
<comment type="miscellaneous">
    <molecule>Isoform 10</molecule>
    <text evidence="59">Contains exon 41A.</text>
</comment>
<comment type="miscellaneous">
    <molecule>Isoform 11</molecule>
    <text evidence="59">Lacks exon 45.</text>
</comment>
<comment type="miscellaneous">
    <molecule>Isoform 20</molecule>
    <text evidence="59">Predominant isoform in atherosclerotic vascular smooth muscle cells.</text>
</comment>
<comment type="miscellaneous">
    <molecule>Isoform 26</molecule>
    <text evidence="59">Not inhibited by calcium.</text>
</comment>
<comment type="miscellaneous">
    <molecule>Isoform 34</molecule>
    <text evidence="59">Enhanced by PKC activator.</text>
</comment>
<comment type="similarity">
    <text evidence="59">Belongs to the calcium channel alpha-1 subunit (TC 1.A.1.11) family. CACNA1C subfamily.</text>
</comment>
<comment type="sequence caution" evidence="59">
    <conflict type="frameshift">
        <sequence resource="EMBL-CDS" id="AAA02500"/>
    </conflict>
</comment>
<organism>
    <name type="scientific">Homo sapiens</name>
    <name type="common">Human</name>
    <dbReference type="NCBI Taxonomy" id="9606"/>
    <lineage>
        <taxon>Eukaryota</taxon>
        <taxon>Metazoa</taxon>
        <taxon>Chordata</taxon>
        <taxon>Craniata</taxon>
        <taxon>Vertebrata</taxon>
        <taxon>Euteleostomi</taxon>
        <taxon>Mammalia</taxon>
        <taxon>Eutheria</taxon>
        <taxon>Euarchontoglires</taxon>
        <taxon>Primates</taxon>
        <taxon>Haplorrhini</taxon>
        <taxon>Catarrhini</taxon>
        <taxon>Hominidae</taxon>
        <taxon>Homo</taxon>
    </lineage>
</organism>
<feature type="chain" id="PRO_0000053928" description="Voltage-dependent L-type calcium channel subunit alpha-1C">
    <location>
        <begin position="1"/>
        <end position="2221"/>
    </location>
</feature>
<feature type="topological domain" description="Cytoplasmic" evidence="59">
    <location>
        <begin position="1"/>
        <end position="124"/>
    </location>
</feature>
<feature type="transmembrane region" description="Helical; Name=S1 of repeat I" evidence="1">
    <location>
        <begin position="125"/>
        <end position="143"/>
    </location>
</feature>
<feature type="topological domain" description="Extracellular" evidence="59">
    <location>
        <begin position="144"/>
        <end position="158"/>
    </location>
</feature>
<feature type="transmembrane region" description="Helical; Name=S2 of repeat I" evidence="1">
    <location>
        <begin position="159"/>
        <end position="179"/>
    </location>
</feature>
<feature type="topological domain" description="Cytoplasmic" evidence="59">
    <location>
        <begin position="180"/>
        <end position="188"/>
    </location>
</feature>
<feature type="transmembrane region" description="Helical; Name=S3 of repeat I" evidence="1">
    <location>
        <begin position="189"/>
        <end position="209"/>
    </location>
</feature>
<feature type="topological domain" description="Extracellular" evidence="59">
    <location>
        <begin position="210"/>
        <end position="232"/>
    </location>
</feature>
<feature type="transmembrane region" description="Helical; Name=S4 of repeat I" evidence="1">
    <location>
        <begin position="233"/>
        <end position="251"/>
    </location>
</feature>
<feature type="topological domain" description="Cytoplasmic" evidence="59">
    <location>
        <begin position="252"/>
        <end position="268"/>
    </location>
</feature>
<feature type="transmembrane region" description="Helical; Name=S5 of repeat I" evidence="1">
    <location>
        <begin position="269"/>
        <end position="290"/>
    </location>
</feature>
<feature type="topological domain" description="Extracellular" evidence="59">
    <location>
        <begin position="291"/>
        <end position="350"/>
    </location>
</feature>
<feature type="intramembrane region" description="Pore-forming" evidence="1">
    <location>
        <begin position="351"/>
        <end position="372"/>
    </location>
</feature>
<feature type="topological domain" description="Extracellular" evidence="59">
    <location>
        <begin position="373"/>
        <end position="380"/>
    </location>
</feature>
<feature type="transmembrane region" description="Helical; Name=S6 of repeat I" evidence="1">
    <location>
        <begin position="381"/>
        <end position="401"/>
    </location>
</feature>
<feature type="topological domain" description="Cytoplasmic" evidence="59">
    <location>
        <begin position="402"/>
        <end position="524"/>
    </location>
</feature>
<feature type="transmembrane region" description="Helical; Name=S1 of repeat II" evidence="1">
    <location>
        <begin position="525"/>
        <end position="543"/>
    </location>
</feature>
<feature type="topological domain" description="Extracellular" evidence="59">
    <location>
        <begin position="544"/>
        <end position="554"/>
    </location>
</feature>
<feature type="transmembrane region" description="Helical; Name=S2 of repeat II" evidence="1">
    <location>
        <begin position="555"/>
        <end position="575"/>
    </location>
</feature>
<feature type="topological domain" description="Cytoplasmic" evidence="59">
    <location>
        <begin position="576"/>
        <end position="586"/>
    </location>
</feature>
<feature type="transmembrane region" description="Helical; Name=S3 of repeat II" evidence="1">
    <location>
        <begin position="587"/>
        <end position="606"/>
    </location>
</feature>
<feature type="topological domain" description="Extracellular" evidence="59">
    <location>
        <begin position="607"/>
        <end position="615"/>
    </location>
</feature>
<feature type="transmembrane region" description="Helical; Name=S4 of repeat II" evidence="1">
    <location>
        <begin position="616"/>
        <end position="634"/>
    </location>
</feature>
<feature type="topological domain" description="Cytoplasmic" evidence="59">
    <location>
        <begin position="635"/>
        <end position="653"/>
    </location>
</feature>
<feature type="transmembrane region" description="Helical; Name=S5 of repeat II" evidence="1">
    <location>
        <begin position="654"/>
        <end position="673"/>
    </location>
</feature>
<feature type="topological domain" description="Extracellular" evidence="59">
    <location>
        <begin position="674"/>
        <end position="693"/>
    </location>
</feature>
<feature type="intramembrane region" description="Pore-forming" evidence="1">
    <location>
        <begin position="694"/>
        <end position="715"/>
    </location>
</feature>
<feature type="topological domain" description="Extracellular" evidence="59">
    <location>
        <begin position="716"/>
        <end position="725"/>
    </location>
</feature>
<feature type="transmembrane region" description="Helical; Name=S6 of repeat II" evidence="1">
    <location>
        <begin position="726"/>
        <end position="745"/>
    </location>
</feature>
<feature type="topological domain" description="Cytoplasmic" evidence="59">
    <location>
        <begin position="746"/>
        <end position="900"/>
    </location>
</feature>
<feature type="transmembrane region" description="Helical; Name=S1 of repeat III" evidence="1">
    <location>
        <begin position="901"/>
        <end position="919"/>
    </location>
</feature>
<feature type="topological domain" description="Extracellular" evidence="59">
    <location>
        <begin position="920"/>
        <end position="931"/>
    </location>
</feature>
<feature type="transmembrane region" description="Helical; Name=S2 of repeat III" evidence="5">
    <location>
        <begin position="932"/>
        <end position="952"/>
    </location>
</feature>
<feature type="topological domain" description="Cytoplasmic" evidence="59">
    <location>
        <begin position="953"/>
        <end position="987"/>
    </location>
</feature>
<feature type="transmembrane region" description="Helical; Name=S3 of repeat III" evidence="1">
    <location>
        <begin position="988"/>
        <end position="1006"/>
    </location>
</feature>
<feature type="topological domain" description="Extracellular" evidence="59">
    <location>
        <begin position="1007"/>
        <end position="1013"/>
    </location>
</feature>
<feature type="transmembrane region" description="Helical; Name=S4 of repeat III" evidence="1">
    <location>
        <begin position="1014"/>
        <end position="1032"/>
    </location>
</feature>
<feature type="topological domain" description="Cytoplasmic" evidence="59">
    <location>
        <begin position="1033"/>
        <end position="1051"/>
    </location>
</feature>
<feature type="transmembrane region" description="Helical; Name=S5 of repeat III" evidence="1">
    <location>
        <begin position="1052"/>
        <end position="1071"/>
    </location>
</feature>
<feature type="topological domain" description="Extracellular" evidence="59">
    <location>
        <begin position="1072"/>
        <end position="1121"/>
    </location>
</feature>
<feature type="intramembrane region" description="Pore-forming" evidence="1">
    <location>
        <begin position="1122"/>
        <end position="1142"/>
    </location>
</feature>
<feature type="topological domain" description="Extracellular" evidence="59">
    <location>
        <begin position="1143"/>
        <end position="1159"/>
    </location>
</feature>
<feature type="transmembrane region" description="Helical; Name=S6 of repeat III" evidence="1">
    <location>
        <begin position="1160"/>
        <end position="1181"/>
    </location>
</feature>
<feature type="topological domain" description="Cytoplasmic" evidence="59">
    <location>
        <begin position="1182"/>
        <end position="1239"/>
    </location>
</feature>
<feature type="transmembrane region" description="Helical; Name=S1 of repeat IV" evidence="1">
    <location>
        <begin position="1240"/>
        <end position="1261"/>
    </location>
</feature>
<feature type="topological domain" description="Extracellular" evidence="59">
    <location>
        <begin position="1262"/>
        <end position="1269"/>
    </location>
</feature>
<feature type="transmembrane region" description="Helical; Name=S2 of repeat IV" evidence="1">
    <location>
        <begin position="1270"/>
        <end position="1291"/>
    </location>
</feature>
<feature type="topological domain" description="Cytoplasmic" evidence="59">
    <location>
        <begin position="1292"/>
        <end position="1301"/>
    </location>
</feature>
<feature type="transmembrane region" description="Helical; Name=S3 of repeat IV" evidence="1">
    <location>
        <begin position="1302"/>
        <end position="1321"/>
    </location>
</feature>
<feature type="topological domain" description="Extracellular" evidence="59">
    <location>
        <begin position="1322"/>
        <end position="1372"/>
    </location>
</feature>
<feature type="transmembrane region" description="Helical; Name=S4 of repeat IV" evidence="1">
    <location>
        <begin position="1373"/>
        <end position="1391"/>
    </location>
</feature>
<feature type="topological domain" description="Cytoplasmic" evidence="59">
    <location>
        <begin position="1392"/>
        <end position="1409"/>
    </location>
</feature>
<feature type="transmembrane region" description="Helical; Name=S5 of repeat IV" evidence="1">
    <location>
        <begin position="1410"/>
        <end position="1430"/>
    </location>
</feature>
<feature type="topological domain" description="Extracellular" evidence="59">
    <location>
        <begin position="1431"/>
        <end position="1452"/>
    </location>
</feature>
<feature type="intramembrane region" description="Pore-forming" evidence="1">
    <location>
        <begin position="1453"/>
        <end position="1471"/>
    </location>
</feature>
<feature type="topological domain" description="Extracellular" evidence="59">
    <location>
        <begin position="1472"/>
        <end position="1499"/>
    </location>
</feature>
<feature type="transmembrane region" description="Helical; Name=S6 of repeat IV" evidence="1">
    <location>
        <begin position="1500"/>
        <end position="1524"/>
    </location>
</feature>
<feature type="topological domain" description="Cytoplasmic" evidence="59">
    <location>
        <begin position="1525"/>
        <end position="2221"/>
    </location>
</feature>
<feature type="repeat" description="I">
    <location>
        <begin position="111"/>
        <end position="408"/>
    </location>
</feature>
<feature type="repeat" description="II">
    <location>
        <begin position="510"/>
        <end position="756"/>
    </location>
</feature>
<feature type="repeat" description="III">
    <location>
        <begin position="887"/>
        <end position="1189"/>
    </location>
</feature>
<feature type="repeat" description="IV">
    <location>
        <begin position="1226"/>
        <end position="1527"/>
    </location>
</feature>
<feature type="region of interest" description="Disordered" evidence="6">
    <location>
        <begin position="1"/>
        <end position="20"/>
    </location>
</feature>
<feature type="region of interest" description="Calmodulin-binding" evidence="24">
    <location>
        <begin position="47"/>
        <end position="68"/>
    </location>
</feature>
<feature type="region of interest" description="Disordered" evidence="6">
    <location>
        <begin position="73"/>
        <end position="98"/>
    </location>
</feature>
<feature type="region of interest" description="AID/alpha-interaction domain; mediates interaction with the beta subunit" evidence="12">
    <location>
        <begin position="428"/>
        <end position="445"/>
    </location>
</feature>
<feature type="region of interest" description="Disordered" evidence="6">
    <location>
        <begin position="449"/>
        <end position="481"/>
    </location>
</feature>
<feature type="region of interest" description="Disordered" evidence="6">
    <location>
        <begin position="764"/>
        <end position="861"/>
    </location>
</feature>
<feature type="region of interest" description="Interaction with STAC2" evidence="33">
    <location>
        <begin position="829"/>
        <end position="876"/>
    </location>
</feature>
<feature type="region of interest" description="Dihydropyridine binding" evidence="1">
    <location>
        <begin position="1109"/>
        <end position="1198"/>
    </location>
</feature>
<feature type="region of interest" description="Dihydropyridine binding" evidence="1">
    <location>
        <begin position="1478"/>
        <end position="1546"/>
    </location>
</feature>
<feature type="region of interest" description="Phenylalkylamine binding" evidence="1">
    <location>
        <begin position="1492"/>
        <end position="1534"/>
    </location>
</feature>
<feature type="region of interest" description="Important for interaction with STAC1, STAC2 and STAC3" evidence="2">
    <location>
        <begin position="1659"/>
        <end position="1686"/>
    </location>
</feature>
<feature type="region of interest" description="Calmodulin-binding IQ region" evidence="16 17 20 22">
    <location>
        <begin position="1665"/>
        <end position="1685"/>
    </location>
</feature>
<feature type="region of interest" description="Important for localization in at the junctional membrane" evidence="2">
    <location>
        <begin position="1699"/>
        <end position="1718"/>
    </location>
</feature>
<feature type="region of interest" description="Disordered" evidence="6">
    <location>
        <begin position="1778"/>
        <end position="1847"/>
    </location>
</feature>
<feature type="region of interest" description="Disordered" evidence="6">
    <location>
        <begin position="2029"/>
        <end position="2063"/>
    </location>
</feature>
<feature type="region of interest" description="Disordered" evidence="6">
    <location>
        <begin position="2186"/>
        <end position="2221"/>
    </location>
</feature>
<feature type="short sequence motif" description="Selectivity filter of repeat I" evidence="1">
    <location>
        <begin position="361"/>
        <end position="364"/>
    </location>
</feature>
<feature type="short sequence motif" description="Selectivity filter of repeat II" evidence="1">
    <location>
        <begin position="704"/>
        <end position="707"/>
    </location>
</feature>
<feature type="short sequence motif" description="Selectivity filter of repeat III" evidence="1">
    <location>
        <begin position="1133"/>
        <end position="1136"/>
    </location>
</feature>
<feature type="short sequence motif" description="Selectivity filter of repeat IV" evidence="1">
    <location>
        <begin position="1462"/>
        <end position="1465"/>
    </location>
</feature>
<feature type="compositionally biased region" description="Basic residues" evidence="6">
    <location>
        <begin position="80"/>
        <end position="91"/>
    </location>
</feature>
<feature type="compositionally biased region" description="Polar residues" evidence="6">
    <location>
        <begin position="465"/>
        <end position="478"/>
    </location>
</feature>
<feature type="compositionally biased region" description="Basic and acidic residues" evidence="6">
    <location>
        <begin position="783"/>
        <end position="792"/>
    </location>
</feature>
<feature type="compositionally biased region" description="Acidic residues" evidence="6">
    <location>
        <begin position="843"/>
        <end position="852"/>
    </location>
</feature>
<feature type="compositionally biased region" description="Polar residues" evidence="6">
    <location>
        <begin position="1799"/>
        <end position="1811"/>
    </location>
</feature>
<feature type="compositionally biased region" description="Low complexity" evidence="6">
    <location>
        <begin position="1812"/>
        <end position="1822"/>
    </location>
</feature>
<feature type="binding site" evidence="1">
    <location>
        <position position="363"/>
    </location>
    <ligand>
        <name>Ca(2+)</name>
        <dbReference type="ChEBI" id="CHEBI:29108"/>
    </ligand>
</feature>
<feature type="binding site" evidence="1">
    <location>
        <position position="706"/>
    </location>
    <ligand>
        <name>Ca(2+)</name>
        <dbReference type="ChEBI" id="CHEBI:29108"/>
    </ligand>
</feature>
<feature type="binding site" evidence="1">
    <location>
        <position position="1135"/>
    </location>
    <ligand>
        <name>Ca(2+)</name>
        <dbReference type="ChEBI" id="CHEBI:29108"/>
    </ligand>
</feature>
<feature type="site" description="Calcium ion selectivity and permeability" evidence="43">
    <location>
        <position position="363"/>
    </location>
</feature>
<feature type="site" description="Calcium ion selectivity and permeability" evidence="43">
    <location>
        <position position="1135"/>
    </location>
</feature>
<feature type="site" description="Calcium ion selectivity and permeability" evidence="43">
    <location>
        <position position="1464"/>
    </location>
</feature>
<feature type="modified residue" description="Phosphoserine" evidence="4">
    <location>
        <position position="469"/>
    </location>
</feature>
<feature type="modified residue" description="Phosphothreonine" evidence="4">
    <location>
        <position position="476"/>
    </location>
</feature>
<feature type="modified residue" description="Phosphoserine" evidence="4">
    <location>
        <position position="808"/>
    </location>
</feature>
<feature type="modified residue" description="Phosphoserine" evidence="4">
    <location>
        <position position="815"/>
    </location>
</feature>
<feature type="modified residue" description="Phosphoserine" evidence="4">
    <location>
        <position position="1718"/>
    </location>
</feature>
<feature type="modified residue" description="Phosphoserine" evidence="4">
    <location>
        <position position="1739"/>
    </location>
</feature>
<feature type="modified residue" description="Phosphoserine; by PKA" evidence="32">
    <location>
        <position position="1981"/>
    </location>
</feature>
<feature type="glycosylation site" description="N-linked (GlcNAc...) asparagine" evidence="5">
    <location>
        <position position="153"/>
    </location>
</feature>
<feature type="glycosylation site" description="N-linked (GlcNAc...) asparagine" evidence="5">
    <location>
        <position position="328"/>
    </location>
</feature>
<feature type="glycosylation site" description="N-linked (GlcNAc...) asparagine" evidence="5">
    <location>
        <position position="1436"/>
    </location>
</feature>
<feature type="glycosylation site" description="N-linked (GlcNAc...) asparagine" evidence="5">
    <location>
        <position position="1487"/>
    </location>
</feature>
<feature type="disulfide bond" evidence="1">
    <location>
        <begin position="298"/>
        <end position="326"/>
    </location>
</feature>
<feature type="disulfide bond" evidence="1">
    <location>
        <begin position="316"/>
        <end position="332"/>
    </location>
</feature>
<feature type="disulfide bond" evidence="1">
    <location>
        <begin position="1078"/>
        <end position="1089"/>
    </location>
</feature>
<feature type="disulfide bond" evidence="1">
    <location>
        <begin position="1479"/>
        <end position="1495"/>
    </location>
</feature>
<feature type="splice variant" id="VSP_000885" description="In isoform 16, isoform 17, isoform 18 and isoform 28." evidence="54 56 58">
    <location>
        <begin position="1"/>
        <end position="29"/>
    </location>
</feature>
<feature type="splice variant" id="VSP_035146" description="In isoform 34." evidence="49">
    <original>MVNENTRMYIPEENHQ</original>
    <variation>MLRAFVQPGTPAYQPLPSHLSANTEVKFKGTLVHEAQLNYFYISPG</variation>
    <location>
        <begin position="1"/>
        <end position="16"/>
    </location>
</feature>
<feature type="splice variant" id="VSP_035877" description="In isoform 35." evidence="51">
    <location>
        <begin position="306"/>
        <end position="308"/>
    </location>
</feature>
<feature type="splice variant" id="VSP_000886" description="In isoform 3, isoform 16, isoform 17, isoform 18, isoform 23, isoform 28, isoform 36 and isoform 37." evidence="54 56 57 58">
    <original>VNDAVGRDWPWIYFVTLIII</original>
    <variation>MQDAMGYELPWVYFVSLVIF</variation>
    <location>
        <begin position="372"/>
        <end position="391"/>
    </location>
</feature>
<feature type="splice variant" id="VSP_000887" description="In isoform 4, isoform 19, isoform 20, isoform 21, isoform 23, isoform 26, isoform 27, isoform 29, isoform 32 and isoform 33." evidence="53 55 57 58">
    <location>
        <begin position="932"/>
        <end position="951"/>
    </location>
</feature>
<feature type="splice variant" id="VSP_000888" description="In isoform 5, isoform 12, isoform 13, isoform 14, isoform 15, isoform 16, isoform 17, isoform 18, isoform 22, isoform 24, isoform 25, isoform 28, isoform 31, isoform 35, isoform 36 and isoform 37." evidence="50 51 52 53 54 56 57 58">
    <location>
        <begin position="952"/>
        <end position="971"/>
    </location>
</feature>
<feature type="splice variant" id="VSP_000889" description="In isoform 6, isoform 12, isoform 14, isoform 15, isoform 19, isoform 20, isoform 23, isoform 24, isoform 25, isoform 26, isoform 27, isoform 28, isoform 29, isoform 30 and isoform 33." evidence="50 52 53 54 55 57 58">
    <location>
        <begin position="1297"/>
        <end position="1324"/>
    </location>
</feature>
<feature type="splice variant" id="VSP_000890" description="In isoform 7, isoform 13, isoform 16, isoform 17, isoform 18, isoform 21, isoform 22, isoform 35, isoform 36 and isoform 37." evidence="51 52 54 56 57">
    <location>
        <begin position="1325"/>
        <end position="1352"/>
    </location>
</feature>
<feature type="splice variant" id="VSP_022503" description="In isoform 15." evidence="52">
    <location>
        <begin position="1351"/>
        <end position="1363"/>
    </location>
</feature>
<feature type="splice variant" id="VSP_000891" description="In isoform 8, isoform 19, isoform 25, isoform 28, isoform 29 and isoform 32." evidence="52 53 54 58">
    <location>
        <begin position="1353"/>
        <end position="1363"/>
    </location>
</feature>
<feature type="splice variant" id="VSP_022504" description="In isoform 14." evidence="52">
    <original>M</original>
    <variation>MGPSCSHPPLAVLTAPPVADGFQ</variation>
    <location>
        <position position="1363"/>
    </location>
</feature>
<feature type="splice variant" id="VSP_000892" description="In isoform 9 and isoform 26." evidence="55">
    <original>LRIKTEGNLEQANEELRAIIKKIWKRTSMKLLDQVVPPAGDDEVTVGKFYATFLIQEYFRKFKKRKEQGLVGKPSQRNALSL</original>
    <variation>LREAELSSQVQYQAKEASLLERRRKSSHPKSSTKPNKLLSSGGSTGWVEDARALEGQVLARGCGWLGSLEERERGPHHPPLGF</variation>
    <location>
        <begin position="1618"/>
        <end position="1699"/>
    </location>
</feature>
<feature type="splice variant" id="VSP_000893" description="In isoform 10, isoform 13, isoform 14, isoform 15, isoform 24, isoform 25, isoform 27 and isoform 29." evidence="52 55 58">
    <original>E</original>
    <variation>EEGPSPSEAHQGAEDPFRPA</variation>
    <location>
        <position position="1623"/>
    </location>
</feature>
<feature type="splice variant" id="VSP_000895" description="In isoform 11, isoform 12, isoform 13, isoform 14, isoform 15, isoform 17, isoform 19, isoform 20, isoform 21, isoform 22, isoform 23, isoform 24, isoform 25, isoform 26, isoform 27, isoform 29, isoform 30, isoform 31, isoform 32, isoform 35 and isoform 37." evidence="50 51 52 53 55 56 57 58">
    <location>
        <begin position="1864"/>
        <end position="1898"/>
    </location>
</feature>
<feature type="splice variant" id="VSP_000894" description="In isoform 2, isoform 18 and isoform 28." evidence="54 58">
    <original>ERHVPMCEDLELRRDSGSAGTQAHCLLLRKANPS</original>
    <variation>MHCCDMLDGGTFPPALGPRRAPPCLHQQLQGSLAGLREDTPCIVPGHASLCCSSRVGEWLPAGCTAPQHA</variation>
    <location>
        <begin position="1864"/>
        <end position="1897"/>
    </location>
</feature>
<feature type="sequence variant" id="VAR_075148" description="In LQT8; uncertain significance; increased channel activity." evidence="28">
    <original>A</original>
    <variation>T</variation>
    <location>
        <position position="28"/>
    </location>
</feature>
<feature type="sequence variant" id="VAR_075149" evidence="21 28">
    <original>G</original>
    <variation>R</variation>
    <location>
        <position position="37"/>
    </location>
</feature>
<feature type="sequence variant" id="VAR_044039" description="In BRGDA3; uncertain significance; affects channel activity." evidence="19 21">
    <original>A</original>
    <variation>V</variation>
    <location>
        <position position="39"/>
    </location>
</feature>
<feature type="sequence variant" id="VAR_045987" description="In dbSNP:rs1051345." evidence="44 46 48">
    <original>Q</original>
    <variation>R</variation>
    <location>
        <position position="84"/>
    </location>
</feature>
<feature type="sequence variant" id="VAR_087754" description="In NEDHLSS." evidence="41">
    <location>
        <begin position="161"/>
        <end position="2221"/>
    </location>
</feature>
<feature type="sequence variant" id="VAR_087755" description="In NEDHLSS." evidence="41">
    <original>F</original>
    <variation>L</variation>
    <location>
        <position position="166"/>
    </location>
</feature>
<feature type="sequence variant" id="VAR_087756" description="In NEDHLSS." evidence="41">
    <original>K</original>
    <variation>R</variation>
    <location>
        <position position="177"/>
    </location>
</feature>
<feature type="sequence variant" id="VAR_075150" evidence="28">
    <original>I</original>
    <variation>T</variation>
    <location>
        <position position="304"/>
    </location>
</feature>
<feature type="sequence variant" id="VAR_087757" description="In NEDHLSS." evidence="41">
    <original>R</original>
    <variation>W</variation>
    <location>
        <position position="324"/>
    </location>
</feature>
<feature type="sequence variant" id="VAR_075151" description="In LQT8; uncertain significance; no effect on channel activity." evidence="26">
    <original>P</original>
    <variation>S</variation>
    <location>
        <position position="381"/>
    </location>
</feature>
<feature type="sequence variant" id="VAR_045988" description="In dbSNP:rs1051356.">
    <original>I</original>
    <variation>L</variation>
    <location>
        <position position="391"/>
    </location>
</feature>
<feature type="sequence variant" id="VAR_026741" description="In TS." evidence="14">
    <original>G</original>
    <variation>S</variation>
    <location>
        <position position="402"/>
    </location>
</feature>
<feature type="sequence variant" id="VAR_087758" description="In NEDHLSS." evidence="41">
    <original>V</original>
    <variation>M</variation>
    <location>
        <position position="403"/>
    </location>
</feature>
<feature type="sequence variant" id="VAR_026742" description="In TS; causes a nearly complete loss of voltage-dependent channel inactivation." evidence="13">
    <original>G</original>
    <variation>R</variation>
    <location>
        <position position="406"/>
    </location>
</feature>
<feature type="sequence variant" id="VAR_075152" description="In LQT8; uncertain significance; no effect on channel activity." evidence="26">
    <original>M</original>
    <variation>I</variation>
    <location>
        <position position="456"/>
    </location>
</feature>
<feature type="sequence variant" id="VAR_075153" description="In LQT8; uncertain significance." evidence="28">
    <original>E</original>
    <variation>K</variation>
    <location>
        <position position="477"/>
    </location>
</feature>
<feature type="sequence variant" id="VAR_044040" description="In BRGDA3; uncertain significance; results in reduced current amplitudes although voltage at peak current is unchanged." evidence="19 21">
    <original>G</original>
    <variation>R</variation>
    <location>
        <position position="490"/>
    </location>
</feature>
<feature type="sequence variant" id="VAR_075154" description="In TS; likely pathogenic; only with cardiac manifestation; decreased current density; associated with slower inactivation; altered localization; increase in late calcium current." evidence="29 40">
    <original>R</original>
    <variation>C</variation>
    <location>
        <position position="518"/>
    </location>
</feature>
<feature type="sequence variant" id="VAR_075155" description="In TS; likely pathogenic; only with cardiac manifestation; decreased current density; associated with slower inactivation." evidence="29">
    <original>R</original>
    <variation>H</variation>
    <location>
        <position position="518"/>
    </location>
</feature>
<feature type="sequence variant" id="VAR_087759" description="In NEDHLSS." evidence="41">
    <location>
        <begin position="528"/>
        <end position="2221"/>
    </location>
</feature>
<feature type="sequence variant" id="VAR_075156" description="In LQT8; gain-of-function effect on channel activity; slower inactivation." evidence="26">
    <original>A</original>
    <variation>D</variation>
    <location>
        <position position="582"/>
    </location>
</feature>
<feature type="sequence variant" id="VAR_087760" description="In NEDHLSS." evidence="41">
    <original>L</original>
    <variation>R</variation>
    <location>
        <position position="601"/>
    </location>
</feature>
<feature type="sequence variant" id="VAR_087761" description="In NEDHLSS." evidence="41">
    <original>M</original>
    <variation>T</variation>
    <location>
        <position position="611"/>
    </location>
</feature>
<feature type="sequence variant" id="VAR_087762" description="In NEDHLSS." evidence="41">
    <original>L</original>
    <variation>P</variation>
    <location>
        <position position="614"/>
    </location>
</feature>
<feature type="sequence variant" id="VAR_087763" description="In NEDHLSS." evidence="41">
    <original>L</original>
    <variation>R</variation>
    <location>
        <position position="614"/>
    </location>
</feature>
<feature type="sequence variant" id="VAR_087764" description="In TS; affects voltage-gated calcium channel activity resulting in a marked decrease in peak currents and increased late currents." evidence="36">
    <original>S</original>
    <variation>F</variation>
    <location>
        <position position="643"/>
    </location>
</feature>
<feature type="sequence variant" id="VAR_087765" description="In NEDHLSS." evidence="41">
    <original>L</original>
    <variation>F</variation>
    <location>
        <position position="657"/>
    </location>
</feature>
<feature type="sequence variant" id="VAR_087766" description="In NEDHLSS; uncertain significance." evidence="41">
    <location>
        <position position="743"/>
    </location>
</feature>
<feature type="sequence variant" id="VAR_001495">
    <original>A</original>
    <variation>T</variation>
    <location>
        <position position="752"/>
    </location>
</feature>
<feature type="sequence variant" id="VAR_075157" evidence="21 28">
    <original>P</original>
    <variation>S</variation>
    <location>
        <position position="817"/>
    </location>
</feature>
<feature type="sequence variant" id="VAR_082632" description="In LQT8; uncertain significance." evidence="25">
    <original>K</original>
    <variation>E</variation>
    <location>
        <position position="834"/>
    </location>
</feature>
<feature type="sequence variant" id="VAR_076414" description="Found in a case of sudden unexplained death in the young; also found in a patient with early repolarization syndrome; uncertain significance; results in reduced whole-cell calcium currents." evidence="21 31">
    <location>
        <position position="850"/>
    </location>
</feature>
<feature type="sequence variant" id="VAR_082633" description="In LQT8." evidence="25">
    <original>P</original>
    <variation>L</variation>
    <location>
        <position position="857"/>
    </location>
</feature>
<feature type="sequence variant" id="VAR_082634" description="In LQT8; leads to increased calcium currents; increased surface membrane expression of the channel." evidence="25">
    <original>P</original>
    <variation>R</variation>
    <location>
        <position position="857"/>
    </location>
</feature>
<feature type="sequence variant" id="VAR_075158" description="In LQT8; gain-of-function effect on channel activity; slower inactivation." evidence="26 38">
    <original>R</original>
    <variation>H</variation>
    <location>
        <position position="858"/>
    </location>
</feature>
<feature type="sequence variant" id="VAR_075159" description="In LQT8; gain-of-function effect on channel activity." evidence="28">
    <original>R</original>
    <variation>G</variation>
    <location>
        <position position="860"/>
    </location>
</feature>
<feature type="sequence variant" id="VAR_064700" description="Found in a clear cell renal carcinoma case; somatic mutation." evidence="23">
    <original>S</original>
    <variation>R</variation>
    <location>
        <position position="878"/>
    </location>
</feature>
<feature type="sequence variant" id="VAR_087767" description="In TS and BRGDA3; likely pathogenic; affects voltage-gated calcium channel activity resulting in loss of selectivity for Ca(2+) and other divalent cations over monovalent cations; mutant channels show a marked increase in sodium-mediated inward currents and potassium-mediated outward currents." evidence="21 37 43">
    <original>E</original>
    <variation>K</variation>
    <location>
        <position position="1135"/>
    </location>
</feature>
<feature type="sequence variant" id="VAR_078701" description="Found in a patient with autism; uncertain significance." evidence="30">
    <original>R</original>
    <variation>H</variation>
    <location>
        <position position="1159"/>
    </location>
</feature>
<feature type="sequence variant" id="VAR_072381" description="In TS and LQT8; likely pathogenic; gain-of-function shift to a more negative potential in the voltage-dependence of activation, leading to an increased window current and increased steady-state current; unchanged voltage-dependence of inactivation and inactivation velocity." evidence="27 28">
    <original>I</original>
    <variation>T</variation>
    <location>
        <position position="1186"/>
    </location>
</feature>
<feature type="sequence variant" id="VAR_075160" description="In LQT8; likely pathogenic; affects voltage-gated calcium channel activity resulting in increased peak current amplitude." evidence="28">
    <original>I</original>
    <variation>V</variation>
    <location>
        <position position="1186"/>
    </location>
</feature>
<feature type="sequence variant" id="VAR_087768" description="In NEDHLSS." evidence="41">
    <original>V</original>
    <variation>A</variation>
    <location>
        <position position="1187"/>
    </location>
</feature>
<feature type="sequence variant" id="VAR_075161" description="In LQT8; uncertain significance." evidence="28">
    <original>A</original>
    <variation>T</variation>
    <location>
        <position position="1365"/>
    </location>
</feature>
<feature type="sequence variant" id="VAR_087769" description="In NEDHLSS; affects voltage-gated calcium channel activity resulting in decreased current density when expressed in a heterologous system." evidence="41">
    <original>L</original>
    <variation>V</variation>
    <location>
        <position position="1408"/>
    </location>
</feature>
<feature type="sequence variant" id="VAR_087770" description="In NEDHLSS." evidence="41">
    <original>V</original>
    <variation>L</variation>
    <location>
        <position position="1411"/>
    </location>
</feature>
<feature type="sequence variant" id="VAR_087771" description="In NEDHLSS." evidence="39">
    <original>V</original>
    <variation>M</variation>
    <location>
        <position position="1411"/>
    </location>
</feature>
<feature type="sequence variant" id="VAR_075162" description="In LQT8; likely pathogenic; gain-of-function shift to a more negative potential in the voltage-dependence of activation; increased steady-state current." evidence="28">
    <original>I</original>
    <variation>M</variation>
    <location>
        <position position="1523"/>
    </location>
</feature>
<feature type="sequence variant" id="VAR_075163" description="In LQT8; likely pathogenic; gain-of-function shift to a more negative potential in the voltage-dependence of activation; slower channel inactivation and increased steady-state current." evidence="28">
    <original>E</original>
    <variation>K</variation>
    <location>
        <position position="1544"/>
    </location>
</feature>
<feature type="sequence variant" id="VAR_075164" evidence="28">
    <original>V</original>
    <variation>I</variation>
    <location>
        <position position="1755"/>
    </location>
</feature>
<feature type="sequence variant" id="VAR_075165" evidence="21 28">
    <original>A</original>
    <variation>G</variation>
    <location>
        <position position="1765"/>
    </location>
</feature>
<feature type="sequence variant" id="VAR_075166" description="In LQT8; uncertain significance." evidence="28">
    <original>D</original>
    <variation>N</variation>
    <location>
        <position position="1787"/>
    </location>
</feature>
<feature type="sequence variant" id="VAR_075167" description="In LQT8; uncertain significance." evidence="28">
    <original>T</original>
    <variation>I</variation>
    <location>
        <position position="1800"/>
    </location>
</feature>
<feature type="sequence variant" id="VAR_075168" description="In LQT8; uncertain significance; no effect on channel activity." evidence="26">
    <original>G</original>
    <variation>C</variation>
    <location>
        <position position="1831"/>
    </location>
</feature>
<feature type="sequence variant" id="VAR_075169" evidence="21 28">
    <original>T</original>
    <variation>M</variation>
    <location>
        <position position="1835"/>
    </location>
</feature>
<feature type="sequence variant" id="VAR_075170" evidence="28">
    <original>G</original>
    <variation>R</variation>
    <location>
        <position position="1843"/>
    </location>
</feature>
<feature type="sequence variant" id="VAR_059223" description="In dbSNP:rs10848683.">
    <original>P</original>
    <variation>L</variation>
    <location>
        <position position="1868"/>
    </location>
</feature>
<feature type="sequence variant" id="VAR_059224" description="In dbSNP:rs10774053." evidence="10 46 48">
    <original>M</original>
    <variation>V</variation>
    <location>
        <position position="1869"/>
    </location>
</feature>
<feature type="sequence variant" id="VAR_061102" description="In dbSNP:rs10774054." evidence="10 46 48">
    <original>K</original>
    <variation>R</variation>
    <location>
        <position position="1893"/>
    </location>
</feature>
<feature type="sequence variant" id="VAR_090202" description="In BRGDA3; uncertain significance." evidence="21">
    <original>Q</original>
    <variation>QEETSQ</variation>
    <location>
        <position position="1916"/>
    </location>
</feature>
<feature type="sequence variant" id="VAR_090203" description="In BRGDA3; uncertain significance." evidence="21">
    <original>Y</original>
    <variation>C</variation>
    <location>
        <position position="1920"/>
    </location>
</feature>
<feature type="sequence variant" id="VAR_075171" description="In LQT8; uncertain significance." evidence="28">
    <original>E</original>
    <variation>K</variation>
    <location>
        <position position="1948"/>
    </location>
</feature>
<feature type="sequence variant" id="VAR_075172" description="In LQT8; uncertain significance." evidence="28">
    <original>T</original>
    <variation>M</variation>
    <location>
        <position position="1953"/>
    </location>
</feature>
<feature type="sequence variant" id="VAR_090204" description="In BRGDA3; likely benign." evidence="21">
    <original>R</original>
    <variation>Q</variation>
    <location>
        <position position="1963"/>
    </location>
</feature>
<feature type="sequence variant" id="VAR_075173" evidence="28">
    <original>R</original>
    <variation>C</variation>
    <location>
        <position position="1972"/>
    </location>
</feature>
<feature type="sequence variant" id="VAR_087772" description="In NEDHLSS." evidence="41">
    <location>
        <begin position="1989"/>
        <end position="2221"/>
    </location>
</feature>
<feature type="sequence variant" id="VAR_082635" description="In LQT8; uncertain significance." evidence="25">
    <original>R</original>
    <variation>Q</variation>
    <location>
        <position position="1989"/>
    </location>
</feature>
<feature type="sequence variant" id="VAR_075174" description="In dbSNP:rs112414325." evidence="21 28">
    <original>R</original>
    <variation>Q</variation>
    <location>
        <position position="2056"/>
    </location>
</feature>
<feature type="sequence variant" id="VAR_075175" description="In LQT8; uncertain significance; dbSNP:rs771424529." evidence="28">
    <original>T</original>
    <variation>N</variation>
    <location>
        <position position="2081"/>
    </location>
</feature>
<feature type="sequence variant" id="VAR_076415" description="Found in a case of sudden unexplained death in the young; uncertain significance; results in increased whole-cell calcium currents." evidence="31">
    <original>A</original>
    <variation>S</variation>
    <location>
        <position position="2091"/>
    </location>
</feature>
<feature type="sequence variant" id="VAR_075176" description="In LQT8 and BRGDA3; uncertain significance; affects channel activity resulting in reduced channel conductance and reduced peak current density; half-inactivation voltage is shifted to more negative potentials." evidence="21 28">
    <original>V</original>
    <variation>I</variation>
    <location>
        <position position="2097"/>
    </location>
</feature>
<feature type="sequence variant" id="VAR_075177" description="In LQT8; uncertain significance; dbSNP:rs549476254." evidence="28">
    <original>A</original>
    <variation>G</variation>
    <location>
        <position position="2122"/>
    </location>
</feature>
<feature type="sequence variant" id="VAR_001496">
    <original>A</original>
    <variation>T</variation>
    <location>
        <position position="2169"/>
    </location>
</feature>
<feature type="sequence variant" id="VAR_075178" evidence="28">
    <original>N</original>
    <variation>S</variation>
    <location>
        <position position="2174"/>
    </location>
</feature>
<feature type="sequence variant" id="VAR_090205" description="In BRGDA3; uncertain significance." evidence="21">
    <original>D</original>
    <variation>N</variation>
    <location>
        <position position="2213"/>
    </location>
</feature>
<feature type="mutagenesis site" description="Loss of selectivity for divalent over monovalent cations." evidence="43">
    <original>E</original>
    <variation>K</variation>
    <location>
        <position position="363"/>
    </location>
</feature>
<feature type="mutagenesis site" description="Affects voltage-dependent inhibition by dihydropyridines; when associated with I-958." evidence="42">
    <original>G</original>
    <variation>F</variation>
    <location>
        <position position="954"/>
    </location>
</feature>
<feature type="mutagenesis site" description="Affects voltage-dependent inhibition by dihydropyridines; when associated with F-954." evidence="42">
    <original>Y</original>
    <variation>I</variation>
    <location>
        <position position="958"/>
    </location>
</feature>
<feature type="mutagenesis site" description="Decreased selectivity for divalent over monovalent cations." evidence="43">
    <original>E</original>
    <variation>Q</variation>
    <location>
        <position position="1135"/>
    </location>
</feature>
<feature type="mutagenesis site" description="Decreased selectivity for divalent over monovalent cations." evidence="43">
    <original>E</original>
    <variation>A</variation>
    <location>
        <position position="1464"/>
    </location>
</feature>
<feature type="mutagenesis site" description="Loss of a low-affinity interaction with CALM1. No effect on channel inactivation by Ca(2+) and calmodulin." evidence="22">
    <original>L</original>
    <variation>A</variation>
    <location>
        <position position="1610"/>
    </location>
</feature>
<feature type="mutagenesis site" description="Mildly decreased channel activity. No effect on channel inactivation. Loss of channel inactivation by Ca(2+) and calmodulin; when associated with A-1672." evidence="16">
    <original>FYATF</original>
    <variation>AAATA</variation>
    <location>
        <begin position="1666"/>
        <end position="1670"/>
    </location>
</feature>
<feature type="mutagenesis site" description="Loss of channel inactivation by Ca(2+) and calmodulin; when associated with 1666-A--A-1670." evidence="16">
    <original>I</original>
    <variation>A</variation>
    <location>
        <position position="1672"/>
    </location>
</feature>
<feature type="sequence conflict" description="In Ref. 3; Z26272." evidence="59" ref="3">
    <original>K</original>
    <variation>Q</variation>
    <location>
        <position position="1072"/>
    </location>
</feature>
<feature type="sequence conflict" description="In Ref. 15; AAA58409." evidence="59" ref="15">
    <original>N</original>
    <variation>K</variation>
    <location>
        <position position="1157"/>
    </location>
</feature>
<feature type="sequence conflict" description="In Ref. 16; AAA74590." evidence="59" ref="16">
    <original>L</original>
    <variation>P</variation>
    <location>
        <position position="1244"/>
    </location>
</feature>
<feature type="sequence conflict" description="In Ref. 16; AAA74590." evidence="59" ref="16">
    <original>L</original>
    <variation>P</variation>
    <location>
        <position position="1384"/>
    </location>
</feature>
<feature type="sequence conflict" description="In Ref. 12; AAI46847." evidence="59" ref="12">
    <original>A</original>
    <variation>V</variation>
    <location>
        <position position="1412"/>
    </location>
</feature>
<feature type="sequence conflict" description="In Ref. 3; CAA81219." evidence="59" ref="3">
    <original>R</original>
    <variation>K</variation>
    <location>
        <position position="1459"/>
    </location>
</feature>
<feature type="sequence conflict" description="In Ref. 3; CAA84340/CAA84341/CAA84342/CAA84343/CAA84344/CAA84345/CAA84346/CAA84347/CAA84348/CAA84349/CAA84350/CAA84351, 7; CAA12174 and 9; AAX37354/AAX37355/AAX37356." evidence="59" ref="3 7 9">
    <original>R</original>
    <variation>A</variation>
    <location>
        <position position="2205"/>
    </location>
</feature>
<feature type="sequence conflict" description="In Ref. 1; AAA17030." evidence="59" ref="1">
    <original>R</original>
    <variation>G</variation>
    <location>
        <position position="2205"/>
    </location>
</feature>
<feature type="helix" evidence="67">
    <location>
        <begin position="48"/>
        <end position="65"/>
    </location>
</feature>
<feature type="helix" evidence="74">
    <location>
        <begin position="113"/>
        <end position="116"/>
    </location>
</feature>
<feature type="turn" evidence="75">
    <location>
        <begin position="119"/>
        <end position="122"/>
    </location>
</feature>
<feature type="helix" evidence="75">
    <location>
        <begin position="126"/>
        <end position="142"/>
    </location>
</feature>
<feature type="helix" evidence="77">
    <location>
        <begin position="148"/>
        <end position="150"/>
    </location>
</feature>
<feature type="helix" evidence="75">
    <location>
        <begin position="154"/>
        <end position="181"/>
    </location>
</feature>
<feature type="strand" evidence="73">
    <location>
        <begin position="185"/>
        <end position="187"/>
    </location>
</feature>
<feature type="helix" evidence="75">
    <location>
        <begin position="194"/>
        <end position="216"/>
    </location>
</feature>
<feature type="helix" evidence="76">
    <location>
        <begin position="233"/>
        <end position="236"/>
    </location>
</feature>
<feature type="helix" evidence="75">
    <location>
        <begin position="237"/>
        <end position="242"/>
    </location>
</feature>
<feature type="helix" evidence="75">
    <location>
        <begin position="245"/>
        <end position="250"/>
    </location>
</feature>
<feature type="helix" evidence="75">
    <location>
        <begin position="252"/>
        <end position="262"/>
    </location>
</feature>
<feature type="helix" evidence="75">
    <location>
        <begin position="266"/>
        <end position="268"/>
    </location>
</feature>
<feature type="helix" evidence="75">
    <location>
        <begin position="269"/>
        <end position="289"/>
    </location>
</feature>
<feature type="strand" evidence="76">
    <location>
        <begin position="290"/>
        <end position="292"/>
    </location>
</feature>
<feature type="strand" evidence="75">
    <location>
        <begin position="296"/>
        <end position="298"/>
    </location>
</feature>
<feature type="strand" evidence="75">
    <location>
        <begin position="301"/>
        <end position="304"/>
    </location>
</feature>
<feature type="strand" evidence="73">
    <location>
        <begin position="305"/>
        <end position="307"/>
    </location>
</feature>
<feature type="strand" evidence="75">
    <location>
        <begin position="309"/>
        <end position="311"/>
    </location>
</feature>
<feature type="strand" evidence="73">
    <location>
        <begin position="315"/>
        <end position="317"/>
    </location>
</feature>
<feature type="strand" evidence="75">
    <location>
        <begin position="321"/>
        <end position="323"/>
    </location>
</feature>
<feature type="strand" evidence="73">
    <location>
        <begin position="327"/>
        <end position="329"/>
    </location>
</feature>
<feature type="strand" evidence="75">
    <location>
        <begin position="332"/>
        <end position="334"/>
    </location>
</feature>
<feature type="turn" evidence="75">
    <location>
        <begin position="339"/>
        <end position="342"/>
    </location>
</feature>
<feature type="strand" evidence="77">
    <location>
        <begin position="344"/>
        <end position="348"/>
    </location>
</feature>
<feature type="helix" evidence="75">
    <location>
        <begin position="351"/>
        <end position="360"/>
    </location>
</feature>
<feature type="helix" evidence="75">
    <location>
        <begin position="365"/>
        <end position="375"/>
    </location>
</feature>
<feature type="strand" evidence="75">
    <location>
        <begin position="378"/>
        <end position="381"/>
    </location>
</feature>
<feature type="helix" evidence="75">
    <location>
        <begin position="382"/>
        <end position="392"/>
    </location>
</feature>
<feature type="helix" evidence="75">
    <location>
        <begin position="395"/>
        <end position="418"/>
    </location>
</feature>
<feature type="helix" evidence="69">
    <location>
        <begin position="429"/>
        <end position="443"/>
    </location>
</feature>
<feature type="turn" evidence="75">
    <location>
        <begin position="444"/>
        <end position="446"/>
    </location>
</feature>
<feature type="turn" evidence="75">
    <location>
        <begin position="510"/>
        <end position="513"/>
    </location>
</feature>
<feature type="helix" evidence="75">
    <location>
        <begin position="514"/>
        <end position="521"/>
    </location>
</feature>
<feature type="strand" evidence="75">
    <location>
        <begin position="523"/>
        <end position="525"/>
    </location>
</feature>
<feature type="helix" evidence="75">
    <location>
        <begin position="528"/>
        <end position="541"/>
    </location>
</feature>
<feature type="helix" evidence="75">
    <location>
        <begin position="552"/>
        <end position="576"/>
    </location>
</feature>
<feature type="turn" evidence="75">
    <location>
        <begin position="580"/>
        <end position="585"/>
    </location>
</feature>
<feature type="helix" evidence="75">
    <location>
        <begin position="587"/>
        <end position="607"/>
    </location>
</feature>
<feature type="strand" evidence="75">
    <location>
        <begin position="609"/>
        <end position="611"/>
    </location>
</feature>
<feature type="helix" evidence="77">
    <location>
        <begin position="612"/>
        <end position="614"/>
    </location>
</feature>
<feature type="helix" evidence="75">
    <location>
        <begin position="617"/>
        <end position="630"/>
    </location>
</feature>
<feature type="helix" evidence="75">
    <location>
        <begin position="635"/>
        <end position="646"/>
    </location>
</feature>
<feature type="helix" evidence="75">
    <location>
        <begin position="648"/>
        <end position="673"/>
    </location>
</feature>
<feature type="turn" evidence="75">
    <location>
        <begin position="674"/>
        <end position="676"/>
    </location>
</feature>
<feature type="strand" evidence="75">
    <location>
        <begin position="680"/>
        <end position="683"/>
    </location>
</feature>
<feature type="strand" evidence="75">
    <location>
        <begin position="689"/>
        <end position="691"/>
    </location>
</feature>
<feature type="helix" evidence="75">
    <location>
        <begin position="692"/>
        <end position="704"/>
    </location>
</feature>
<feature type="turn" evidence="78">
    <location>
        <begin position="705"/>
        <end position="707"/>
    </location>
</feature>
<feature type="helix" evidence="75">
    <location>
        <begin position="708"/>
        <end position="718"/>
    </location>
</feature>
<feature type="strand" evidence="75">
    <location>
        <begin position="720"/>
        <end position="723"/>
    </location>
</feature>
<feature type="helix" evidence="75">
    <location>
        <begin position="724"/>
        <end position="727"/>
    </location>
</feature>
<feature type="turn" evidence="75">
    <location>
        <begin position="728"/>
        <end position="730"/>
    </location>
</feature>
<feature type="helix" evidence="75">
    <location>
        <begin position="731"/>
        <end position="747"/>
    </location>
</feature>
<feature type="helix" evidence="75">
    <location>
        <begin position="749"/>
        <end position="776"/>
    </location>
</feature>
<feature type="turn" evidence="75">
    <location>
        <begin position="777"/>
        <end position="782"/>
    </location>
</feature>
<feature type="helix" evidence="73">
    <location>
        <begin position="891"/>
        <end position="897"/>
    </location>
</feature>
<feature type="helix" evidence="79">
    <location>
        <begin position="900"/>
        <end position="902"/>
    </location>
</feature>
<feature type="helix" evidence="75">
    <location>
        <begin position="903"/>
        <end position="913"/>
    </location>
</feature>
<feature type="helix" evidence="75">
    <location>
        <begin position="915"/>
        <end position="918"/>
    </location>
</feature>
<feature type="strand" evidence="76">
    <location>
        <begin position="925"/>
        <end position="928"/>
    </location>
</feature>
<feature type="helix" evidence="75">
    <location>
        <begin position="929"/>
        <end position="933"/>
    </location>
</feature>
<feature type="helix" evidence="75">
    <location>
        <begin position="954"/>
        <end position="974"/>
    </location>
</feature>
<feature type="turn" evidence="73">
    <location>
        <begin position="977"/>
        <end position="981"/>
    </location>
</feature>
<feature type="helix" evidence="75">
    <location>
        <begin position="990"/>
        <end position="1006"/>
    </location>
</feature>
<feature type="turn" evidence="77">
    <location>
        <begin position="1010"/>
        <end position="1012"/>
    </location>
</feature>
<feature type="helix" evidence="75">
    <location>
        <begin position="1014"/>
        <end position="1017"/>
    </location>
</feature>
<feature type="helix" evidence="75">
    <location>
        <begin position="1020"/>
        <end position="1023"/>
    </location>
</feature>
<feature type="helix" evidence="75">
    <location>
        <begin position="1025"/>
        <end position="1028"/>
    </location>
</feature>
<feature type="turn" evidence="75">
    <location>
        <begin position="1029"/>
        <end position="1031"/>
    </location>
</feature>
<feature type="turn" evidence="75">
    <location>
        <begin position="1033"/>
        <end position="1036"/>
    </location>
</feature>
<feature type="helix" evidence="75">
    <location>
        <begin position="1037"/>
        <end position="1048"/>
    </location>
</feature>
<feature type="turn" evidence="75">
    <location>
        <begin position="1049"/>
        <end position="1051"/>
    </location>
</feature>
<feature type="helix" evidence="75">
    <location>
        <begin position="1052"/>
        <end position="1071"/>
    </location>
</feature>
<feature type="turn" evidence="78">
    <location>
        <begin position="1072"/>
        <end position="1074"/>
    </location>
</feature>
<feature type="strand" evidence="75">
    <location>
        <begin position="1077"/>
        <end position="1080"/>
    </location>
</feature>
<feature type="helix" evidence="75">
    <location>
        <begin position="1086"/>
        <end position="1088"/>
    </location>
</feature>
<feature type="strand" evidence="75">
    <location>
        <begin position="1091"/>
        <end position="1096"/>
    </location>
</feature>
<feature type="helix" evidence="75">
    <location>
        <begin position="1097"/>
        <end position="1099"/>
    </location>
</feature>
<feature type="strand" evidence="75">
    <location>
        <begin position="1103"/>
        <end position="1108"/>
    </location>
</feature>
<feature type="strand" evidence="77">
    <location>
        <begin position="1111"/>
        <end position="1113"/>
    </location>
</feature>
<feature type="helix" evidence="75">
    <location>
        <begin position="1121"/>
        <end position="1132"/>
    </location>
</feature>
<feature type="strand" evidence="72">
    <location>
        <begin position="1133"/>
        <end position="1136"/>
    </location>
</feature>
<feature type="helix" evidence="75">
    <location>
        <begin position="1137"/>
        <end position="1145"/>
    </location>
</feature>
<feature type="turn" evidence="73">
    <location>
        <begin position="1149"/>
        <end position="1151"/>
    </location>
</feature>
<feature type="strand" evidence="73">
    <location>
        <begin position="1156"/>
        <end position="1158"/>
    </location>
</feature>
<feature type="helix" evidence="75">
    <location>
        <begin position="1160"/>
        <end position="1162"/>
    </location>
</feature>
<feature type="helix" evidence="75">
    <location>
        <begin position="1163"/>
        <end position="1172"/>
    </location>
</feature>
<feature type="turn" evidence="75">
    <location>
        <begin position="1173"/>
        <end position="1175"/>
    </location>
</feature>
<feature type="helix" evidence="75">
    <location>
        <begin position="1176"/>
        <end position="1194"/>
    </location>
</feature>
<feature type="strand" evidence="73">
    <location>
        <begin position="1195"/>
        <end position="1198"/>
    </location>
</feature>
<feature type="strand" evidence="78">
    <location>
        <begin position="1200"/>
        <end position="1202"/>
    </location>
</feature>
<feature type="helix" evidence="75">
    <location>
        <begin position="1206"/>
        <end position="1214"/>
    </location>
</feature>
<feature type="helix" evidence="75">
    <location>
        <begin position="1228"/>
        <end position="1236"/>
    </location>
</feature>
<feature type="helix" evidence="75">
    <location>
        <begin position="1239"/>
        <end position="1255"/>
    </location>
</feature>
<feature type="helix" evidence="73">
    <location>
        <begin position="1256"/>
        <end position="1259"/>
    </location>
</feature>
<feature type="helix" evidence="75">
    <location>
        <begin position="1265"/>
        <end position="1300"/>
    </location>
</feature>
<feature type="helix" evidence="75">
    <location>
        <begin position="1302"/>
        <end position="1321"/>
    </location>
</feature>
<feature type="helix" evidence="73">
    <location>
        <begin position="1330"/>
        <end position="1348"/>
    </location>
</feature>
<feature type="helix" evidence="78">
    <location>
        <begin position="1374"/>
        <end position="1376"/>
    </location>
</feature>
<feature type="helix" evidence="75">
    <location>
        <begin position="1377"/>
        <end position="1382"/>
    </location>
</feature>
<feature type="helix" evidence="75">
    <location>
        <begin position="1383"/>
        <end position="1388"/>
    </location>
</feature>
<feature type="helix" evidence="75">
    <location>
        <begin position="1394"/>
        <end position="1407"/>
    </location>
</feature>
<feature type="helix" evidence="75">
    <location>
        <begin position="1411"/>
        <end position="1430"/>
    </location>
</feature>
<feature type="strand" evidence="75">
    <location>
        <begin position="1439"/>
        <end position="1445"/>
    </location>
</feature>
<feature type="strand" evidence="75">
    <location>
        <begin position="1447"/>
        <end position="1449"/>
    </location>
</feature>
<feature type="helix" evidence="75">
    <location>
        <begin position="1450"/>
        <end position="1461"/>
    </location>
</feature>
<feature type="helix" evidence="75">
    <location>
        <begin position="1466"/>
        <end position="1471"/>
    </location>
</feature>
<feature type="strand" evidence="75">
    <location>
        <begin position="1474"/>
        <end position="1477"/>
    </location>
</feature>
<feature type="turn" evidence="79">
    <location>
        <begin position="1481"/>
        <end position="1483"/>
    </location>
</feature>
<feature type="strand" evidence="72">
    <location>
        <begin position="1489"/>
        <end position="1491"/>
    </location>
</feature>
<feature type="helix" evidence="75">
    <location>
        <begin position="1500"/>
        <end position="1524"/>
    </location>
</feature>
<feature type="helix" evidence="75">
    <location>
        <begin position="1527"/>
        <end position="1530"/>
    </location>
</feature>
<feature type="helix" evidence="73">
    <location>
        <begin position="1534"/>
        <end position="1537"/>
    </location>
</feature>
<feature type="helix" evidence="75">
    <location>
        <begin position="1539"/>
        <end position="1550"/>
    </location>
</feature>
<feature type="strand" evidence="75">
    <location>
        <begin position="1554"/>
        <end position="1557"/>
    </location>
</feature>
<feature type="strand" evidence="72">
    <location>
        <begin position="1558"/>
        <end position="1560"/>
    </location>
</feature>
<feature type="helix" evidence="75">
    <location>
        <begin position="1562"/>
        <end position="1566"/>
    </location>
</feature>
<feature type="helix" evidence="75">
    <location>
        <begin position="1569"/>
        <end position="1571"/>
    </location>
</feature>
<feature type="turn" evidence="75">
    <location>
        <begin position="1574"/>
        <end position="1576"/>
    </location>
</feature>
<feature type="strand" evidence="79">
    <location>
        <begin position="1579"/>
        <end position="1581"/>
    </location>
</feature>
<feature type="strand" evidence="79">
    <location>
        <begin position="1583"/>
        <end position="1585"/>
    </location>
</feature>
<feature type="helix" evidence="75">
    <location>
        <begin position="1586"/>
        <end position="1593"/>
    </location>
</feature>
<feature type="strand" evidence="78">
    <location>
        <begin position="1597"/>
        <end position="1599"/>
    </location>
</feature>
<feature type="strand" evidence="78">
    <location>
        <begin position="1601"/>
        <end position="1603"/>
    </location>
</feature>
<feature type="helix" evidence="68">
    <location>
        <begin position="1609"/>
        <end position="1651"/>
    </location>
</feature>
<feature type="turn" evidence="71">
    <location>
        <begin position="1654"/>
        <end position="1656"/>
    </location>
</feature>
<feature type="helix" evidence="70">
    <location>
        <begin position="1659"/>
        <end position="1661"/>
    </location>
</feature>
<feature type="helix" evidence="66">
    <location>
        <begin position="1666"/>
        <end position="1680"/>
    </location>
</feature>
<feature type="sequence conflict" description="In Ref. 3; CAA84348." evidence="59" ref="3">
    <original>A</original>
    <variation>T</variation>
    <location sequence="Q13936-26">
        <position position="1573"/>
    </location>
</feature>
<dbReference type="EMBL" id="M92269">
    <property type="protein sequence ID" value="AAA17030.1"/>
    <property type="molecule type" value="Genomic_DNA"/>
</dbReference>
<dbReference type="EMBL" id="M92270">
    <property type="status" value="NOT_ANNOTATED_CDS"/>
    <property type="molecule type" value="Genomic_DNA"/>
</dbReference>
<dbReference type="EMBL" id="M92271">
    <property type="status" value="NOT_ANNOTATED_CDS"/>
    <property type="molecule type" value="Genomic_DNA"/>
</dbReference>
<dbReference type="EMBL" id="M92272">
    <property type="status" value="NOT_ANNOTATED_CDS"/>
    <property type="molecule type" value="Genomic_DNA"/>
</dbReference>
<dbReference type="EMBL" id="M92273">
    <property type="status" value="NOT_ANNOTATED_CDS"/>
    <property type="molecule type" value="Genomic_DNA"/>
</dbReference>
<dbReference type="EMBL" id="M92274">
    <property type="status" value="NOT_ANNOTATED_CDS"/>
    <property type="molecule type" value="Genomic_DNA"/>
</dbReference>
<dbReference type="EMBL" id="M92275">
    <property type="status" value="NOT_ANNOTATED_CDS"/>
    <property type="molecule type" value="Genomic_DNA"/>
</dbReference>
<dbReference type="EMBL" id="L04568">
    <property type="protein sequence ID" value="AAA02500.2"/>
    <property type="status" value="ALT_FRAME"/>
    <property type="molecule type" value="Genomic_DNA"/>
</dbReference>
<dbReference type="EMBL" id="L04569">
    <property type="protein sequence ID" value="AAA02501.1"/>
    <property type="molecule type" value="mRNA"/>
</dbReference>
<dbReference type="EMBL" id="L29529">
    <property type="protein sequence ID" value="AAA51899.1"/>
    <property type="molecule type" value="mRNA"/>
</dbReference>
<dbReference type="EMBL" id="Z26256">
    <property type="status" value="NOT_ANNOTATED_CDS"/>
    <property type="molecule type" value="Genomic_DNA"/>
</dbReference>
<dbReference type="EMBL" id="Z26257">
    <property type="status" value="NOT_ANNOTATED_CDS"/>
    <property type="molecule type" value="Genomic_DNA"/>
</dbReference>
<dbReference type="EMBL" id="Z26258">
    <property type="status" value="NOT_ANNOTATED_CDS"/>
    <property type="molecule type" value="Genomic_DNA"/>
</dbReference>
<dbReference type="EMBL" id="Z26259">
    <property type="status" value="NOT_ANNOTATED_CDS"/>
    <property type="molecule type" value="Genomic_DNA"/>
</dbReference>
<dbReference type="EMBL" id="Z26260">
    <property type="status" value="NOT_ANNOTATED_CDS"/>
    <property type="molecule type" value="Genomic_DNA"/>
</dbReference>
<dbReference type="EMBL" id="Z26261">
    <property type="status" value="NOT_ANNOTATED_CDS"/>
    <property type="molecule type" value="Genomic_DNA"/>
</dbReference>
<dbReference type="EMBL" id="Z26262">
    <property type="status" value="NOT_ANNOTATED_CDS"/>
    <property type="molecule type" value="Genomic_DNA"/>
</dbReference>
<dbReference type="EMBL" id="Z26263">
    <property type="status" value="NOT_ANNOTATED_CDS"/>
    <property type="molecule type" value="Genomic_DNA"/>
</dbReference>
<dbReference type="EMBL" id="Z26264">
    <property type="status" value="NOT_ANNOTATED_CDS"/>
    <property type="molecule type" value="Genomic_DNA"/>
</dbReference>
<dbReference type="EMBL" id="Z26265">
    <property type="status" value="NOT_ANNOTATED_CDS"/>
    <property type="molecule type" value="Genomic_DNA"/>
</dbReference>
<dbReference type="EMBL" id="Z26266">
    <property type="status" value="NOT_ANNOTATED_CDS"/>
    <property type="molecule type" value="Genomic_DNA"/>
</dbReference>
<dbReference type="EMBL" id="Z26267">
    <property type="status" value="NOT_ANNOTATED_CDS"/>
    <property type="molecule type" value="Genomic_DNA"/>
</dbReference>
<dbReference type="EMBL" id="Z26268">
    <property type="status" value="NOT_ANNOTATED_CDS"/>
    <property type="molecule type" value="Genomic_DNA"/>
</dbReference>
<dbReference type="EMBL" id="Z26269">
    <property type="status" value="NOT_ANNOTATED_CDS"/>
    <property type="molecule type" value="Genomic_DNA"/>
</dbReference>
<dbReference type="EMBL" id="Z26271">
    <property type="status" value="NOT_ANNOTATED_CDS"/>
    <property type="molecule type" value="Genomic_DNA"/>
</dbReference>
<dbReference type="EMBL" id="Z26272">
    <property type="status" value="NOT_ANNOTATED_CDS"/>
    <property type="molecule type" value="Genomic_DNA"/>
</dbReference>
<dbReference type="EMBL" id="Z26273">
    <property type="status" value="NOT_ANNOTATED_CDS"/>
    <property type="molecule type" value="Genomic_DNA"/>
</dbReference>
<dbReference type="EMBL" id="Z26274">
    <property type="status" value="NOT_ANNOTATED_CDS"/>
    <property type="molecule type" value="Genomic_DNA"/>
</dbReference>
<dbReference type="EMBL" id="Z26275">
    <property type="status" value="NOT_ANNOTATED_CDS"/>
    <property type="molecule type" value="Genomic_DNA"/>
</dbReference>
<dbReference type="EMBL" id="Z26276">
    <property type="status" value="NOT_ANNOTATED_CDS"/>
    <property type="molecule type" value="Genomic_DNA"/>
</dbReference>
<dbReference type="EMBL" id="Z26277">
    <property type="status" value="NOT_ANNOTATED_CDS"/>
    <property type="molecule type" value="Genomic_DNA"/>
</dbReference>
<dbReference type="EMBL" id="Z26278">
    <property type="status" value="NOT_ANNOTATED_CDS"/>
    <property type="molecule type" value="Genomic_DNA"/>
</dbReference>
<dbReference type="EMBL" id="Z26279">
    <property type="status" value="NOT_ANNOTATED_CDS"/>
    <property type="molecule type" value="Genomic_DNA"/>
</dbReference>
<dbReference type="EMBL" id="Z26280">
    <property type="status" value="NOT_ANNOTATED_CDS"/>
    <property type="molecule type" value="Genomic_DNA"/>
</dbReference>
<dbReference type="EMBL" id="Z26281">
    <property type="status" value="NOT_ANNOTATED_CDS"/>
    <property type="molecule type" value="Genomic_DNA"/>
</dbReference>
<dbReference type="EMBL" id="Z26282">
    <property type="status" value="NOT_ANNOTATED_CDS"/>
    <property type="molecule type" value="Genomic_DNA"/>
</dbReference>
<dbReference type="EMBL" id="Z26283">
    <property type="status" value="NOT_ANNOTATED_CDS"/>
    <property type="molecule type" value="Genomic_DNA"/>
</dbReference>
<dbReference type="EMBL" id="Z26284">
    <property type="status" value="NOT_ANNOTATED_CDS"/>
    <property type="molecule type" value="Genomic_DNA"/>
</dbReference>
<dbReference type="EMBL" id="Z26286">
    <property type="status" value="NOT_ANNOTATED_CDS"/>
    <property type="molecule type" value="Genomic_DNA"/>
</dbReference>
<dbReference type="EMBL" id="Z26287">
    <property type="status" value="NOT_ANNOTATED_CDS"/>
    <property type="molecule type" value="Genomic_DNA"/>
</dbReference>
<dbReference type="EMBL" id="Z26288">
    <property type="status" value="NOT_ANNOTATED_CDS"/>
    <property type="molecule type" value="Genomic_DNA"/>
</dbReference>
<dbReference type="EMBL" id="Z26294">
    <property type="protein sequence ID" value="CAA81218.1"/>
    <property type="molecule type" value="mRNA"/>
</dbReference>
<dbReference type="EMBL" id="Z26295">
    <property type="protein sequence ID" value="CAA81219.1"/>
    <property type="molecule type" value="mRNA"/>
</dbReference>
<dbReference type="EMBL" id="Z26308">
    <property type="status" value="NOT_ANNOTATED_CDS"/>
    <property type="molecule type" value="Genomic_DNA"/>
</dbReference>
<dbReference type="EMBL" id="Z34809">
    <property type="protein sequence ID" value="CAA84340.1"/>
    <property type="molecule type" value="mRNA"/>
</dbReference>
<dbReference type="EMBL" id="Z34810">
    <property type="protein sequence ID" value="CAA84341.1"/>
    <property type="molecule type" value="mRNA"/>
</dbReference>
<dbReference type="EMBL" id="Z34811">
    <property type="protein sequence ID" value="CAA84342.1"/>
    <property type="molecule type" value="mRNA"/>
</dbReference>
<dbReference type="EMBL" id="Z34812">
    <property type="protein sequence ID" value="CAA84343.1"/>
    <property type="molecule type" value="mRNA"/>
</dbReference>
<dbReference type="EMBL" id="Z34813">
    <property type="protein sequence ID" value="CAA84344.1"/>
    <property type="molecule type" value="mRNA"/>
</dbReference>
<dbReference type="EMBL" id="Z34814">
    <property type="protein sequence ID" value="CAA84345.1"/>
    <property type="molecule type" value="mRNA"/>
</dbReference>
<dbReference type="EMBL" id="Z34815">
    <property type="protein sequence ID" value="CAA84346.1"/>
    <property type="molecule type" value="mRNA"/>
</dbReference>
<dbReference type="EMBL" id="Z34816">
    <property type="protein sequence ID" value="CAA84347.1"/>
    <property type="molecule type" value="mRNA"/>
</dbReference>
<dbReference type="EMBL" id="Z34817">
    <property type="protein sequence ID" value="CAA84348.1"/>
    <property type="molecule type" value="mRNA"/>
</dbReference>
<dbReference type="EMBL" id="Z34818">
    <property type="protein sequence ID" value="CAA84349.1"/>
    <property type="molecule type" value="mRNA"/>
</dbReference>
<dbReference type="EMBL" id="Z34819">
    <property type="protein sequence ID" value="CAA84350.1"/>
    <property type="molecule type" value="mRNA"/>
</dbReference>
<dbReference type="EMBL" id="Z34820">
    <property type="protein sequence ID" value="CAA84351.1"/>
    <property type="molecule type" value="mRNA"/>
</dbReference>
<dbReference type="EMBL" id="Z34821">
    <property type="protein sequence ID" value="CAA84352.1"/>
    <property type="molecule type" value="mRNA"/>
</dbReference>
<dbReference type="EMBL" id="Z34822">
    <property type="protein sequence ID" value="CAA84353.1"/>
    <property type="molecule type" value="mRNA"/>
</dbReference>
<dbReference type="EMBL" id="L29530">
    <property type="status" value="NOT_ANNOTATED_CDS"/>
    <property type="molecule type" value="Genomic_DNA"/>
</dbReference>
<dbReference type="EMBL" id="L29531">
    <property type="status" value="NOT_ANNOTATED_CDS"/>
    <property type="molecule type" value="Genomic_DNA"/>
</dbReference>
<dbReference type="EMBL" id="L29532">
    <property type="status" value="NOT_ANNOTATED_CDS"/>
    <property type="molecule type" value="Genomic_DNA"/>
</dbReference>
<dbReference type="EMBL" id="L29533">
    <property type="status" value="NOT_ANNOTATED_CDS"/>
    <property type="molecule type" value="Genomic_DNA"/>
</dbReference>
<dbReference type="EMBL" id="L29534">
    <property type="protein sequence ID" value="AAA51900.1"/>
    <property type="molecule type" value="mRNA"/>
</dbReference>
<dbReference type="EMBL" id="L29535">
    <property type="status" value="NOT_ANNOTATED_CDS"/>
    <property type="molecule type" value="Genomic_DNA"/>
</dbReference>
<dbReference type="EMBL" id="L29536">
    <property type="protein sequence ID" value="AAA51901.1"/>
    <property type="molecule type" value="mRNA"/>
</dbReference>
<dbReference type="EMBL" id="L29537">
    <property type="status" value="NOT_ANNOTATED_CDS"/>
    <property type="molecule type" value="Genomic_DNA"/>
</dbReference>
<dbReference type="EMBL" id="L29538">
    <property type="status" value="NOT_ANNOTATED_CDS"/>
    <property type="molecule type" value="Genomic_DNA"/>
</dbReference>
<dbReference type="EMBL" id="L29539">
    <property type="status" value="NOT_ANNOTATED_CDS"/>
    <property type="molecule type" value="Genomic_DNA"/>
</dbReference>
<dbReference type="EMBL" id="Z74996">
    <property type="protein sequence ID" value="CAA99284.1"/>
    <property type="molecule type" value="mRNA"/>
</dbReference>
<dbReference type="EMBL" id="AJ224873">
    <property type="protein sequence ID" value="CAA12174.1"/>
    <property type="molecule type" value="mRNA"/>
</dbReference>
<dbReference type="EMBL" id="AF465484">
    <property type="protein sequence ID" value="AAM70049.1"/>
    <property type="molecule type" value="mRNA"/>
</dbReference>
<dbReference type="EMBL" id="AY830711">
    <property type="protein sequence ID" value="AAX37354.1"/>
    <property type="molecule type" value="mRNA"/>
</dbReference>
<dbReference type="EMBL" id="AY830712">
    <property type="protein sequence ID" value="AAX37355.1"/>
    <property type="molecule type" value="mRNA"/>
</dbReference>
<dbReference type="EMBL" id="AY830713">
    <property type="protein sequence ID" value="AAX37356.1"/>
    <property type="molecule type" value="mRNA"/>
</dbReference>
<dbReference type="EMBL" id="AC005293">
    <property type="status" value="NOT_ANNOTATED_CDS"/>
    <property type="molecule type" value="Genomic_DNA"/>
</dbReference>
<dbReference type="EMBL" id="AC005342">
    <property type="status" value="NOT_ANNOTATED_CDS"/>
    <property type="molecule type" value="Genomic_DNA"/>
</dbReference>
<dbReference type="EMBL" id="AC005344">
    <property type="status" value="NOT_ANNOTATED_CDS"/>
    <property type="molecule type" value="Genomic_DNA"/>
</dbReference>
<dbReference type="EMBL" id="AC005414">
    <property type="status" value="NOT_ANNOTATED_CDS"/>
    <property type="molecule type" value="Genomic_DNA"/>
</dbReference>
<dbReference type="EMBL" id="AC005866">
    <property type="status" value="NOT_ANNOTATED_CDS"/>
    <property type="molecule type" value="Genomic_DNA"/>
</dbReference>
<dbReference type="EMBL" id="AC006051">
    <property type="status" value="NOT_ANNOTATED_CDS"/>
    <property type="molecule type" value="Genomic_DNA"/>
</dbReference>
<dbReference type="EMBL" id="AC007618">
    <property type="status" value="NOT_ANNOTATED_CDS"/>
    <property type="molecule type" value="Genomic_DNA"/>
</dbReference>
<dbReference type="EMBL" id="BC146846">
    <property type="protein sequence ID" value="AAI46847.1"/>
    <property type="molecule type" value="mRNA"/>
</dbReference>
<dbReference type="EMBL" id="AY604867">
    <property type="protein sequence ID" value="AAT02226.1"/>
    <property type="molecule type" value="mRNA"/>
</dbReference>
<dbReference type="EMBL" id="M57971">
    <property type="protein sequence ID" value="AAA62832.1"/>
    <property type="molecule type" value="mRNA"/>
</dbReference>
<dbReference type="EMBL" id="M57972">
    <property type="protein sequence ID" value="AAB59461.1"/>
    <property type="molecule type" value="mRNA"/>
</dbReference>
<dbReference type="EMBL" id="M61130">
    <property type="protein sequence ID" value="AAA58409.1"/>
    <property type="molecule type" value="Genomic_DNA"/>
</dbReference>
<dbReference type="EMBL" id="M91370">
    <property type="protein sequence ID" value="AAA74590.1"/>
    <property type="molecule type" value="Genomic_DNA"/>
</dbReference>
<dbReference type="CCDS" id="CCDS44787.1">
    <molecule id="Q13936-23"/>
</dbReference>
<dbReference type="CCDS" id="CCDS44788.1">
    <molecule id="Q13936-11"/>
</dbReference>
<dbReference type="CCDS" id="CCDS44789.1">
    <molecule id="Q13936-30"/>
</dbReference>
<dbReference type="CCDS" id="CCDS44790.1">
    <molecule id="Q13936-31"/>
</dbReference>
<dbReference type="CCDS" id="CCDS44791.1">
    <molecule id="Q13936-22"/>
</dbReference>
<dbReference type="CCDS" id="CCDS44792.1">
    <molecule id="Q13936-14"/>
</dbReference>
<dbReference type="CCDS" id="CCDS44793.1">
    <molecule id="Q13936-24"/>
</dbReference>
<dbReference type="CCDS" id="CCDS44794.1">
    <molecule id="Q13936-12"/>
</dbReference>
<dbReference type="CCDS" id="CCDS44795.1">
    <molecule id="Q13936-25"/>
</dbReference>
<dbReference type="CCDS" id="CCDS44796.1">
    <molecule id="Q13936-15"/>
</dbReference>
<dbReference type="CCDS" id="CCDS44797.1">
    <molecule id="Q13936-32"/>
</dbReference>
<dbReference type="CCDS" id="CCDS44798.1">
    <molecule id="Q13936-21"/>
</dbReference>
<dbReference type="CCDS" id="CCDS44799.1">
    <molecule id="Q13936-27"/>
</dbReference>
<dbReference type="CCDS" id="CCDS44800.1">
    <molecule id="Q13936-20"/>
</dbReference>
<dbReference type="CCDS" id="CCDS44801.1">
    <molecule id="Q13936-29"/>
</dbReference>
<dbReference type="CCDS" id="CCDS53733.1">
    <molecule id="Q13936-36"/>
</dbReference>
<dbReference type="CCDS" id="CCDS53734.1">
    <molecule id="Q13936-37"/>
</dbReference>
<dbReference type="CCDS" id="CCDS53735.1">
    <molecule id="Q13936-13"/>
</dbReference>
<dbReference type="CCDS" id="CCDS53736.1">
    <molecule id="Q13936-33"/>
</dbReference>
<dbReference type="CCDS" id="CCDS91636.1">
    <molecule id="Q13936-19"/>
</dbReference>
<dbReference type="CCDS" id="CCDS91637.1">
    <molecule id="Q13936-35"/>
</dbReference>
<dbReference type="PIR" id="A23660">
    <property type="entry name" value="A23660"/>
</dbReference>
<dbReference type="PIR" id="A44363">
    <property type="entry name" value="A44363"/>
</dbReference>
<dbReference type="PIR" id="A45290">
    <property type="entry name" value="A45290"/>
</dbReference>
<dbReference type="PIR" id="B23660">
    <property type="entry name" value="B23660"/>
</dbReference>
<dbReference type="PIR" id="C23660">
    <property type="entry name" value="C23660"/>
</dbReference>
<dbReference type="PIR" id="I54168">
    <property type="entry name" value="I54168"/>
</dbReference>
<dbReference type="RefSeq" id="NP_000710.5">
    <molecule id="Q13936-12"/>
    <property type="nucleotide sequence ID" value="NM_000719.6"/>
</dbReference>
<dbReference type="RefSeq" id="NP_001123299.1">
    <molecule id="Q13936-11"/>
    <property type="nucleotide sequence ID" value="NM_001129827.2"/>
</dbReference>
<dbReference type="RefSeq" id="NP_001123301.1">
    <molecule id="Q13936-14"/>
    <property type="nucleotide sequence ID" value="NM_001129829.2"/>
</dbReference>
<dbReference type="RefSeq" id="NP_001123302.2">
    <property type="nucleotide sequence ID" value="NM_001129830.2"/>
</dbReference>
<dbReference type="RefSeq" id="NP_001123303.1">
    <molecule id="Q13936-31"/>
    <property type="nucleotide sequence ID" value="NM_001129831.2"/>
</dbReference>
<dbReference type="RefSeq" id="NP_001123304.1">
    <molecule id="Q13936-30"/>
    <property type="nucleotide sequence ID" value="NM_001129832.2"/>
</dbReference>
<dbReference type="RefSeq" id="NP_001123305.1">
    <molecule id="Q13936-13"/>
    <property type="nucleotide sequence ID" value="NM_001129833.2"/>
</dbReference>
<dbReference type="RefSeq" id="NP_001123306.1">
    <molecule id="Q13936-24"/>
    <property type="nucleotide sequence ID" value="NM_001129834.2"/>
</dbReference>
<dbReference type="RefSeq" id="NP_001123307.1">
    <molecule id="Q13936-27"/>
    <property type="nucleotide sequence ID" value="NM_001129835.2"/>
</dbReference>
<dbReference type="RefSeq" id="NP_001123308.1">
    <molecule id="Q13936-32"/>
    <property type="nucleotide sequence ID" value="NM_001129836.2"/>
</dbReference>
<dbReference type="RefSeq" id="NP_001123309.1">
    <molecule id="Q13936-25"/>
    <property type="nucleotide sequence ID" value="NM_001129837.2"/>
</dbReference>
<dbReference type="RefSeq" id="NP_001123310.1">
    <molecule id="Q13936-29"/>
    <property type="nucleotide sequence ID" value="NM_001129838.2"/>
</dbReference>
<dbReference type="RefSeq" id="NP_001123311.1">
    <molecule id="Q13936-15"/>
    <property type="nucleotide sequence ID" value="NM_001129839.2"/>
</dbReference>
<dbReference type="RefSeq" id="NP_001123312.1">
    <molecule id="Q13936-23"/>
    <property type="nucleotide sequence ID" value="NM_001129840.2"/>
</dbReference>
<dbReference type="RefSeq" id="NP_001123313.1">
    <molecule id="Q13936-21"/>
    <property type="nucleotide sequence ID" value="NM_001129841.2"/>
</dbReference>
<dbReference type="RefSeq" id="NP_001123314.1">
    <molecule id="Q13936-22"/>
    <property type="nucleotide sequence ID" value="NM_001129842.2"/>
</dbReference>
<dbReference type="RefSeq" id="NP_001123315.1">
    <molecule id="Q13936-20"/>
    <property type="nucleotide sequence ID" value="NM_001129843.2"/>
</dbReference>
<dbReference type="RefSeq" id="NP_001123316.1">
    <molecule id="Q13936-35"/>
    <property type="nucleotide sequence ID" value="NM_001129844.2"/>
</dbReference>
<dbReference type="RefSeq" id="NP_001123318.1">
    <molecule id="Q13936-19"/>
    <property type="nucleotide sequence ID" value="NM_001129846.2"/>
</dbReference>
<dbReference type="RefSeq" id="NP_001161095.1">
    <molecule id="Q13936-37"/>
    <property type="nucleotide sequence ID" value="NM_001167623.2"/>
</dbReference>
<dbReference type="RefSeq" id="NP_001161096.2">
    <property type="nucleotide sequence ID" value="NM_001167624.2"/>
</dbReference>
<dbReference type="RefSeq" id="NP_001161097.1">
    <property type="nucleotide sequence ID" value="NM_001167625.1"/>
</dbReference>
<dbReference type="RefSeq" id="NP_955630.3">
    <property type="nucleotide sequence ID" value="NM_199460.3"/>
</dbReference>
<dbReference type="PDB" id="1T0J">
    <property type="method" value="X-ray"/>
    <property type="resolution" value="2.00 A"/>
    <property type="chains" value="C=428-445"/>
</dbReference>
<dbReference type="PDB" id="2BE6">
    <property type="method" value="X-ray"/>
    <property type="resolution" value="2.00 A"/>
    <property type="chains" value="D/E/F=1659-1692"/>
</dbReference>
<dbReference type="PDB" id="2F3Y">
    <property type="method" value="X-ray"/>
    <property type="resolution" value="1.45 A"/>
    <property type="chains" value="B=1665-1685"/>
</dbReference>
<dbReference type="PDB" id="2F3Z">
    <property type="method" value="X-ray"/>
    <property type="resolution" value="1.60 A"/>
    <property type="chains" value="B=1665-1685"/>
</dbReference>
<dbReference type="PDB" id="2LQC">
    <property type="method" value="NMR"/>
    <property type="chains" value="B=47-68"/>
</dbReference>
<dbReference type="PDB" id="3G43">
    <property type="method" value="X-ray"/>
    <property type="resolution" value="2.10 A"/>
    <property type="chains" value="E/F=1609-1682"/>
</dbReference>
<dbReference type="PDB" id="3OXQ">
    <property type="method" value="X-ray"/>
    <property type="resolution" value="2.55 A"/>
    <property type="chains" value="E/F=1609-1685"/>
</dbReference>
<dbReference type="PDB" id="5V2P">
    <property type="method" value="X-ray"/>
    <property type="resolution" value="2.00 A"/>
    <property type="chains" value="B=427-445"/>
</dbReference>
<dbReference type="PDB" id="5V2Q">
    <property type="method" value="X-ray"/>
    <property type="resolution" value="1.70 A"/>
    <property type="chains" value="B=427-445"/>
</dbReference>
<dbReference type="PDB" id="6C0A">
    <property type="method" value="NMR"/>
    <property type="chains" value="B=1664-1686"/>
</dbReference>
<dbReference type="PDB" id="6DAD">
    <property type="method" value="X-ray"/>
    <property type="resolution" value="1.65 A"/>
    <property type="chains" value="C/D=1659-1692"/>
</dbReference>
<dbReference type="PDB" id="6DAE">
    <property type="method" value="X-ray"/>
    <property type="resolution" value="2.00 A"/>
    <property type="chains" value="C/D=1659-1692"/>
</dbReference>
<dbReference type="PDB" id="6DAF">
    <property type="method" value="X-ray"/>
    <property type="resolution" value="2.40 A"/>
    <property type="chains" value="C/D=1659-1692"/>
</dbReference>
<dbReference type="PDB" id="6U39">
    <property type="method" value="X-ray"/>
    <property type="resolution" value="2.40 A"/>
    <property type="chains" value="B/D/F/H/J/L/N/P/R/T=1659-1692"/>
</dbReference>
<dbReference type="PDB" id="6U3A">
    <property type="method" value="X-ray"/>
    <property type="resolution" value="1.65 A"/>
    <property type="chains" value="C/D=1659-1692"/>
</dbReference>
<dbReference type="PDB" id="6U3B">
    <property type="method" value="X-ray"/>
    <property type="resolution" value="1.70 A"/>
    <property type="chains" value="B=1659-1692"/>
</dbReference>
<dbReference type="PDB" id="6U3D">
    <property type="method" value="X-ray"/>
    <property type="resolution" value="1.75 A"/>
    <property type="chains" value="C/D=1659-1692"/>
</dbReference>
<dbReference type="PDB" id="7L8V">
    <property type="method" value="NMR"/>
    <property type="chains" value="C=1662-1682"/>
</dbReference>
<dbReference type="PDB" id="8EOG">
    <property type="method" value="EM"/>
    <property type="resolution" value="3.30 A"/>
    <property type="chains" value="K=112-1658"/>
</dbReference>
<dbReference type="PDB" id="8EOI">
    <property type="method" value="EM"/>
    <property type="resolution" value="3.40 A"/>
    <property type="chains" value="K=109-1658"/>
</dbReference>
<dbReference type="PDB" id="8FD7">
    <property type="method" value="EM"/>
    <property type="resolution" value="3.10 A"/>
    <property type="chains" value="K=1-1696"/>
</dbReference>
<dbReference type="PDB" id="8FHS">
    <property type="method" value="EM"/>
    <property type="resolution" value="3.30 A"/>
    <property type="chains" value="A=1-2221"/>
</dbReference>
<dbReference type="PDB" id="8HLP">
    <property type="method" value="EM"/>
    <property type="resolution" value="3.50 A"/>
    <property type="chains" value="A=1-2221"/>
</dbReference>
<dbReference type="PDB" id="8HMA">
    <property type="method" value="EM"/>
    <property type="resolution" value="3.40 A"/>
    <property type="chains" value="E=1-2221"/>
</dbReference>
<dbReference type="PDB" id="8HMB">
    <property type="method" value="EM"/>
    <property type="resolution" value="3.30 A"/>
    <property type="chains" value="D=1-2221"/>
</dbReference>
<dbReference type="PDB" id="8UKO">
    <property type="method" value="X-ray"/>
    <property type="resolution" value="2.89 A"/>
    <property type="chains" value="C=1968-1984"/>
</dbReference>
<dbReference type="PDB" id="8UKP">
    <property type="method" value="X-ray"/>
    <property type="resolution" value="2.85 A"/>
    <property type="chains" value="C=1968-1984"/>
</dbReference>
<dbReference type="PDB" id="8WE6">
    <property type="method" value="EM"/>
    <property type="resolution" value="2.90 A"/>
    <property type="chains" value="A=1-2221"/>
</dbReference>
<dbReference type="PDB" id="8WE7">
    <property type="method" value="EM"/>
    <property type="resolution" value="3.20 A"/>
    <property type="chains" value="A=1-2221"/>
</dbReference>
<dbReference type="PDB" id="8WE8">
    <property type="method" value="EM"/>
    <property type="resolution" value="2.90 A"/>
    <property type="chains" value="A=1-2221"/>
</dbReference>
<dbReference type="PDB" id="8WE9">
    <property type="method" value="EM"/>
    <property type="resolution" value="3.00 A"/>
    <property type="chains" value="A=1-2221"/>
</dbReference>
<dbReference type="PDB" id="8WEA">
    <property type="method" value="EM"/>
    <property type="resolution" value="3.20 A"/>
    <property type="chains" value="A=1-2221"/>
</dbReference>
<dbReference type="PDBsum" id="1T0J"/>
<dbReference type="PDBsum" id="2BE6"/>
<dbReference type="PDBsum" id="2F3Y"/>
<dbReference type="PDBsum" id="2F3Z"/>
<dbReference type="PDBsum" id="2LQC"/>
<dbReference type="PDBsum" id="3G43"/>
<dbReference type="PDBsum" id="3OXQ"/>
<dbReference type="PDBsum" id="5V2P"/>
<dbReference type="PDBsum" id="5V2Q"/>
<dbReference type="PDBsum" id="6C0A"/>
<dbReference type="PDBsum" id="6DAD"/>
<dbReference type="PDBsum" id="6DAE"/>
<dbReference type="PDBsum" id="6DAF"/>
<dbReference type="PDBsum" id="6U39"/>
<dbReference type="PDBsum" id="6U3A"/>
<dbReference type="PDBsum" id="6U3B"/>
<dbReference type="PDBsum" id="6U3D"/>
<dbReference type="PDBsum" id="7L8V"/>
<dbReference type="PDBsum" id="8EOG"/>
<dbReference type="PDBsum" id="8EOI"/>
<dbReference type="PDBsum" id="8FD7"/>
<dbReference type="PDBsum" id="8FHS"/>
<dbReference type="PDBsum" id="8HLP"/>
<dbReference type="PDBsum" id="8HMA"/>
<dbReference type="PDBsum" id="8HMB"/>
<dbReference type="PDBsum" id="8UKO"/>
<dbReference type="PDBsum" id="8UKP"/>
<dbReference type="PDBsum" id="8WE6"/>
<dbReference type="PDBsum" id="8WE7"/>
<dbReference type="PDBsum" id="8WE8"/>
<dbReference type="PDBsum" id="8WE9"/>
<dbReference type="PDBsum" id="8WEA"/>
<dbReference type="BMRB" id="Q13936"/>
<dbReference type="EMDB" id="EMD-28376"/>
<dbReference type="EMDB" id="EMD-29004"/>
<dbReference type="EMDB" id="EMD-29102"/>
<dbReference type="EMDB" id="EMD-37472"/>
<dbReference type="EMDB" id="EMD-37473"/>
<dbReference type="EMDB" id="EMD-37474"/>
<dbReference type="EMDB" id="EMD-37475"/>
<dbReference type="EMDB" id="EMD-37476"/>
<dbReference type="SMR" id="Q13936"/>
<dbReference type="BioGRID" id="107229">
    <property type="interactions" value="43"/>
</dbReference>
<dbReference type="ComplexPortal" id="CPX-3195">
    <property type="entry name" value="Cav1.2 voltage-gated calcium channel complex, CACNA2D1-CACNB2 variant"/>
</dbReference>
<dbReference type="ComplexPortal" id="CPX-8861">
    <property type="entry name" value="Cav1.2 voltage-gated calcium channel complex, CACNA2D1-CACNB3 variant"/>
</dbReference>
<dbReference type="ComplexPortal" id="CPX-8862">
    <property type="entry name" value="Cav1.2 voltage-gated calcium channel complex, CACNA2D1-CACNB1 variant"/>
</dbReference>
<dbReference type="ComplexPortal" id="CPX-8863">
    <property type="entry name" value="Cav1.2 voltage-gated calcium channel complex, CACNA2D1-CACNB4 variant"/>
</dbReference>
<dbReference type="ComplexPortal" id="CPX-8864">
    <property type="entry name" value="Cav1.2 voltage-gated calcium channel complex, CACNA2D2-CACNB2 variant"/>
</dbReference>
<dbReference type="ComplexPortal" id="CPX-8865">
    <property type="entry name" value="Cav1.2 voltage-gated calcium channel complex, CACNA2D2-CACNB1 variant"/>
</dbReference>
<dbReference type="ComplexPortal" id="CPX-8866">
    <property type="entry name" value="Cav1.2 voltage-gated calcium channel complex, CACNA2D2-CACNB3 variant"/>
</dbReference>
<dbReference type="ComplexPortal" id="CPX-8867">
    <property type="entry name" value="Cav1.2 voltage-gated calcium channel complex, CACNA2D2-CACNB4 variant"/>
</dbReference>
<dbReference type="ComplexPortal" id="CPX-8868">
    <property type="entry name" value="Cav1.2 voltage-gated calcium channel complex, CACNA2D3-CACNB1 variant"/>
</dbReference>
<dbReference type="ComplexPortal" id="CPX-8869">
    <property type="entry name" value="Cav1.2 voltage-gated calcium channel complex, CACNA2D3-CACNB2 variant"/>
</dbReference>
<dbReference type="ComplexPortal" id="CPX-8870">
    <property type="entry name" value="Cav1.2 voltage-gated calcium channel complex, CACNA2D3-CACNB3 variant"/>
</dbReference>
<dbReference type="ComplexPortal" id="CPX-8871">
    <property type="entry name" value="Cav1.2 voltage-gated calcium channel complex, CACNA2D3-CACNB4 variant"/>
</dbReference>
<dbReference type="ComplexPortal" id="CPX-8872">
    <property type="entry name" value="Cav1.2 voltage-gated calcium channel complex, CACNA2D4-CACNB1 variant"/>
</dbReference>
<dbReference type="ComplexPortal" id="CPX-8873">
    <property type="entry name" value="Cav1.2 voltage-gated calcium channel complex, CACNA2D4-CACNB2 variant"/>
</dbReference>
<dbReference type="ComplexPortal" id="CPX-8875">
    <property type="entry name" value="Cav1.2 voltage-gated calcium channel complex, CACNA2D4-CACNB3 variant"/>
</dbReference>
<dbReference type="ComplexPortal" id="CPX-8876">
    <property type="entry name" value="Cav1.2 voltage-gated calcium channel complex, CACNA2D4-CACNB4 variant"/>
</dbReference>
<dbReference type="CORUM" id="Q13936"/>
<dbReference type="DIP" id="DIP-29589N"/>
<dbReference type="FunCoup" id="Q13936">
    <property type="interactions" value="1542"/>
</dbReference>
<dbReference type="IntAct" id="Q13936">
    <property type="interactions" value="647"/>
</dbReference>
<dbReference type="MINT" id="Q13936"/>
<dbReference type="STRING" id="9606.ENSP00000266376"/>
<dbReference type="BindingDB" id="Q13936"/>
<dbReference type="ChEMBL" id="CHEMBL1940"/>
<dbReference type="DrugBank" id="DB01118">
    <property type="generic name" value="Amiodarone"/>
</dbReference>
<dbReference type="DrugBank" id="DB00381">
    <property type="generic name" value="Amlodipine"/>
</dbReference>
<dbReference type="DrugBank" id="DB09229">
    <property type="generic name" value="Aranidipine"/>
</dbReference>
<dbReference type="DrugBank" id="DB09227">
    <property type="generic name" value="Barnidipine"/>
</dbReference>
<dbReference type="DrugBank" id="DB09231">
    <property type="generic name" value="Benidipine"/>
</dbReference>
<dbReference type="DrugBank" id="DB13746">
    <property type="generic name" value="Bioallethrin"/>
</dbReference>
<dbReference type="DrugBank" id="DB11148">
    <property type="generic name" value="Butamben"/>
</dbReference>
<dbReference type="DrugBank" id="DB01373">
    <property type="generic name" value="Calcium"/>
</dbReference>
<dbReference type="DrugBank" id="DB11093">
    <property type="generic name" value="Calcium citrate"/>
</dbReference>
<dbReference type="DrugBank" id="DB11348">
    <property type="generic name" value="Calcium Phosphate"/>
</dbReference>
<dbReference type="DrugBank" id="DB14481">
    <property type="generic name" value="Calcium phosphate dihydrate"/>
</dbReference>
<dbReference type="DrugBank" id="DB09232">
    <property type="generic name" value="Cilnidipine"/>
</dbReference>
<dbReference type="DrugBank" id="DB00568">
    <property type="generic name" value="Cinnarizine"/>
</dbReference>
<dbReference type="DrugBank" id="DB04920">
    <property type="generic name" value="Clevidipine"/>
</dbReference>
<dbReference type="DrugBank" id="DB00343">
    <property type="generic name" value="Diltiazem"/>
</dbReference>
<dbReference type="DrugBank" id="DB04855">
    <property type="generic name" value="Dronedarone"/>
</dbReference>
<dbReference type="DrugBank" id="DB06751">
    <property type="generic name" value="Drotaverine"/>
</dbReference>
<dbReference type="DrugBank" id="DB09235">
    <property type="generic name" value="Efonidipine"/>
</dbReference>
<dbReference type="DrugBank" id="DB00228">
    <property type="generic name" value="Enflurane"/>
</dbReference>
<dbReference type="DrugBank" id="DB00153">
    <property type="generic name" value="Ergocalciferol"/>
</dbReference>
<dbReference type="DrugBank" id="DB00898">
    <property type="generic name" value="Ethanol"/>
</dbReference>
<dbReference type="DrugBank" id="DB01023">
    <property type="generic name" value="Felodipine"/>
</dbReference>
<dbReference type="DrugBank" id="DB13961">
    <property type="generic name" value="Fish oil"/>
</dbReference>
<dbReference type="DrugBank" id="DB00308">
    <property type="generic name" value="Ibutilide"/>
</dbReference>
<dbReference type="DrugBank" id="DB11633">
    <property type="generic name" value="Isavuconazole"/>
</dbReference>
<dbReference type="DrugBank" id="DB00270">
    <property type="generic name" value="Isradipine"/>
</dbReference>
<dbReference type="DrugBank" id="DB09236">
    <property type="generic name" value="Lacidipine"/>
</dbReference>
<dbReference type="DrugBank" id="DB09237">
    <property type="generic name" value="Levamlodipine"/>
</dbReference>
<dbReference type="DrugBank" id="DB00825">
    <property type="generic name" value="Levomenthol"/>
</dbReference>
<dbReference type="DrugBank" id="DB00653">
    <property type="generic name" value="Magnesium sulfate"/>
</dbReference>
<dbReference type="DrugBank" id="DB09238">
    <property type="generic name" value="Manidipine"/>
</dbReference>
<dbReference type="DrugBank" id="DB01388">
    <property type="generic name" value="Mibefradil"/>
</dbReference>
<dbReference type="DrugBank" id="DB01110">
    <property type="generic name" value="Miconazole"/>
</dbReference>
<dbReference type="DrugBank" id="DB00622">
    <property type="generic name" value="Nicardipine"/>
</dbReference>
<dbReference type="DrugBank" id="DB01115">
    <property type="generic name" value="Nifedipine"/>
</dbReference>
<dbReference type="DrugBank" id="DB06712">
    <property type="generic name" value="Nilvadipine"/>
</dbReference>
<dbReference type="DrugBank" id="DB00393">
    <property type="generic name" value="Nimodipine"/>
</dbReference>
<dbReference type="DrugBank" id="DB00401">
    <property type="generic name" value="Nisoldipine"/>
</dbReference>
<dbReference type="DrugBank" id="DB01054">
    <property type="generic name" value="Nitrendipine"/>
</dbReference>
<dbReference type="DrugBank" id="DB00252">
    <property type="generic name" value="Phenytoin"/>
</dbReference>
<dbReference type="DrugBank" id="DB12278">
    <property type="generic name" value="Propiverine"/>
</dbReference>
<dbReference type="DrugBank" id="DB00243">
    <property type="generic name" value="Ranolazine"/>
</dbReference>
<dbReference type="DrugBank" id="DB00421">
    <property type="generic name" value="Spironolactone"/>
</dbReference>
<dbReference type="DrugBank" id="DB00273">
    <property type="generic name" value="Topiramate"/>
</dbReference>
<dbReference type="DrugBank" id="DB09089">
    <property type="generic name" value="Trimebutine"/>
</dbReference>
<dbReference type="DrugBank" id="DB00661">
    <property type="generic name" value="Verapamil"/>
</dbReference>
<dbReference type="DrugCentral" id="Q13936"/>
<dbReference type="GuidetoPHARMACOLOGY" id="529"/>
<dbReference type="TCDB" id="1.A.1.11.4">
    <property type="family name" value="the voltage-gated ion channel (vic) superfamily"/>
</dbReference>
<dbReference type="GlyCosmos" id="Q13936">
    <property type="glycosylation" value="4 sites, No reported glycans"/>
</dbReference>
<dbReference type="GlyGen" id="Q13936">
    <property type="glycosylation" value="7 sites, 1 N-linked glycan (1 site), 1 O-linked glycan (1 site)"/>
</dbReference>
<dbReference type="iPTMnet" id="Q13936"/>
<dbReference type="PhosphoSitePlus" id="Q13936"/>
<dbReference type="BioMuta" id="CACNA1C"/>
<dbReference type="DMDM" id="308153651"/>
<dbReference type="jPOST" id="Q13936"/>
<dbReference type="MassIVE" id="Q13936"/>
<dbReference type="PaxDb" id="9606-ENSP00000266376"/>
<dbReference type="PeptideAtlas" id="Q13936"/>
<dbReference type="ProteomicsDB" id="19675"/>
<dbReference type="ProteomicsDB" id="59725">
    <molecule id="Q13936-1"/>
</dbReference>
<dbReference type="ProteomicsDB" id="59726">
    <molecule id="Q13936-10"/>
</dbReference>
<dbReference type="ProteomicsDB" id="59727">
    <molecule id="Q13936-11"/>
</dbReference>
<dbReference type="ProteomicsDB" id="59728">
    <molecule id="Q13936-12"/>
</dbReference>
<dbReference type="ProteomicsDB" id="59729">
    <molecule id="Q13936-13"/>
</dbReference>
<dbReference type="ProteomicsDB" id="59730">
    <molecule id="Q13936-14"/>
</dbReference>
<dbReference type="ProteomicsDB" id="59731">
    <molecule id="Q13936-15"/>
</dbReference>
<dbReference type="ProteomicsDB" id="59732">
    <molecule id="Q13936-16"/>
</dbReference>
<dbReference type="ProteomicsDB" id="59733">
    <molecule id="Q13936-17"/>
</dbReference>
<dbReference type="ProteomicsDB" id="59734">
    <molecule id="Q13936-18"/>
</dbReference>
<dbReference type="ProteomicsDB" id="59735">
    <molecule id="Q13936-19"/>
</dbReference>
<dbReference type="ProteomicsDB" id="59736">
    <molecule id="Q13936-2"/>
</dbReference>
<dbReference type="ProteomicsDB" id="59737">
    <molecule id="Q13936-20"/>
</dbReference>
<dbReference type="ProteomicsDB" id="59738">
    <molecule id="Q13936-21"/>
</dbReference>
<dbReference type="ProteomicsDB" id="59739">
    <molecule id="Q13936-22"/>
</dbReference>
<dbReference type="ProteomicsDB" id="59740">
    <molecule id="Q13936-23"/>
</dbReference>
<dbReference type="ProteomicsDB" id="59741">
    <molecule id="Q13936-24"/>
</dbReference>
<dbReference type="ProteomicsDB" id="59742">
    <molecule id="Q13936-25"/>
</dbReference>
<dbReference type="ProteomicsDB" id="59743">
    <molecule id="Q13936-26"/>
</dbReference>
<dbReference type="ProteomicsDB" id="59744">
    <molecule id="Q13936-27"/>
</dbReference>
<dbReference type="ProteomicsDB" id="59745">
    <molecule id="Q13936-28"/>
</dbReference>
<dbReference type="ProteomicsDB" id="59746">
    <molecule id="Q13936-29"/>
</dbReference>
<dbReference type="ProteomicsDB" id="59747">
    <molecule id="Q13936-3"/>
</dbReference>
<dbReference type="ProteomicsDB" id="59748">
    <molecule id="Q13936-30"/>
</dbReference>
<dbReference type="ProteomicsDB" id="59749">
    <molecule id="Q13936-31"/>
</dbReference>
<dbReference type="ProteomicsDB" id="59750">
    <molecule id="Q13936-32"/>
</dbReference>
<dbReference type="ProteomicsDB" id="59751">
    <molecule id="Q13936-33"/>
</dbReference>
<dbReference type="ProteomicsDB" id="59752">
    <molecule id="Q13936-34"/>
</dbReference>
<dbReference type="ProteomicsDB" id="59753">
    <molecule id="Q13936-35"/>
</dbReference>
<dbReference type="ProteomicsDB" id="59754">
    <molecule id="Q13936-4"/>
</dbReference>
<dbReference type="ProteomicsDB" id="59755">
    <molecule id="Q13936-5"/>
</dbReference>
<dbReference type="ProteomicsDB" id="59756">
    <molecule id="Q13936-6"/>
</dbReference>
<dbReference type="ProteomicsDB" id="59757">
    <molecule id="Q13936-7"/>
</dbReference>
<dbReference type="ProteomicsDB" id="59758">
    <molecule id="Q13936-8"/>
</dbReference>
<dbReference type="ProteomicsDB" id="59759">
    <molecule id="Q13936-9"/>
</dbReference>
<dbReference type="ABCD" id="Q13936">
    <property type="antibodies" value="2 sequenced antibodies"/>
</dbReference>
<dbReference type="Antibodypedia" id="22118">
    <property type="antibodies" value="527 antibodies from 39 providers"/>
</dbReference>
<dbReference type="DNASU" id="775"/>
<dbReference type="Ensembl" id="ENST00000344100.7">
    <molecule id="Q13936-14"/>
    <property type="protein sequence ID" value="ENSP00000341092.3"/>
    <property type="gene ID" value="ENSG00000151067.23"/>
</dbReference>
<dbReference type="Ensembl" id="ENST00000347598.9">
    <molecule id="Q13936-11"/>
    <property type="protein sequence ID" value="ENSP00000266376.6"/>
    <property type="gene ID" value="ENSG00000151067.23"/>
</dbReference>
<dbReference type="Ensembl" id="ENST00000399591.5">
    <molecule id="Q13936-29"/>
    <property type="protein sequence ID" value="ENSP00000382500.1"/>
    <property type="gene ID" value="ENSG00000151067.23"/>
</dbReference>
<dbReference type="Ensembl" id="ENST00000399595.5">
    <molecule id="Q13936-25"/>
    <property type="protein sequence ID" value="ENSP00000382504.1"/>
    <property type="gene ID" value="ENSG00000151067.23"/>
</dbReference>
<dbReference type="Ensembl" id="ENST00000399597.5">
    <molecule id="Q13936-22"/>
    <property type="protein sequence ID" value="ENSP00000382506.1"/>
    <property type="gene ID" value="ENSG00000151067.23"/>
</dbReference>
<dbReference type="Ensembl" id="ENST00000399601.5">
    <molecule id="Q13936-20"/>
    <property type="protein sequence ID" value="ENSP00000382510.1"/>
    <property type="gene ID" value="ENSG00000151067.23"/>
</dbReference>
<dbReference type="Ensembl" id="ENST00000399603.6">
    <molecule id="Q13936-37"/>
    <property type="protein sequence ID" value="ENSP00000382512.1"/>
    <property type="gene ID" value="ENSG00000151067.23"/>
</dbReference>
<dbReference type="Ensembl" id="ENST00000399606.5">
    <molecule id="Q13936-30"/>
    <property type="protein sequence ID" value="ENSP00000382515.1"/>
    <property type="gene ID" value="ENSG00000151067.23"/>
</dbReference>
<dbReference type="Ensembl" id="ENST00000399621.5">
    <molecule id="Q13936-24"/>
    <property type="protein sequence ID" value="ENSP00000382530.1"/>
    <property type="gene ID" value="ENSG00000151067.23"/>
</dbReference>
<dbReference type="Ensembl" id="ENST00000399629.5">
    <molecule id="Q13936-32"/>
    <property type="protein sequence ID" value="ENSP00000382537.1"/>
    <property type="gene ID" value="ENSG00000151067.23"/>
</dbReference>
<dbReference type="Ensembl" id="ENST00000399637.5">
    <molecule id="Q13936-27"/>
    <property type="protein sequence ID" value="ENSP00000382546.1"/>
    <property type="gene ID" value="ENSG00000151067.23"/>
</dbReference>
<dbReference type="Ensembl" id="ENST00000399638.5">
    <molecule id="Q13936-31"/>
    <property type="protein sequence ID" value="ENSP00000382547.1"/>
    <property type="gene ID" value="ENSG00000151067.23"/>
</dbReference>
<dbReference type="Ensembl" id="ENST00000399641.6">
    <molecule id="Q13936-23"/>
    <property type="protein sequence ID" value="ENSP00000382549.1"/>
    <property type="gene ID" value="ENSG00000151067.23"/>
</dbReference>
<dbReference type="Ensembl" id="ENST00000399644.5">
    <molecule id="Q13936-21"/>
    <property type="protein sequence ID" value="ENSP00000382552.1"/>
    <property type="gene ID" value="ENSG00000151067.23"/>
</dbReference>
<dbReference type="Ensembl" id="ENST00000399649.5">
    <molecule id="Q13936-15"/>
    <property type="protein sequence ID" value="ENSP00000382557.1"/>
    <property type="gene ID" value="ENSG00000151067.23"/>
</dbReference>
<dbReference type="Ensembl" id="ENST00000399655.6">
    <molecule id="Q13936-12"/>
    <property type="protein sequence ID" value="ENSP00000382563.1"/>
    <property type="gene ID" value="ENSG00000151067.23"/>
</dbReference>
<dbReference type="Ensembl" id="ENST00000402845.7">
    <molecule id="Q13936-13"/>
    <property type="protein sequence ID" value="ENSP00000385724.3"/>
    <property type="gene ID" value="ENSG00000151067.23"/>
</dbReference>
<dbReference type="Ensembl" id="ENST00000642583.1">
    <molecule id="Q13936-29"/>
    <property type="protein sequence ID" value="ENSP00000494999.1"/>
    <property type="gene ID" value="ENSG00000285479.3"/>
</dbReference>
<dbReference type="Ensembl" id="ENST00000643038.2">
    <molecule id="Q13936-11"/>
    <property type="protein sequence ID" value="ENSP00000494095.1"/>
    <property type="gene ID" value="ENSG00000285479.3"/>
</dbReference>
<dbReference type="Ensembl" id="ENST00000643138.1">
    <molecule id="Q13936-22"/>
    <property type="protein sequence ID" value="ENSP00000496049.1"/>
    <property type="gene ID" value="ENSG00000285479.3"/>
</dbReference>
<dbReference type="Ensembl" id="ENST00000643701.1">
    <molecule id="Q13936-15"/>
    <property type="protein sequence ID" value="ENSP00000496458.1"/>
    <property type="gene ID" value="ENSG00000285479.3"/>
</dbReference>
<dbReference type="Ensembl" id="ENST00000643858.1">
    <molecule id="Q13936-14"/>
    <property type="protein sequence ID" value="ENSP00000495576.1"/>
    <property type="gene ID" value="ENSG00000285479.3"/>
</dbReference>
<dbReference type="Ensembl" id="ENST00000644048.1">
    <molecule id="Q13936-31"/>
    <property type="protein sequence ID" value="ENSP00000494782.1"/>
    <property type="gene ID" value="ENSG00000285479.3"/>
</dbReference>
<dbReference type="Ensembl" id="ENST00000644235.2">
    <molecule id="Q13936-12"/>
    <property type="protein sequence ID" value="ENSP00000494058.1"/>
    <property type="gene ID" value="ENSG00000285479.3"/>
</dbReference>
<dbReference type="Ensembl" id="ENST00000644369.2">
    <molecule id="Q13936-23"/>
    <property type="protein sequence ID" value="ENSP00000494765.1"/>
    <property type="gene ID" value="ENSG00000285479.3"/>
</dbReference>
<dbReference type="Ensembl" id="ENST00000644660.1">
    <molecule id="Q13936-20"/>
    <property type="protein sequence ID" value="ENSP00000496749.1"/>
    <property type="gene ID" value="ENSG00000285479.3"/>
</dbReference>
<dbReference type="Ensembl" id="ENST00000644691.1">
    <molecule id="Q13936-30"/>
    <property type="protein sequence ID" value="ENSP00000494420.1"/>
    <property type="gene ID" value="ENSG00000285479.3"/>
</dbReference>
<dbReference type="Ensembl" id="ENST00000644891.1">
    <molecule id="Q13936-32"/>
    <property type="protein sequence ID" value="ENSP00000496681.1"/>
    <property type="gene ID" value="ENSG00000285479.3"/>
</dbReference>
<dbReference type="Ensembl" id="ENST00000645584.1">
    <molecule id="Q13936-24"/>
    <property type="protein sequence ID" value="ENSP00000494018.1"/>
    <property type="gene ID" value="ENSG00000285479.3"/>
</dbReference>
<dbReference type="Ensembl" id="ENST00000645965.1">
    <molecule id="Q13936-27"/>
    <property type="protein sequence ID" value="ENSP00000493890.1"/>
    <property type="gene ID" value="ENSG00000285479.3"/>
</dbReference>
<dbReference type="Ensembl" id="ENST00000646257.1">
    <molecule id="Q13936-21"/>
    <property type="protein sequence ID" value="ENSP00000493573.1"/>
    <property type="gene ID" value="ENSG00000285479.3"/>
</dbReference>
<dbReference type="Ensembl" id="ENST00000647062.1">
    <molecule id="Q13936-13"/>
    <property type="protein sequence ID" value="ENSP00000495080.1"/>
    <property type="gene ID" value="ENSG00000285479.3"/>
</dbReference>
<dbReference type="Ensembl" id="ENST00000647327.2">
    <molecule id="Q13936-37"/>
    <property type="protein sequence ID" value="ENSP00000493781.1"/>
    <property type="gene ID" value="ENSG00000285479.3"/>
</dbReference>
<dbReference type="Ensembl" id="ENST00000647521.1">
    <molecule id="Q13936-25"/>
    <property type="protein sequence ID" value="ENSP00000495678.1"/>
    <property type="gene ID" value="ENSG00000285479.3"/>
</dbReference>
<dbReference type="Ensembl" id="ENST00000682686.1">
    <molecule id="Q13936-19"/>
    <property type="protein sequence ID" value="ENSP00000507309.1"/>
    <property type="gene ID" value="ENSG00000151067.23"/>
</dbReference>
<dbReference type="Ensembl" id="ENST00000683482.1">
    <molecule id="Q13936-35"/>
    <property type="protein sequence ID" value="ENSP00000507169.1"/>
    <property type="gene ID" value="ENSG00000151067.23"/>
</dbReference>
<dbReference type="Ensembl" id="ENST00000710479.1">
    <molecule id="Q13936-35"/>
    <property type="protein sequence ID" value="ENSP00000518305.1"/>
    <property type="gene ID" value="ENSG00000285479.3"/>
</dbReference>
<dbReference type="Ensembl" id="ENST00000710487.1">
    <molecule id="Q13936-19"/>
    <property type="protein sequence ID" value="ENSP00000518307.1"/>
    <property type="gene ID" value="ENSG00000285479.3"/>
</dbReference>
<dbReference type="GeneID" id="775"/>
<dbReference type="KEGG" id="hsa:775"/>
<dbReference type="MANE-Select" id="ENST00000399655.6">
    <molecule id="Q13936-12"/>
    <property type="protein sequence ID" value="ENSP00000382563.1"/>
    <property type="RefSeq nucleotide sequence ID" value="NM_000719.7"/>
    <property type="RefSeq protein sequence ID" value="NP_000710.5"/>
</dbReference>
<dbReference type="UCSC" id="uc001qjz.3">
    <molecule id="Q13936-1"/>
    <property type="organism name" value="human"/>
</dbReference>
<dbReference type="AGR" id="HGNC:1390"/>
<dbReference type="CTD" id="775"/>
<dbReference type="DisGeNET" id="775"/>
<dbReference type="GeneCards" id="CACNA1C"/>
<dbReference type="GeneReviews" id="CACNA1C"/>
<dbReference type="HGNC" id="HGNC:1390">
    <property type="gene designation" value="CACNA1C"/>
</dbReference>
<dbReference type="HPA" id="ENSG00000151067">
    <property type="expression patterns" value="Tissue enhanced (endometrium, heart muscle, intestine)"/>
</dbReference>
<dbReference type="MalaCards" id="CACNA1C"/>
<dbReference type="MIM" id="114205">
    <property type="type" value="gene"/>
</dbReference>
<dbReference type="MIM" id="601005">
    <property type="type" value="phenotype"/>
</dbReference>
<dbReference type="MIM" id="611875">
    <property type="type" value="phenotype"/>
</dbReference>
<dbReference type="MIM" id="618447">
    <property type="type" value="phenotype"/>
</dbReference>
<dbReference type="MIM" id="620029">
    <property type="type" value="phenotype"/>
</dbReference>
<dbReference type="neXtProt" id="NX_Q13936"/>
<dbReference type="OpenTargets" id="ENSG00000151067"/>
<dbReference type="Orphanet" id="595109">
    <property type="disease" value="Atypical Timothy syndrome"/>
</dbReference>
<dbReference type="Orphanet" id="130">
    <property type="disease" value="Brugada syndrome"/>
</dbReference>
<dbReference type="Orphanet" id="528084">
    <property type="disease" value="Non-specific syndromic intellectual disability"/>
</dbReference>
<dbReference type="Orphanet" id="101016">
    <property type="disease" value="Romano-Ward syndrome"/>
</dbReference>
<dbReference type="Orphanet" id="595098">
    <property type="disease" value="Timothy syndrome type 1"/>
</dbReference>
<dbReference type="Orphanet" id="595105">
    <property type="disease" value="Timothy syndrome type 2"/>
</dbReference>
<dbReference type="PharmGKB" id="PA83"/>
<dbReference type="VEuPathDB" id="HostDB:ENSG00000151067"/>
<dbReference type="eggNOG" id="KOG2301">
    <property type="taxonomic scope" value="Eukaryota"/>
</dbReference>
<dbReference type="GeneTree" id="ENSGT00940000156127"/>
<dbReference type="InParanoid" id="Q13936"/>
<dbReference type="OMA" id="CMQNGTK"/>
<dbReference type="OrthoDB" id="431720at2759"/>
<dbReference type="PAN-GO" id="Q13936">
    <property type="GO annotations" value="3 GO annotations based on evolutionary models"/>
</dbReference>
<dbReference type="PhylomeDB" id="Q13936"/>
<dbReference type="TreeFam" id="TF312805"/>
<dbReference type="PathwayCommons" id="Q13936"/>
<dbReference type="Reactome" id="R-HSA-400042">
    <property type="pathway name" value="Adrenaline,noradrenaline inhibits insulin secretion"/>
</dbReference>
<dbReference type="Reactome" id="R-HSA-419037">
    <property type="pathway name" value="NCAM1 interactions"/>
</dbReference>
<dbReference type="Reactome" id="R-HSA-422356">
    <property type="pathway name" value="Regulation of insulin secretion"/>
</dbReference>
<dbReference type="Reactome" id="R-HSA-5576892">
    <property type="pathway name" value="Phase 0 - rapid depolarisation"/>
</dbReference>
<dbReference type="Reactome" id="R-HSA-5576893">
    <property type="pathway name" value="Phase 2 - plateau phase"/>
</dbReference>
<dbReference type="SignaLink" id="Q13936"/>
<dbReference type="SIGNOR" id="Q13936"/>
<dbReference type="BioGRID-ORCS" id="775">
    <property type="hits" value="13 hits in 1159 CRISPR screens"/>
</dbReference>
<dbReference type="ChiTaRS" id="CACNA1C">
    <property type="organism name" value="human"/>
</dbReference>
<dbReference type="EvolutionaryTrace" id="Q13936"/>
<dbReference type="GeneWiki" id="Cav1.2"/>
<dbReference type="GenomeRNAi" id="775"/>
<dbReference type="Pharos" id="Q13936">
    <property type="development level" value="Tclin"/>
</dbReference>
<dbReference type="PRO" id="PR:Q13936"/>
<dbReference type="Proteomes" id="UP000005640">
    <property type="component" value="Chromosome 12"/>
</dbReference>
<dbReference type="RNAct" id="Q13936">
    <property type="molecule type" value="protein"/>
</dbReference>
<dbReference type="Bgee" id="ENSG00000151067">
    <property type="expression patterns" value="Expressed in apex of heart and 101 other cell types or tissues"/>
</dbReference>
<dbReference type="ExpressionAtlas" id="Q13936">
    <property type="expression patterns" value="baseline and differential"/>
</dbReference>
<dbReference type="GO" id="GO:0005929">
    <property type="term" value="C:cilium"/>
    <property type="evidence" value="ECO:0000314"/>
    <property type="project" value="HPA"/>
</dbReference>
<dbReference type="GO" id="GO:0005737">
    <property type="term" value="C:cytoplasm"/>
    <property type="evidence" value="ECO:0000314"/>
    <property type="project" value="UniProtKB"/>
</dbReference>
<dbReference type="GO" id="GO:0030425">
    <property type="term" value="C:dendrite"/>
    <property type="evidence" value="ECO:0007669"/>
    <property type="project" value="UniProtKB-SubCell"/>
</dbReference>
<dbReference type="GO" id="GO:1990454">
    <property type="term" value="C:L-type voltage-gated calcium channel complex"/>
    <property type="evidence" value="ECO:0000314"/>
    <property type="project" value="BHF-UCL"/>
</dbReference>
<dbReference type="GO" id="GO:0016020">
    <property type="term" value="C:membrane"/>
    <property type="evidence" value="ECO:0000314"/>
    <property type="project" value="UniProtKB"/>
</dbReference>
<dbReference type="GO" id="GO:0005654">
    <property type="term" value="C:nucleoplasm"/>
    <property type="evidence" value="ECO:0000314"/>
    <property type="project" value="HPA"/>
</dbReference>
<dbReference type="GO" id="GO:0043204">
    <property type="term" value="C:perikaryon"/>
    <property type="evidence" value="ECO:0007669"/>
    <property type="project" value="UniProtKB-SubCell"/>
</dbReference>
<dbReference type="GO" id="GO:0005886">
    <property type="term" value="C:plasma membrane"/>
    <property type="evidence" value="ECO:0000314"/>
    <property type="project" value="HPA"/>
</dbReference>
<dbReference type="GO" id="GO:0014069">
    <property type="term" value="C:postsynaptic density"/>
    <property type="evidence" value="ECO:0000314"/>
    <property type="project" value="UniProtKB"/>
</dbReference>
<dbReference type="GO" id="GO:0098839">
    <property type="term" value="C:postsynaptic density membrane"/>
    <property type="evidence" value="ECO:0007669"/>
    <property type="project" value="UniProtKB-SubCell"/>
</dbReference>
<dbReference type="GO" id="GO:0005891">
    <property type="term" value="C:voltage-gated calcium channel complex"/>
    <property type="evidence" value="ECO:0000314"/>
    <property type="project" value="UniProtKB"/>
</dbReference>
<dbReference type="GO" id="GO:0030018">
    <property type="term" value="C:Z disc"/>
    <property type="evidence" value="ECO:0000250"/>
    <property type="project" value="BHF-UCL"/>
</dbReference>
<dbReference type="GO" id="GO:0051393">
    <property type="term" value="F:alpha-actinin binding"/>
    <property type="evidence" value="ECO:0000353"/>
    <property type="project" value="BHF-UCL"/>
</dbReference>
<dbReference type="GO" id="GO:0005516">
    <property type="term" value="F:calmodulin binding"/>
    <property type="evidence" value="ECO:0000353"/>
    <property type="project" value="UniProtKB"/>
</dbReference>
<dbReference type="GO" id="GO:0008331">
    <property type="term" value="F:high voltage-gated calcium channel activity"/>
    <property type="evidence" value="ECO:0000314"/>
    <property type="project" value="BHF-UCL"/>
</dbReference>
<dbReference type="GO" id="GO:0046872">
    <property type="term" value="F:metal ion binding"/>
    <property type="evidence" value="ECO:0007669"/>
    <property type="project" value="UniProtKB-KW"/>
</dbReference>
<dbReference type="GO" id="GO:0005245">
    <property type="term" value="F:voltage-gated calcium channel activity"/>
    <property type="evidence" value="ECO:0000314"/>
    <property type="project" value="UniProtKB"/>
</dbReference>
<dbReference type="GO" id="GO:0086056">
    <property type="term" value="F:voltage-gated calcium channel activity involved in AV node cell action potential"/>
    <property type="evidence" value="ECO:0000315"/>
    <property type="project" value="BHF-UCL"/>
</dbReference>
<dbReference type="GO" id="GO:0086007">
    <property type="term" value="F:voltage-gated calcium channel activity involved in cardiac muscle cell action potential"/>
    <property type="evidence" value="ECO:0000315"/>
    <property type="project" value="BHF-UCL"/>
</dbReference>
<dbReference type="GO" id="GO:0098703">
    <property type="term" value="P:calcium ion import across plasma membrane"/>
    <property type="evidence" value="ECO:0000318"/>
    <property type="project" value="GO_Central"/>
</dbReference>
<dbReference type="GO" id="GO:0070588">
    <property type="term" value="P:calcium ion transmembrane transport"/>
    <property type="evidence" value="ECO:0000314"/>
    <property type="project" value="BHF-UCL"/>
</dbReference>
<dbReference type="GO" id="GO:0061577">
    <property type="term" value="P:calcium ion transmembrane transport via high voltage-gated calcium channel"/>
    <property type="evidence" value="ECO:0000314"/>
    <property type="project" value="BHF-UCL"/>
</dbReference>
<dbReference type="GO" id="GO:0060402">
    <property type="term" value="P:calcium ion transport into cytosol"/>
    <property type="evidence" value="ECO:0000250"/>
    <property type="project" value="UniProtKB"/>
</dbReference>
<dbReference type="GO" id="GO:0043010">
    <property type="term" value="P:camera-type eye development"/>
    <property type="evidence" value="ECO:0000315"/>
    <property type="project" value="BHF-UCL"/>
</dbReference>
<dbReference type="GO" id="GO:0061337">
    <property type="term" value="P:cardiac conduction"/>
    <property type="evidence" value="ECO:0000315"/>
    <property type="project" value="UniProtKB"/>
</dbReference>
<dbReference type="GO" id="GO:0086002">
    <property type="term" value="P:cardiac muscle cell action potential involved in contraction"/>
    <property type="evidence" value="ECO:0000315"/>
    <property type="project" value="BHF-UCL"/>
</dbReference>
<dbReference type="GO" id="GO:0086064">
    <property type="term" value="P:cell communication by electrical coupling involved in cardiac conduction"/>
    <property type="evidence" value="ECO:0000304"/>
    <property type="project" value="BHF-UCL"/>
</dbReference>
<dbReference type="GO" id="GO:0035115">
    <property type="term" value="P:embryonic forelimb morphogenesis"/>
    <property type="evidence" value="ECO:0000315"/>
    <property type="project" value="BHF-UCL"/>
</dbReference>
<dbReference type="GO" id="GO:0007507">
    <property type="term" value="P:heart development"/>
    <property type="evidence" value="ECO:0000315"/>
    <property type="project" value="BHF-UCL"/>
</dbReference>
<dbReference type="GO" id="GO:0002520">
    <property type="term" value="P:immune system development"/>
    <property type="evidence" value="ECO:0000315"/>
    <property type="project" value="BHF-UCL"/>
</dbReference>
<dbReference type="GO" id="GO:0098912">
    <property type="term" value="P:membrane depolarization during atrial cardiac muscle cell action potential"/>
    <property type="evidence" value="ECO:0000315"/>
    <property type="project" value="BHF-UCL"/>
</dbReference>
<dbReference type="GO" id="GO:0086045">
    <property type="term" value="P:membrane depolarization during AV node cell action potential"/>
    <property type="evidence" value="ECO:0000315"/>
    <property type="project" value="BHF-UCL"/>
</dbReference>
<dbReference type="GO" id="GO:0086012">
    <property type="term" value="P:membrane depolarization during cardiac muscle cell action potential"/>
    <property type="evidence" value="ECO:0000315"/>
    <property type="project" value="BHF-UCL"/>
</dbReference>
<dbReference type="GO" id="GO:0045762">
    <property type="term" value="P:positive regulation of adenylate cyclase activity"/>
    <property type="evidence" value="ECO:0000250"/>
    <property type="project" value="UniProtKB"/>
</dbReference>
<dbReference type="GO" id="GO:0007204">
    <property type="term" value="P:positive regulation of cytosolic calcium ion concentration"/>
    <property type="evidence" value="ECO:0000314"/>
    <property type="project" value="UniProtKB"/>
</dbReference>
<dbReference type="GO" id="GO:0045933">
    <property type="term" value="P:positive regulation of muscle contraction"/>
    <property type="evidence" value="ECO:0000303"/>
    <property type="project" value="ComplexPortal"/>
</dbReference>
<dbReference type="GO" id="GO:0010881">
    <property type="term" value="P:regulation of cardiac muscle contraction by regulation of the release of sequestered calcium ion"/>
    <property type="evidence" value="ECO:0000250"/>
    <property type="project" value="UniProtKB"/>
</dbReference>
<dbReference type="GO" id="GO:0086091">
    <property type="term" value="P:regulation of heart rate by cardiac conduction"/>
    <property type="evidence" value="ECO:0000315"/>
    <property type="project" value="BHF-UCL"/>
</dbReference>
<dbReference type="GO" id="GO:0098911">
    <property type="term" value="P:regulation of ventricular cardiac muscle cell action potential"/>
    <property type="evidence" value="ECO:0000315"/>
    <property type="project" value="BHF-UCL"/>
</dbReference>
<dbReference type="FunFam" id="1.10.287.70:FF:000007">
    <property type="entry name" value="Voltage-dependent L-type calcium channel subunit alpha"/>
    <property type="match status" value="1"/>
</dbReference>
<dbReference type="FunFam" id="1.10.287.70:FF:000009">
    <property type="entry name" value="Voltage-dependent L-type calcium channel subunit alpha"/>
    <property type="match status" value="1"/>
</dbReference>
<dbReference type="FunFam" id="1.10.287.70:FF:000021">
    <property type="entry name" value="Voltage-dependent L-type calcium channel subunit alpha"/>
    <property type="match status" value="1"/>
</dbReference>
<dbReference type="FunFam" id="1.20.120.350:FF:000001">
    <property type="entry name" value="Voltage-dependent L-type calcium channel subunit alpha"/>
    <property type="match status" value="1"/>
</dbReference>
<dbReference type="FunFam" id="1.20.120.350:FF:000010">
    <property type="entry name" value="Voltage-dependent L-type calcium channel subunit alpha"/>
    <property type="match status" value="1"/>
</dbReference>
<dbReference type="FunFam" id="1.20.120.350:FF:000037">
    <property type="entry name" value="Voltage-dependent L-type calcium channel subunit alpha"/>
    <property type="match status" value="1"/>
</dbReference>
<dbReference type="FunFam" id="1.20.120.350:FF:000051">
    <property type="entry name" value="Voltage-dependent L-type calcium channel subunit alpha"/>
    <property type="match status" value="1"/>
</dbReference>
<dbReference type="FunFam" id="1.20.120.350:FF:000060">
    <property type="entry name" value="Voltage-dependent L-type calcium channel subunit alpha"/>
    <property type="match status" value="1"/>
</dbReference>
<dbReference type="FunFam" id="1.20.120.350:FF:000069">
    <property type="entry name" value="Voltage-dependent L-type calcium channel subunit alpha"/>
    <property type="match status" value="1"/>
</dbReference>
<dbReference type="FunFam" id="1.10.238.10:FF:000063">
    <property type="entry name" value="Voltage-dependent N-type calcium channel subunit alpha"/>
    <property type="match status" value="1"/>
</dbReference>
<dbReference type="Gene3D" id="1.10.287.70">
    <property type="match status" value="4"/>
</dbReference>
<dbReference type="Gene3D" id="6.10.250.2180">
    <property type="match status" value="1"/>
</dbReference>
<dbReference type="Gene3D" id="6.10.250.2500">
    <property type="match status" value="1"/>
</dbReference>
<dbReference type="Gene3D" id="1.20.120.350">
    <property type="entry name" value="Voltage-gated potassium channels. Chain C"/>
    <property type="match status" value="6"/>
</dbReference>
<dbReference type="InterPro" id="IPR031688">
    <property type="entry name" value="CAC1F_C"/>
</dbReference>
<dbReference type="InterPro" id="IPR031649">
    <property type="entry name" value="GPHH_dom"/>
</dbReference>
<dbReference type="InterPro" id="IPR005821">
    <property type="entry name" value="Ion_trans_dom"/>
</dbReference>
<dbReference type="InterPro" id="IPR014873">
    <property type="entry name" value="VDCC_a1su_IQ"/>
</dbReference>
<dbReference type="InterPro" id="IPR050599">
    <property type="entry name" value="VDCC_alpha-1_subunit"/>
</dbReference>
<dbReference type="InterPro" id="IPR005451">
    <property type="entry name" value="VDCC_L_a1csu"/>
</dbReference>
<dbReference type="InterPro" id="IPR005446">
    <property type="entry name" value="VDCC_L_a1su"/>
</dbReference>
<dbReference type="InterPro" id="IPR002077">
    <property type="entry name" value="VDCCAlpha1"/>
</dbReference>
<dbReference type="InterPro" id="IPR027359">
    <property type="entry name" value="Volt_channel_dom_sf"/>
</dbReference>
<dbReference type="PANTHER" id="PTHR45628">
    <property type="entry name" value="VOLTAGE-DEPENDENT CALCIUM CHANNEL TYPE A SUBUNIT ALPHA-1"/>
    <property type="match status" value="1"/>
</dbReference>
<dbReference type="PANTHER" id="PTHR45628:SF10">
    <property type="entry name" value="VOLTAGE-DEPENDENT L-TYPE CALCIUM CHANNEL SUBUNIT ALPHA-1C"/>
    <property type="match status" value="1"/>
</dbReference>
<dbReference type="Pfam" id="PF08763">
    <property type="entry name" value="Ca_chan_IQ"/>
    <property type="match status" value="1"/>
</dbReference>
<dbReference type="Pfam" id="PF16885">
    <property type="entry name" value="CAC1F_C"/>
    <property type="match status" value="1"/>
</dbReference>
<dbReference type="Pfam" id="PF16905">
    <property type="entry name" value="GPHH"/>
    <property type="match status" value="1"/>
</dbReference>
<dbReference type="Pfam" id="PF00520">
    <property type="entry name" value="Ion_trans"/>
    <property type="match status" value="5"/>
</dbReference>
<dbReference type="PRINTS" id="PR00167">
    <property type="entry name" value="CACHANNEL"/>
</dbReference>
<dbReference type="PRINTS" id="PR01630">
    <property type="entry name" value="LVDCCALPHA1"/>
</dbReference>
<dbReference type="PRINTS" id="PR01635">
    <property type="entry name" value="LVDCCALPHA1C"/>
</dbReference>
<dbReference type="SMART" id="SM01062">
    <property type="entry name" value="Ca_chan_IQ"/>
    <property type="match status" value="1"/>
</dbReference>
<dbReference type="SUPFAM" id="SSF81324">
    <property type="entry name" value="Voltage-gated potassium channels"/>
    <property type="match status" value="4"/>
</dbReference>
<accession>Q13936</accession>
<accession>B2RUT3</accession>
<accession>E9PDJ0</accession>
<accession>Q13917</accession>
<accession>Q13918</accession>
<accession>Q13919</accession>
<accession>Q13920</accession>
<accession>Q13921</accession>
<accession>Q13922</accession>
<accession>Q13923</accession>
<accession>Q13924</accession>
<accession>Q13925</accession>
<accession>Q13926</accession>
<accession>Q13927</accession>
<accession>Q13928</accession>
<accession>Q13929</accession>
<accession>Q13930</accession>
<accession>Q13932</accession>
<accession>Q13933</accession>
<accession>Q14743</accession>
<accession>Q14744</accession>
<accession>Q15877</accession>
<accession>Q4VMI7</accession>
<accession>Q4VMI8</accession>
<accession>Q4VMI9</accession>
<accession>Q6PKM7</accession>
<accession>Q8N6C0</accession>
<accession>Q99025</accession>
<accession>Q99241</accession>
<accession>Q99875</accession>
<reference key="1">
    <citation type="journal article" date="1992" name="Proc. Natl. Acad. Sci. U.S.A.">
        <title>Molecular diversity of L-type Ca2+ channel transcripts in human fibroblasts.</title>
        <authorList>
            <person name="Soldatov N.M."/>
        </authorList>
    </citation>
    <scope>NUCLEOTIDE SEQUENCE [GENOMIC DNA]</scope>
    <scope>ALTERNATIVE SPLICING (ISOFORM 1)</scope>
    <scope>VARIANTS VAL-1869 AND ARG-1893</scope>
    <source>
        <tissue>Fetal fibroblast</tissue>
    </source>
</reference>
<reference key="2">
    <citation type="journal article" date="1993" name="Proc. Natl. Acad. Sci. U.S.A.">
        <title>Cloning, chromosomal localization, and functional expression of the alpha-1 subunit of the L-type voltage-dependent calcium channel from normal human heart.</title>
        <authorList>
            <person name="Schultz D."/>
            <person name="Mikala G."/>
            <person name="Yatani A."/>
            <person name="Engle D.B."/>
            <person name="Iles D.E."/>
            <person name="Segers B."/>
            <person name="Sinke R.J."/>
            <person name="Weghuis D.O."/>
            <person name="Kloeckner U."/>
            <person name="Wakamori M."/>
            <person name="Wang J.-J."/>
            <person name="Melvin D."/>
            <person name="Varadi G."/>
            <person name="Schwartz A."/>
        </authorList>
    </citation>
    <scope>NUCLEOTIDE SEQUENCE [MRNA] (ISOFORMS 18 AND 28)</scope>
    <scope>NUCLEOTIDE SEQUENCE [GENOMIC DNA] OF 1822-1863</scope>
    <scope>FUNCTION (ISOFORM 18)</scope>
    <scope>ACTIVITY REGULATION</scope>
    <scope>SUBCELLULAR LOCATION</scope>
    <scope>TISSUE SPECIFICITY</scope>
    <scope>VARIANT ARG-84</scope>
    <scope>TRANSPORTER ACTIVITY (ISOFORM 18)</scope>
    <source>
        <tissue>Heart</tissue>
    </source>
</reference>
<reference key="3">
    <citation type="journal article" date="1994" name="Genomics">
        <title>Genomic structure of human L-type Ca2+ channel.</title>
        <authorList>
            <person name="Soldatov N.M."/>
        </authorList>
    </citation>
    <scope>NUCLEOTIDE SEQUENCE [GENOMIC DNA]</scope>
    <scope>NUCLEOTIDE SEQUENCE [MRNA] OF 1112-1803 (ISOFORMS 24/27)</scope>
    <scope>NUCLEOTIDE SEQUENCE [MRNA] OF 1364-1972 (ISOFORMS 11/12/19/20/21/22/23/30/31/32)</scope>
    <source>
        <tissue>Hippocampus</tissue>
        <tissue>Lung fibroblast</tissue>
    </source>
</reference>
<reference key="4">
    <citation type="journal article" date="1995" name="J. Biol. Chem.">
        <title>Different voltage-dependent inhibition by dihydropyridines of human Ca2+ channel splice variants.</title>
        <authorList>
            <person name="Soldatov N.M."/>
            <person name="Bouron A."/>
            <person name="Reuter H."/>
        </authorList>
    </citation>
    <scope>NUCLEOTIDE SEQUENCE [MRNA] (ISOFORMS 12; 19 AND 20)</scope>
    <scope>ALTERNATIVE SPLICING</scope>
    <scope>FUNCTION (ISOFORMS 12; 19 AND 20)</scope>
    <scope>ACTIVITY REGULATION(ISOFORMS 12; 19 AND 20)</scope>
    <scope>SUBCELLULAR LOCATION</scope>
    <scope>MUTAGENESIS OF GLY-954 AND TYR-958</scope>
    <scope>TRANSPORTER ACTIVITY (ISOFORMS 12; 19 AND 20)</scope>
    <source>
        <tissue>Fibroblast</tissue>
    </source>
</reference>
<reference key="5">
    <citation type="journal article" date="1997" name="Am. J. Physiol.">
        <title>Properties of three COOH-terminal splice variants of a human cardiac L-type Ca2+-channel alpha1-subunit.</title>
        <authorList>
            <person name="Kloeckner U."/>
            <person name="Mikala G."/>
            <person name="Eisfeld J."/>
            <person name="Iles D.E."/>
            <person name="Strobeck M."/>
            <person name="Mershon J.L."/>
            <person name="Schwartz A."/>
            <person name="Varadi G."/>
        </authorList>
    </citation>
    <scope>NUCLEOTIDE SEQUENCE [GENOMIC DNA / MRNA] (ISOFORMS 16 AND 17)</scope>
    <scope>ALTERNATIVE SPLICING</scope>
    <scope>FUNCTION (ISOFORMS 16 AND 17)</scope>
    <scope>SUBCELLULAR LOCATION</scope>
    <scope>VARIANTS ARG-84; VAL-1869 AND ARG-1893</scope>
    <scope>TRANSPORTER ACTIVITY (ISOFORMS 16 AND 17)</scope>
    <source>
        <tissue>Heart</tissue>
    </source>
</reference>
<reference key="6">
    <citation type="journal article" date="1997" name="J. Biol. Chem.">
        <title>Molecular structures involved in L-type calcium channel inactivation. Role of the carboxyl-terminal region encoded by exons 40-42 in alpha1C subunit in the kinetics and Ca2+ dependence of inactivation.</title>
        <authorList>
            <person name="Soldatov N.M."/>
            <person name="Zuelke R.D."/>
            <person name="Bouron A."/>
            <person name="Reuter H."/>
        </authorList>
    </citation>
    <scope>NUCLEOTIDE SEQUENCE [MRNA] (ISOFORMS 26 AND 27)</scope>
    <scope>ALTERNATIVE SPLICING (ISOFORMS 9 AND 10)</scope>
    <scope>FUNCTION (ISOFORMS 26 AND 27)</scope>
    <scope>SUBCELLULAR LOCATION</scope>
    <scope>TRANSPORTER ACTIVITY (ISOFORMS 26 AND 27)</scope>
    <source>
        <tissue>Hippocampus</tissue>
    </source>
</reference>
<reference key="7">
    <citation type="journal article" date="1998" name="FEBS Lett.">
        <title>Ca2+ channel sensitivity towards the blocker isradipine is affected by alternative splicing of the human alpha1C subunit gene.</title>
        <authorList>
            <person name="Zuehlke R.D."/>
            <person name="Bouron A."/>
            <person name="Soldatov N.M."/>
            <person name="Reuter H."/>
        </authorList>
    </citation>
    <scope>NUCLEOTIDE SEQUENCE [MRNA] (ISOFORMS 21; 22 AND 23)</scope>
    <scope>FUNCTION (ISOFORMS 21; 22 AND 23)</scope>
    <scope>ACTIVITY REGULATION (ISOFORMS 21; 22 AND 23)</scope>
    <scope>SUBCELLULAR LOCATION</scope>
    <scope>TRANSPORTER ACTIVITY (ISOFORMS 21; 22 AND 23)</scope>
</reference>
<reference key="8">
    <citation type="journal article" date="2002" name="Am. J. Physiol.">
        <title>Alpha(1C) (Ca(V)1.2) L-type calcium channel mediates mechanosensitive calcium regulation.</title>
        <authorList>
            <person name="Lyford G.L."/>
            <person name="Strege P.R."/>
            <person name="Shepard A."/>
            <person name="Ou Y."/>
            <person name="Ermilov L."/>
            <person name="Miller S.M."/>
            <person name="Gibbons S.J."/>
            <person name="Rae J.L."/>
            <person name="Szurszewski J.H."/>
            <person name="Farrugia G."/>
        </authorList>
    </citation>
    <scope>NUCLEOTIDE SEQUENCE [MRNA] (ISOFORM 12)</scope>
    <scope>FUNCTION (ISOFORM 12)</scope>
    <scope>ACTIVITY REGULATION</scope>
    <scope>SUBCELLULAR LOCATION</scope>
    <scope>SUBUNIT</scope>
    <scope>INTERACTION WITH CACNB2</scope>
    <scope>TISSUE SPECIFICITY</scope>
    <scope>TRANSPORTER ACTIVITY (ISOFORM 12)</scope>
    <source>
        <tissue>Intestinal smooth muscle</tissue>
    </source>
</reference>
<reference key="9">
    <citation type="journal article" date="2006" name="Proc. Natl. Acad. Sci. U.S.A.">
        <title>Atherosclerosis-related molecular alteration of the human CaV1.2 calcium channel alpha1C subunit.</title>
        <authorList>
            <person name="Tiwari S."/>
            <person name="Zhang Y."/>
            <person name="Heller J."/>
            <person name="Abernethy D.R."/>
            <person name="Soldatov N.M."/>
        </authorList>
    </citation>
    <scope>NUCLEOTIDE SEQUENCE [MRNA] (ISOFORMS 13; 14; 15; 24 AND 25)</scope>
    <scope>FUNCTION (ISOFORMS 13; 14; 15; 24 AND 25)</scope>
    <scope>SUBCELLULAR LOCATION</scope>
    <scope>TISSUE SPECIFICITY</scope>
    <scope>TRANSPORTER ACTIVITY (ISOFORMS 13; 14; 15; 24 AND 25)</scope>
</reference>
<reference key="10">
    <citation type="submission" date="1994-06" db="EMBL/GenBank/DDBJ databases">
        <title>Functional expression of splice variants of human l-type calcium channel (isoform 1 gene).</title>
        <authorList>
            <person name="Soldatov N."/>
        </authorList>
    </citation>
    <scope>NUCLEOTIDE SEQUENCE [MRNA] (ISOFORMS 11; 28; 29; 30; 31; 32 AND 33)</scope>
    <scope>ALTERNATIVE SPLICING</scope>
    <scope>VARIANTS ARG-84; VAL-1869 AND ARG-1893</scope>
</reference>
<reference key="11">
    <citation type="journal article" date="2006" name="Nature">
        <title>The finished DNA sequence of human chromosome 12.</title>
        <authorList>
            <person name="Scherer S.E."/>
            <person name="Muzny D.M."/>
            <person name="Buhay C.J."/>
            <person name="Chen R."/>
            <person name="Cree A."/>
            <person name="Ding Y."/>
            <person name="Dugan-Rocha S."/>
            <person name="Gill R."/>
            <person name="Gunaratne P."/>
            <person name="Harris R.A."/>
            <person name="Hawes A.C."/>
            <person name="Hernandez J."/>
            <person name="Hodgson A.V."/>
            <person name="Hume J."/>
            <person name="Jackson A."/>
            <person name="Khan Z.M."/>
            <person name="Kovar-Smith C."/>
            <person name="Lewis L.R."/>
            <person name="Lozado R.J."/>
            <person name="Metzker M.L."/>
            <person name="Milosavljevic A."/>
            <person name="Miner G.R."/>
            <person name="Montgomery K.T."/>
            <person name="Morgan M.B."/>
            <person name="Nazareth L.V."/>
            <person name="Scott G."/>
            <person name="Sodergren E."/>
            <person name="Song X.-Z."/>
            <person name="Steffen D."/>
            <person name="Lovering R.C."/>
            <person name="Wheeler D.A."/>
            <person name="Worley K.C."/>
            <person name="Yuan Y."/>
            <person name="Zhang Z."/>
            <person name="Adams C.Q."/>
            <person name="Ansari-Lari M.A."/>
            <person name="Ayele M."/>
            <person name="Brown M.J."/>
            <person name="Chen G."/>
            <person name="Chen Z."/>
            <person name="Clerc-Blankenburg K.P."/>
            <person name="Davis C."/>
            <person name="Delgado O."/>
            <person name="Dinh H.H."/>
            <person name="Draper H."/>
            <person name="Gonzalez-Garay M.L."/>
            <person name="Havlak P."/>
            <person name="Jackson L.R."/>
            <person name="Jacob L.S."/>
            <person name="Kelly S.H."/>
            <person name="Li L."/>
            <person name="Li Z."/>
            <person name="Liu J."/>
            <person name="Liu W."/>
            <person name="Lu J."/>
            <person name="Maheshwari M."/>
            <person name="Nguyen B.-V."/>
            <person name="Okwuonu G.O."/>
            <person name="Pasternak S."/>
            <person name="Perez L.M."/>
            <person name="Plopper F.J.H."/>
            <person name="Santibanez J."/>
            <person name="Shen H."/>
            <person name="Tabor P.E."/>
            <person name="Verduzco D."/>
            <person name="Waldron L."/>
            <person name="Wang Q."/>
            <person name="Williams G.A."/>
            <person name="Zhang J."/>
            <person name="Zhou J."/>
            <person name="Allen C.C."/>
            <person name="Amin A.G."/>
            <person name="Anyalebechi V."/>
            <person name="Bailey M."/>
            <person name="Barbaria J.A."/>
            <person name="Bimage K.E."/>
            <person name="Bryant N.P."/>
            <person name="Burch P.E."/>
            <person name="Burkett C.E."/>
            <person name="Burrell K.L."/>
            <person name="Calderon E."/>
            <person name="Cardenas V."/>
            <person name="Carter K."/>
            <person name="Casias K."/>
            <person name="Cavazos I."/>
            <person name="Cavazos S.R."/>
            <person name="Ceasar H."/>
            <person name="Chacko J."/>
            <person name="Chan S.N."/>
            <person name="Chavez D."/>
            <person name="Christopoulos C."/>
            <person name="Chu J."/>
            <person name="Cockrell R."/>
            <person name="Cox C.D."/>
            <person name="Dang M."/>
            <person name="Dathorne S.R."/>
            <person name="David R."/>
            <person name="Davis C.M."/>
            <person name="Davy-Carroll L."/>
            <person name="Deshazo D.R."/>
            <person name="Donlin J.E."/>
            <person name="D'Souza L."/>
            <person name="Eaves K.A."/>
            <person name="Egan A."/>
            <person name="Emery-Cohen A.J."/>
            <person name="Escotto M."/>
            <person name="Flagg N."/>
            <person name="Forbes L.D."/>
            <person name="Gabisi A.M."/>
            <person name="Garza M."/>
            <person name="Hamilton C."/>
            <person name="Henderson N."/>
            <person name="Hernandez O."/>
            <person name="Hines S."/>
            <person name="Hogues M.E."/>
            <person name="Huang M."/>
            <person name="Idlebird D.G."/>
            <person name="Johnson R."/>
            <person name="Jolivet A."/>
            <person name="Jones S."/>
            <person name="Kagan R."/>
            <person name="King L.M."/>
            <person name="Leal B."/>
            <person name="Lebow H."/>
            <person name="Lee S."/>
            <person name="LeVan J.M."/>
            <person name="Lewis L.C."/>
            <person name="London P."/>
            <person name="Lorensuhewa L.M."/>
            <person name="Loulseged H."/>
            <person name="Lovett D.A."/>
            <person name="Lucier A."/>
            <person name="Lucier R.L."/>
            <person name="Ma J."/>
            <person name="Madu R.C."/>
            <person name="Mapua P."/>
            <person name="Martindale A.D."/>
            <person name="Martinez E."/>
            <person name="Massey E."/>
            <person name="Mawhiney S."/>
            <person name="Meador M.G."/>
            <person name="Mendez S."/>
            <person name="Mercado C."/>
            <person name="Mercado I.C."/>
            <person name="Merritt C.E."/>
            <person name="Miner Z.L."/>
            <person name="Minja E."/>
            <person name="Mitchell T."/>
            <person name="Mohabbat F."/>
            <person name="Mohabbat K."/>
            <person name="Montgomery B."/>
            <person name="Moore N."/>
            <person name="Morris S."/>
            <person name="Munidasa M."/>
            <person name="Ngo R.N."/>
            <person name="Nguyen N.B."/>
            <person name="Nickerson E."/>
            <person name="Nwaokelemeh O.O."/>
            <person name="Nwokenkwo S."/>
            <person name="Obregon M."/>
            <person name="Oguh M."/>
            <person name="Oragunye N."/>
            <person name="Oviedo R.J."/>
            <person name="Parish B.J."/>
            <person name="Parker D.N."/>
            <person name="Parrish J."/>
            <person name="Parks K.L."/>
            <person name="Paul H.A."/>
            <person name="Payton B.A."/>
            <person name="Perez A."/>
            <person name="Perrin W."/>
            <person name="Pickens A."/>
            <person name="Primus E.L."/>
            <person name="Pu L.-L."/>
            <person name="Puazo M."/>
            <person name="Quiles M.M."/>
            <person name="Quiroz J.B."/>
            <person name="Rabata D."/>
            <person name="Reeves K."/>
            <person name="Ruiz S.J."/>
            <person name="Shao H."/>
            <person name="Sisson I."/>
            <person name="Sonaike T."/>
            <person name="Sorelle R.P."/>
            <person name="Sutton A.E."/>
            <person name="Svatek A.F."/>
            <person name="Svetz L.A."/>
            <person name="Tamerisa K.S."/>
            <person name="Taylor T.R."/>
            <person name="Teague B."/>
            <person name="Thomas N."/>
            <person name="Thorn R.D."/>
            <person name="Trejos Z.Y."/>
            <person name="Trevino B.K."/>
            <person name="Ukegbu O.N."/>
            <person name="Urban J.B."/>
            <person name="Vasquez L.I."/>
            <person name="Vera V.A."/>
            <person name="Villasana D.M."/>
            <person name="Wang L."/>
            <person name="Ward-Moore S."/>
            <person name="Warren J.T."/>
            <person name="Wei X."/>
            <person name="White F."/>
            <person name="Williamson A.L."/>
            <person name="Wleczyk R."/>
            <person name="Wooden H.S."/>
            <person name="Wooden S.H."/>
            <person name="Yen J."/>
            <person name="Yoon L."/>
            <person name="Yoon V."/>
            <person name="Zorrilla S.E."/>
            <person name="Nelson D."/>
            <person name="Kucherlapati R."/>
            <person name="Weinstock G."/>
            <person name="Gibbs R.A."/>
        </authorList>
    </citation>
    <scope>NUCLEOTIDE SEQUENCE [LARGE SCALE GENOMIC DNA]</scope>
</reference>
<reference key="12">
    <citation type="journal article" date="2004" name="Genome Res.">
        <title>The status, quality, and expansion of the NIH full-length cDNA project: the Mammalian Gene Collection (MGC).</title>
        <authorList>
            <consortium name="The MGC Project Team"/>
        </authorList>
    </citation>
    <scope>NUCLEOTIDE SEQUENCE [LARGE SCALE MRNA] (ISOFORM 35)</scope>
    <source>
        <tissue>Brain</tissue>
    </source>
</reference>
<reference key="13">
    <citation type="journal article" date="2002" name="J. Biol. Chem.">
        <title>A novel long N-terminal isoform of human L-type Ca2+ channel is up-regulated by protein kinase C.</title>
        <authorList>
            <person name="Blumenstein Y."/>
            <person name="Kanevsky N."/>
            <person name="Sahar G."/>
            <person name="Barzilai R."/>
            <person name="Ivanina T."/>
            <person name="Dascal N."/>
        </authorList>
    </citation>
    <scope>NUCLEOTIDE SEQUENCE [MRNA] OF 1-180 (ISOFORM 34)</scope>
    <scope>FUNCTION (ISOFORM 34)</scope>
    <scope>SUBCELLULAR LOCATION</scope>
    <scope>SUBUNIT</scope>
    <scope>INTERACTION WITH CACNB2</scope>
    <scope>TRANSPORTER ACTIVITY (ISOFORM 34)</scope>
</reference>
<reference key="14">
    <citation type="journal article" date="1990" name="J. Biol. Chem.">
        <title>Molecular diversity of L-type calcium channels. Evidence for alternative splicing of the transcripts of three non-allelic genes.</title>
        <authorList>
            <person name="Perez-Reyes E."/>
            <person name="Wei X."/>
            <person name="Castellano A."/>
            <person name="Birnbaumer L."/>
        </authorList>
    </citation>
    <scope>NUCLEOTIDE SEQUENCE [MRNA] OF 1182-1503 (ISOFORMS 6/12/20/23/24)</scope>
    <scope>NUCLEOTIDE SEQUENCE [MRNA] OF 1182-1503 (ISOFORMS 7/13/16/17/18/21/22)</scope>
    <source>
        <tissue>Heart</tissue>
    </source>
</reference>
<reference key="15">
    <citation type="journal article" date="1991" name="Genomics">
        <title>Assignment of the human gene for the alpha 1 subunit of the cardiac DHP-sensitive Ca2+ channel (CCHL1A1) to chromosome 12p12-pter.</title>
        <authorList>
            <person name="Powers P.A."/>
            <person name="Gregg R.G."/>
            <person name="Lalley P.A."/>
            <person name="Liao M."/>
            <person name="Hogan K."/>
        </authorList>
    </citation>
    <scope>NUCLEOTIDE SEQUENCE [GENOMIC DNA] OF 1140-1206</scope>
    <source>
        <tissue>Heart</tissue>
    </source>
</reference>
<reference key="16">
    <citation type="journal article" date="1992" name="Genomics">
        <title>Mapping of a human brain voltage-gated calcium channel to human chromosome 12p13-pter.</title>
        <authorList>
            <person name="Sun W."/>
            <person name="McPherson J.D."/>
            <person name="Hoang D.Q."/>
            <person name="Wasmuth J.J."/>
            <person name="Evans G.A."/>
            <person name="Montal M."/>
        </authorList>
    </citation>
    <scope>NUCLEOTIDE SEQUENCE [GENOMIC DNA] OF 1196-1421</scope>
    <source>
        <tissue>Brain</tissue>
    </source>
</reference>
<reference key="17">
    <citation type="journal article" date="1993" name="J. Biol. Chem.">
        <title>Molecular localization of ion selectivity sites within the pore of a human L-type cardiac calcium channel.</title>
        <authorList>
            <person name="Tang S."/>
            <person name="Mikala G."/>
            <person name="Bahinski A."/>
            <person name="Yatani A."/>
            <person name="Varadi G."/>
            <person name="Schwartz A."/>
        </authorList>
    </citation>
    <scope>FUNCTION</scope>
    <scope>SUBCELLULAR LOCATION</scope>
    <scope>ACTIVITY REGULATION</scope>
    <scope>MUTAGENESIS OF GLU-363; GLU-1135 AND GLU-1464</scope>
    <scope>CALCIUM-BINDING</scope>
    <scope>SITE</scope>
    <scope>TRANSPORTER ACTIVITY</scope>
    <scope>CHARACTERIZATION OF VARIANT TS LYS-1135</scope>
</reference>
<reference key="18">
    <citation type="journal article" date="2002" name="Mol. Pharmacol.">
        <title>Molecular cloning and characterization of the human voltage-gated calcium channel alpha(2)delta-4 subunit.</title>
        <authorList>
            <person name="Qin N."/>
            <person name="Yagel S."/>
            <person name="Momplaisir M.-L."/>
            <person name="Codd E.E."/>
            <person name="D'Andrea M.R."/>
        </authorList>
    </citation>
    <scope>INTERACTION WITH CACNA2D4</scope>
    <scope>IDENTIFICATION IN A COMPLEX WITH CACNB3 AND CACNA2D4</scope>
    <scope>SUBUNIT</scope>
    <scope>FUNCTION</scope>
    <scope>SUBCELLULAR LOCATION</scope>
    <scope>TRANSPORTER ACTIVITY</scope>
</reference>
<reference key="19">
    <citation type="journal article" date="2004" name="J. Neurosci.">
        <title>Ca2+-binding protein-1 facilitates and forms a postsynaptic complex with Cav1.2 (L-type) Ca2+ channels.</title>
        <authorList>
            <person name="Zhou H."/>
            <person name="Kim S.-A."/>
            <person name="Kirk E.A."/>
            <person name="Tippens A.L."/>
            <person name="Sun H."/>
            <person name="Haeseleer F."/>
            <person name="Lee A."/>
        </authorList>
    </citation>
    <scope>INTERACTION WITH CABP1</scope>
</reference>
<reference key="20">
    <citation type="journal article" date="2005" name="J. Biol. Chem.">
        <title>Molecular mechanism for divergent regulation of Cav1.2 Ca2+ channels by calmodulin and Ca2+-binding protein-1.</title>
        <authorList>
            <person name="Zhou H."/>
            <person name="Yu K."/>
            <person name="McCoy K.L."/>
            <person name="Lee A."/>
        </authorList>
    </citation>
    <scope>INTERACTION WITH CABP1</scope>
</reference>
<reference key="21">
    <citation type="journal article" date="2017" name="Proc. Natl. Acad. Sci. U.S.A.">
        <title>Structural insights into binding of STAC proteins to voltage-gated calcium channels.</title>
        <authorList>
            <person name="Wong King Yuen S.M."/>
            <person name="Campiglio M."/>
            <person name="Tung C.C."/>
            <person name="Flucher B.E."/>
            <person name="Van Petegem F."/>
        </authorList>
    </citation>
    <scope>FUNCTION</scope>
    <scope>ACTIVITY REGULATION</scope>
    <scope>SUBCELLULAR LOCATION</scope>
    <scope>SUBUNIT</scope>
    <scope>INTERACTION WITH STAC2 AND STAC3</scope>
    <scope>TRANSPORTER ACTIVITY</scope>
</reference>
<reference key="22">
    <citation type="journal article" date="2017" name="Sci. Signal.">
        <title>Ser1928 phosphorylation by PKA stimulates the L-type Ca2+ channel CaV1.2 and vasoconstriction during acute hyperglycemia and diabetes.</title>
        <authorList>
            <person name="Nystoriak M.A."/>
            <person name="Nieves-Cintron M."/>
            <person name="Patriarchi T."/>
            <person name="Buonarati O.R."/>
            <person name="Prada M.P."/>
            <person name="Morotti S."/>
            <person name="Grandi E."/>
            <person name="Fernandes J.D."/>
            <person name="Forbush K."/>
            <person name="Hofmann F."/>
            <person name="Sasse K.C."/>
            <person name="Scott J.D."/>
            <person name="Ward S.M."/>
            <person name="Hell J.W."/>
            <person name="Navedo M.F."/>
        </authorList>
    </citation>
    <scope>PHOSPHORYLATION AT SER-1981 BY PKA</scope>
    <scope>FUNCTION</scope>
    <scope>TRANSPORTER ACTIVITY</scope>
</reference>
<reference key="23">
    <citation type="journal article" date="2018" name="Biophys. J.">
        <title>Alternative Splicing at N Terminus and Domain I Modulates CaV1.2 Inactivation and Surface Expression.</title>
        <authorList>
            <person name="Bartels P."/>
            <person name="Yu D."/>
            <person name="Huang H."/>
            <person name="Hu Z."/>
            <person name="Herzig S."/>
            <person name="Soong T.W."/>
        </authorList>
    </citation>
    <scope>FUNCTION</scope>
    <scope>ACTIVITY REGULATION</scope>
    <scope>ALTERNATIVE SPLICING</scope>
    <scope>INTERACTION WITH CALM1; CACNA2D1; CACNB2 AND CACNB3</scope>
    <scope>SUBUNIT</scope>
    <scope>SUBCELLULAR LOCATION</scope>
</reference>
<reference key="24">
    <citation type="journal article" date="2018" name="Cell Host Microbe">
        <title>Channel Binds Hemagglutinin and Mediates Influenza A Virus Entry into Mammalian Cells.</title>
        <authorList>
            <person name="Fujioka Y."/>
            <person name="Nishide S."/>
            <person name="Ose T."/>
            <person name="Suzuki T."/>
            <person name="Kato I."/>
            <person name="Fukuhara H."/>
            <person name="Fujioka M."/>
            <person name="Horiuchi K."/>
            <person name="Satoh A.O."/>
            <person name="Nepal P."/>
            <person name="Kashiwagi S."/>
            <person name="Wang J."/>
            <person name="Horiguchi M."/>
            <person name="Sato Y."/>
            <person name="Paudel S."/>
            <person name="Nanbo A."/>
            <person name="Miyazaki T."/>
            <person name="Hasegawa H."/>
            <person name="Maenaka K."/>
            <person name="Ohba Y."/>
        </authorList>
    </citation>
    <scope>FUNCTION (MICROBIAL INFECTION)</scope>
    <scope>INTERACTION WITH INFLUENZAVIRUS H1 HEMAGGLUTININ (MICROBIAL INFECTION)</scope>
</reference>
<reference key="25">
    <citation type="journal article" date="2004" name="Nature">
        <title>Structure of a complex between a voltage-gated calcium channel beta-subunit and an alpha-subunit domain.</title>
        <authorList>
            <person name="Van Petegem F."/>
            <person name="Clark K.A."/>
            <person name="Chatelain F.C."/>
            <person name="Minor D.L. Jr."/>
        </authorList>
    </citation>
    <scope>X-RAY CRYSTALLOGRAPHY (2.0 ANGSTROMS) OF 428-445 IN COMPLEX WITH CACNB2</scope>
</reference>
<reference evidence="61" key="26">
    <citation type="journal article" date="2005" name="Nat. Struct. Mol. Biol.">
        <title>Insights into voltage-gated calcium channel regulation from the structure of the CaV1.2 IQ domain-Ca2+/calmodulin complex.</title>
        <authorList>
            <person name="Van Petegem F."/>
            <person name="Chatelain F.C."/>
            <person name="Minor D.L. Jr."/>
        </authorList>
    </citation>
    <scope>X-RAY CRYSTALLOGRAPHY (2.00 ANGSTROMS) OF 1659-1692</scope>
    <scope>FUNCTION</scope>
    <scope>SUBCELLULAR LOCATION</scope>
    <scope>INTERACTION WITH CALM1</scope>
    <scope>MUTAGENESIS OF 1666-PHE--PHE-1670 AND ILE-1672</scope>
    <scope>TRANSPORTER ACTIVITY</scope>
</reference>
<reference evidence="62" key="27">
    <citation type="journal article" date="2005" name="Structure">
        <title>Structure of calmodulin bound to the hydrophobic IQ domain of the cardiac Ca(v)1.2 calcium channel.</title>
        <authorList>
            <person name="Fallon J.L."/>
            <person name="Halling D.B."/>
            <person name="Hamilton S.L."/>
            <person name="Quiocho F.A."/>
        </authorList>
    </citation>
    <scope>X-RAY CRYSTALLOGRAPHY (1.60 ANGSTROMS) OF 1665-1685 IN COMPLEX WITH CALM1</scope>
</reference>
<reference evidence="64" key="28">
    <citation type="journal article" date="2009" name="Proc. Natl. Acad. Sci. U.S.A.">
        <title>Crystal structure of dimeric cardiac L-type calcium channel regulatory domains bridged by Ca2+* calmodulins.</title>
        <authorList>
            <person name="Fallon J.L."/>
            <person name="Baker M.R."/>
            <person name="Xiong L."/>
            <person name="Loy R.E."/>
            <person name="Yang G."/>
            <person name="Dirksen R.T."/>
            <person name="Hamilton S.L."/>
            <person name="Quiocho F.A."/>
        </authorList>
    </citation>
    <scope>X-RAY CRYSTALLOGRAPHY (2.10 ANGSTROMS) OF 1609-1682 IN COMPLEX WITH CALM1</scope>
</reference>
<reference evidence="65" key="29">
    <citation type="journal article" date="2010" name="EMBO J.">
        <title>Multiple C-terminal tail Ca(2+)/CaMs regulate Ca(V)1.2 function but do not mediate channel dimerization.</title>
        <authorList>
            <person name="Kim E.Y."/>
            <person name="Rumpf C.H."/>
            <person name="Van Petegem F."/>
            <person name="Arant R.J."/>
            <person name="Findeisen F."/>
            <person name="Cooley E.S."/>
            <person name="Isacoff E.Y."/>
            <person name="Minor D.L. Jr."/>
        </authorList>
    </citation>
    <scope>X-RAY CRYSTALLOGRAPHY (2.55 ANGSTROMS) OF 1609-1685 IN COMPLEX WITH CALM1</scope>
    <scope>FUNCTION</scope>
    <scope>SUBCELLULAR LOCATION</scope>
    <scope>SUBUNIT</scope>
    <scope>INTERACTION WITH CACNB2 AND CACNA2D1</scope>
    <scope>MUTAGENESIS OF LEU-1610</scope>
    <scope>TRANSPORTER ACTIVITY</scope>
</reference>
<reference evidence="63" key="30">
    <citation type="journal article" date="2012" name="Front. Mol. Neurosci.">
        <title>Structural basis for the regulation of L-type voltage-gated calcium channels: interactions between the N-terminal cytoplasmic domain and Ca(2+)-calmodulin.</title>
        <authorList>
            <person name="Liu Z."/>
            <person name="Vogel H.J."/>
        </authorList>
    </citation>
    <scope>STRUCTURE BY NMR OF 47-68 IN COMPLEX WITH CALMODULIN</scope>
    <scope>INTERACTION WITH CALM1</scope>
</reference>
<reference key="31">
    <citation type="journal article" date="2004" name="Cell">
        <title>Ca(V)1.2 calcium channel dysfunction causes a multisystem disorder including arrhythmia and autism.</title>
        <authorList>
            <person name="Splawski I."/>
            <person name="Timothy K.W."/>
            <person name="Sharpe L.M."/>
            <person name="Decher N."/>
            <person name="Kumar P."/>
            <person name="Bloise R."/>
            <person name="Napolitano C."/>
            <person name="Schwartz P.J."/>
            <person name="Joseph R.M."/>
            <person name="Condouris K."/>
            <person name="Tager-Flusberg H."/>
            <person name="Priori S.G."/>
            <person name="Sanguinetti M.C."/>
            <person name="Keating M.T."/>
        </authorList>
    </citation>
    <scope>VARIANT TS ARG-406</scope>
    <scope>CHARACTERIZATION OF VARIANT TS ARG-406</scope>
    <scope>FUNCTION</scope>
    <scope>SUBCELLULAR LOCATION</scope>
    <scope>TISSUE SPECIFICITY</scope>
    <scope>TRANSPORTER ACTIVITY</scope>
</reference>
<reference key="32">
    <citation type="journal article" date="2005" name="Proc. Natl. Acad. Sci. U.S.A.">
        <title>Severe arrhythmia disorder caused by cardiac L-type calcium channel mutations.</title>
        <authorList>
            <person name="Splawski I."/>
            <person name="Timothy K.W."/>
            <person name="Decher N."/>
            <person name="Kumar P."/>
            <person name="Sachse F.B."/>
            <person name="Beggs A.H."/>
            <person name="Sanguinetti M.C."/>
            <person name="Keating M.T."/>
        </authorList>
    </citation>
    <scope>VARIANT TS SER-402</scope>
    <scope>FUNCTION</scope>
    <scope>SUBCELLULAR LOCATION</scope>
    <scope>INTERACTION WITH CACNB2 AND CACNA2D1</scope>
    <scope>SUBUNIT</scope>
    <scope>TRANSPORTER ACTIVITY</scope>
</reference>
<reference key="33">
    <citation type="journal article" date="2007" name="Circulation">
        <title>Loss-of-function mutations in the cardiac calcium channel underlie a new clinical entity characterized by ST-segment elevation, short QT intervals, and sudden cardiac death.</title>
        <authorList>
            <person name="Antzelevitch C."/>
            <person name="Pollevick G.D."/>
            <person name="Cordeiro J.M."/>
            <person name="Casis O."/>
            <person name="Sanguinetti M.C."/>
            <person name="Aizawa Y."/>
            <person name="Guerchicoff A."/>
            <person name="Pfeiffer R."/>
            <person name="Oliva A."/>
            <person name="Wollnik B."/>
            <person name="Gelber P."/>
            <person name="Bonaros E.P. Jr."/>
            <person name="Burashnikov E."/>
            <person name="Wu Y."/>
            <person name="Sargent J.D."/>
            <person name="Schickel S."/>
            <person name="Oberheiden R."/>
            <person name="Bhatia A."/>
            <person name="Hsu L.F."/>
            <person name="Haissaguerre M."/>
            <person name="Schimpf R."/>
            <person name="Borggrefe M."/>
            <person name="Wolpert C."/>
        </authorList>
    </citation>
    <scope>VARIANTS BRGDA3 VAL-39 AND ARG-490</scope>
    <scope>CHARACTERIZATION OF VARIANTS BRGDA3 VAL-39 AND ARG-490</scope>
    <scope>FUNCTION</scope>
    <scope>SUBCELLULAR LOCATION</scope>
    <scope>INTERACTION WITH CACNB2</scope>
    <scope>SUBUNIT</scope>
    <scope>TRANSPORTER ACTIVITY</scope>
</reference>
<reference key="34">
    <citation type="journal article" date="2010" name="Heart Rhythm">
        <title>Mutations in the cardiac L-type calcium channel associated with inherited J-wave syndromes and sudden cardiac death.</title>
        <authorList>
            <person name="Burashnikov E."/>
            <person name="Pfeiffer R."/>
            <person name="Barajas-Martinez H."/>
            <person name="Delpon E."/>
            <person name="Hu D."/>
            <person name="Desai M."/>
            <person name="Borggrefe M."/>
            <person name="Haeissaguerre M."/>
            <person name="Kanter R."/>
            <person name="Pollevick G.D."/>
            <person name="Guerchicoff A."/>
            <person name="Laino R."/>
            <person name="Marieb M."/>
            <person name="Nademanee K."/>
            <person name="Nam G.B."/>
            <person name="Robles R."/>
            <person name="Schimpf R."/>
            <person name="Stapleton D.D."/>
            <person name="Viskin S."/>
            <person name="Winters S."/>
            <person name="Wolpert C."/>
            <person name="Zimmern S."/>
            <person name="Veltmann C."/>
            <person name="Antzelevitch C."/>
        </authorList>
    </citation>
    <scope>VARIANTS BRGDA3 VAL-39; ARG-490; LYS-1135; GLU-GLU-THR-SER-GLN-1916 INS; CYS-1920; GLN-1963; ILE-2097 AND ASN-2213</scope>
    <scope>CHARACTERIZATION OF VARIANT BRGDA3 ILE-2097</scope>
    <scope>VARIANTS ARG-37; SER-817; GLU-850 DEL; GLY-1765; MET-1835 AND GLN-2056</scope>
</reference>
<reference key="35">
    <citation type="journal article" date="2011" name="Nature">
        <title>Exome sequencing identifies frequent mutation of the SWI/SNF complex gene PBRM1 in renal carcinoma.</title>
        <authorList>
            <person name="Varela I."/>
            <person name="Tarpey P."/>
            <person name="Raine K."/>
            <person name="Huang D."/>
            <person name="Ong C.K."/>
            <person name="Stephens P."/>
            <person name="Davies H."/>
            <person name="Jones D."/>
            <person name="Lin M.L."/>
            <person name="Teague J."/>
            <person name="Bignell G."/>
            <person name="Butler A."/>
            <person name="Cho J."/>
            <person name="Dalgliesh G.L."/>
            <person name="Galappaththige D."/>
            <person name="Greenman C."/>
            <person name="Hardy C."/>
            <person name="Jia M."/>
            <person name="Latimer C."/>
            <person name="Lau K.W."/>
            <person name="Marshall J."/>
            <person name="McLaren S."/>
            <person name="Menzies A."/>
            <person name="Mudie L."/>
            <person name="Stebbings L."/>
            <person name="Largaespada D.A."/>
            <person name="Wessels L.F.A."/>
            <person name="Richard S."/>
            <person name="Kahnoski R.J."/>
            <person name="Anema J."/>
            <person name="Tuveson D.A."/>
            <person name="Perez-Mancera P.A."/>
            <person name="Mustonen V."/>
            <person name="Fischer A."/>
            <person name="Adams D.J."/>
            <person name="Rust A."/>
            <person name="Chan-On W."/>
            <person name="Subimerb C."/>
            <person name="Dykema K."/>
            <person name="Furge K."/>
            <person name="Campbell P.J."/>
            <person name="Teh B.T."/>
            <person name="Stratton M.R."/>
            <person name="Futreal P.A."/>
        </authorList>
    </citation>
    <scope>VARIANT ARG-878</scope>
</reference>
<reference key="36">
    <citation type="journal article" date="2013" name="Circ. Cardiovasc. Genet.">
        <title>Exome sequencing and systems biology converge to identify novel mutations in the L-type calcium channel, CACNA1C, linked to autosomal dominant long QT syndrome.</title>
        <authorList>
            <person name="Boczek N.J."/>
            <person name="Best J.M."/>
            <person name="Tester D.J."/>
            <person name="Giudicessi J.R."/>
            <person name="Middha S."/>
            <person name="Evans J.M."/>
            <person name="Kamp T.J."/>
            <person name="Ackerman M.J."/>
        </authorList>
    </citation>
    <scope>VARIANTS LQT8 GLU-834; ARG-857; LEU-857 AND GLN-1989</scope>
    <scope>CHARACTERIZATION OF VARIANT LQT8 ARG-857</scope>
    <scope>FUNCTION</scope>
    <scope>INVOLVEMENT IN LQT8</scope>
    <scope>TRANSPORTER ACTIVITY</scope>
</reference>
<reference key="37">
    <citation type="journal article" date="2014" name="Europace">
        <title>Long QT syndrome type 8: novel CACNA1C mutations causing QT prolongation and variant phenotypes.</title>
        <authorList>
            <person name="Fukuyama M."/>
            <person name="Wang Q."/>
            <person name="Kato K."/>
            <person name="Ohno S."/>
            <person name="Ding W.G."/>
            <person name="Toyoda F."/>
            <person name="Itoh H."/>
            <person name="Kimura H."/>
            <person name="Makiyama T."/>
            <person name="Ito M."/>
            <person name="Matsuura H."/>
            <person name="Horie M."/>
        </authorList>
    </citation>
    <scope>VARIANTS LQT8 SER-381; ILE-456; ASP-582; HIS-858 AND CYS-1831</scope>
    <scope>CHARACTERIZATION OF VARIANTS LQT8 SER-381; ILE-456; ASP-582; HIS-858 AND CYS-1831</scope>
    <scope>FUNCTION</scope>
    <scope>SUBUNIT</scope>
    <scope>SUBCELLULAR LOCATION</scope>
    <scope>INTERACTION WITH CACNB2 AND CACNA2D1</scope>
    <scope>TRANSPORTER ACTIVITY</scope>
</reference>
<reference key="38">
    <citation type="journal article" date="2015" name="Circ. Arrhythm. Electrophysiol.">
        <title>Identification and functional characterization of a novel CACNA1C-mediated cardiac disorder characterized by prolonged QT intervals with hypertrophic cardiomyopathy, congenital heart defects, and sudden cardiac death.</title>
        <authorList>
            <person name="Boczek N.J."/>
            <person name="Ye D."/>
            <person name="Jin F."/>
            <person name="Tester D.J."/>
            <person name="Huseby A."/>
            <person name="Bos J.M."/>
            <person name="Johnson A.J."/>
            <person name="Kanter R."/>
            <person name="Ackerman M.J."/>
        </authorList>
    </citation>
    <scope>VARIANTS TS CYS-518 AND HIS-518</scope>
    <scope>CHARACTERIZATION OF VARIANTS TS CYS-518 AND HIS-518</scope>
    <scope>FUNCTION</scope>
    <scope>SUBCELLULAR LOCATION</scope>
    <scope>TRANSPORTER ACTIVITY</scope>
</reference>
<reference key="39">
    <citation type="journal article" date="2015" name="Heart Rhythm">
        <title>Novel Timothy syndrome mutation leading to increase in CACNA1C window current.</title>
        <authorList>
            <person name="Boczek N.J."/>
            <person name="Miller E.M."/>
            <person name="Ye D."/>
            <person name="Nesterenko V.V."/>
            <person name="Tester D.J."/>
            <person name="Antzelevitch C."/>
            <person name="Czosek R.J."/>
            <person name="Ackerman M.J."/>
            <person name="Ware S.M."/>
        </authorList>
    </citation>
    <scope>VARIANT TS THR-1186</scope>
    <scope>CHARACTERIZATION OF VARIANT TS THR-1186</scope>
    <scope>FUNCTION</scope>
    <scope>TRANSPORTER ACTIVITY</scope>
</reference>
<reference key="40">
    <citation type="journal article" date="2015" name="J. Mol. Cell. Cardiol.">
        <title>Gain-of-function mutations in the calcium channel CACNA1C (Cav1.2) cause non-syndromic long-QT but not Timothy syndrome.</title>
        <authorList>
            <person name="Wemhoener K."/>
            <person name="Friedrich C."/>
            <person name="Stallmeyer B."/>
            <person name="Coffey A.J."/>
            <person name="Grace A."/>
            <person name="Zumhagen S."/>
            <person name="Seebohm G."/>
            <person name="Ortiz-Bonnin B."/>
            <person name="Rinne S."/>
            <person name="Sachse F.B."/>
            <person name="Schulze-Bahr E."/>
            <person name="Decher N."/>
        </authorList>
    </citation>
    <scope>VARIANTS LQT8 THR-28; LYS-477; GLY-860; THR-1186; VAL-1186; THR-1365; MET-1523; LYS-1544; ASN-1787; ILE-1800; LYS-1948; MET-1953; ASN-2081; ILE-2097 AND GLY-2122</scope>
    <scope>CHARACTERIZATION OF VARIANTS LQT8 THR-28; GLY-860; THR-1186; VAL-1186; MET-1523 AND LYS-1544</scope>
    <scope>VARIANTS ARG-37; THR-304; SER-817; ILE-1755; GLY-1765; MET-1835; ARG-1843; CYS-1972; GLN-2056 AND SER-2174</scope>
    <scope>FUNCTION</scope>
    <scope>TRANSPORTER ACTIVITY</scope>
</reference>
<reference key="41">
    <citation type="journal article" date="2015" name="Neuron">
        <title>Targeted DNA Sequencing from Autism Spectrum Disorder Brains Implicates Multiple Genetic Mechanisms.</title>
        <authorList>
            <person name="D'Gama A.M."/>
            <person name="Pochareddy S."/>
            <person name="Li M."/>
            <person name="Jamuar S.S."/>
            <person name="Reiff R.E."/>
            <person name="Lam A.T."/>
            <person name="Sestan N."/>
            <person name="Walsh C.A."/>
        </authorList>
    </citation>
    <scope>VARIANT HIS-1159</scope>
</reference>
<reference key="42">
    <citation type="journal article" date="2016" name="Congenit. Heart Dis.">
        <title>Molecular and functional characterization of rare CACNA1C variants in sudden unexplained death in the young.</title>
        <authorList>
            <person name="Sutphin B.S."/>
            <person name="Boczek N.J."/>
            <person name="Barajas-Martinez H."/>
            <person name="Hu D."/>
            <person name="Ye D."/>
            <person name="Tester D.J."/>
            <person name="Antzelevitch C."/>
            <person name="Ackerman M.J."/>
        </authorList>
    </citation>
    <scope>VARIANTS GLU-850 DEL AND SER-2091</scope>
    <scope>CHARACTERIZATION OF VARIANTS GLU-850 DEL AND SER-2091</scope>
    <scope>FUNCTION</scope>
    <scope>SUBCELLULAR LOCATION</scope>
    <scope>TRANSPORTER ACTIVITY</scope>
</reference>
<reference key="43">
    <citation type="journal article" date="2018" name="Am. J. Med. Genet. A">
        <title>Expanding clinical phenotype in CACNA1C related disorders: From neonatal onset severe epileptic encephalopathy to late-onset epilepsy.</title>
        <authorList>
            <person name="Bozarth X."/>
            <person name="Dines J.N."/>
            <person name="Cong Q."/>
            <person name="Mirzaa G.M."/>
            <person name="Foss K."/>
            <person name="Lawrence Merritt J. II"/>
            <person name="Thies J."/>
            <person name="Mefford H.C."/>
            <person name="Novotny E."/>
        </authorList>
    </citation>
    <scope>INVOLVEMENT IN NEDHLSS</scope>
    <scope>VARIANT NEDHLSS MET-1411</scope>
</reference>
<reference key="44">
    <citation type="journal article" date="2018" name="HeartRhythm Case Rep.">
        <title>A novel CACNA1C mutation identified in a patient with Timothy syndrome without syndactyly exerts both marked loss- and gain-of-function effects.</title>
        <authorList>
            <person name="Ozawa J."/>
            <person name="Ohno S."/>
            <person name="Saito H."/>
            <person name="Saitoh A."/>
            <person name="Matsuura H."/>
            <person name="Horie M."/>
        </authorList>
    </citation>
    <scope>VARIANT TS PHE-643</scope>
    <scope>CHARACTERIZATION OF VARIANT TS PHE-643</scope>
    <scope>FUNCTION</scope>
    <scope>TRANSPORTER ACTIVITY</scope>
</reference>
<reference key="45">
    <citation type="journal article" date="2019" name="Circ. Genom. Precis. Med.">
        <title>Characterization of the CACNA1C-R518C Missense Mutation in the Pathobiology of Long-QT Syndrome Using Human Induced Pluripotent Stem Cell Cardiomyocytes Shows Action Potential Prolongation and L-Type Calcium Channel Perturbation.</title>
        <authorList>
            <person name="Estes S.I."/>
            <person name="Ye D."/>
            <person name="Zhou W."/>
            <person name="Dotzler S.M."/>
            <person name="Tester D.J."/>
            <person name="Bos J.M."/>
            <person name="Kim C.S.J."/>
            <person name="Ackerman M.J."/>
        </authorList>
    </citation>
    <scope>VARIANT TS CYS-518</scope>
    <scope>CHARACTERIZATION OF VARIANT TS CYS-518</scope>
    <scope>FUNCTION</scope>
    <scope>TRANSPORTER ACTIVITY</scope>
</reference>
<reference key="46">
    <citation type="journal article" date="2019" name="Heart Rhythm">
        <title>A pore-localizing CACNA1C-E1115K missense mutation, identified in a patient with idiopathic QT prolongation, bradycardia, and autism spectrum disorder, converts the L-type calcium channel into a hybrid nonselective monovalent cation channel.</title>
        <authorList>
            <person name="Ye D."/>
            <person name="Tester D.J."/>
            <person name="Zhou W."/>
            <person name="Papagiannis J."/>
            <person name="Ackerman M.J."/>
        </authorList>
    </citation>
    <scope>VARIANT TS LYS-1135</scope>
    <scope>CHARACTERIZATION OF VARIANT TS LYS-1135</scope>
    <scope>FUNCTION</scope>
    <scope>TRANSPORTER ACTIVITY</scope>
</reference>
<reference key="47">
    <citation type="journal article" date="2019" name="Mol. Genet. Genomic Med.">
        <title>Penetrance and expressivity of the R858H CACNA1C variant in a five-generation pedigree segregating an arrhythmogenic channelopathy.</title>
        <authorList>
            <person name="Gardner R.J.M."/>
            <person name="Crozier I.G."/>
            <person name="Binfield A.L."/>
            <person name="Love D.R."/>
            <person name="Lehnert K."/>
            <person name="Gibson K."/>
            <person name="Lintott C.J."/>
            <person name="Snell R.G."/>
            <person name="Jacobsen J.C."/>
            <person name="Jones P.P."/>
            <person name="Waddell-Smith K.E."/>
            <person name="Kennedy M.A."/>
            <person name="Skinner J.R."/>
        </authorList>
    </citation>
    <scope>VARIANT LQT8 HIS-858</scope>
</reference>
<reference key="48">
    <citation type="journal article" date="2021" name="Genet. Med.">
        <title>Phenotypic expansion of CACNA1C-associated disorders to include isolated neurological manifestations.</title>
        <authorList>
            <consortium name="Undiagnosed Diseases Network"/>
            <person name="Rodan L.H."/>
            <person name="Spillmann R.C."/>
            <person name="Kurata H.T."/>
            <person name="Lamothe S.M."/>
            <person name="Maghera J."/>
            <person name="Jamra R.A."/>
            <person name="Alkelai A."/>
            <person name="Antonarakis S.E."/>
            <person name="Atallah I."/>
            <person name="Bar-Yosef O."/>
            <person name="Bilan F."/>
            <person name="Bjorgo K."/>
            <person name="Blanc X."/>
            <person name="Van Bogaert P."/>
            <person name="Bolkier Y."/>
            <person name="Burrage L.C."/>
            <person name="Christ B.U."/>
            <person name="Granadillo J.L."/>
            <person name="Dickson P."/>
            <person name="Donald K.A."/>
            <person name="Dubourg C."/>
            <person name="Eliyahu A."/>
            <person name="Emrick L."/>
            <person name="Engleman K."/>
            <person name="Gonfiantini M.V."/>
            <person name="Good J.M."/>
            <person name="Kalser J."/>
            <person name="Kloeckner C."/>
            <person name="Lachmeijer G."/>
            <person name="Macchiaiolo M."/>
            <person name="Nicita F."/>
            <person name="Odent S."/>
            <person name="O'Heir E."/>
            <person name="Ortiz-Gonzalez X."/>
            <person name="Pacio-Miguez M."/>
            <person name="Palomares-Bralo M."/>
            <person name="Pena L."/>
            <person name="Platzer K."/>
            <person name="Quinodoz M."/>
            <person name="Ranza E."/>
            <person name="Rosenfeld J.A."/>
            <person name="Roulet-Perez E."/>
            <person name="Santani A."/>
            <person name="Santos-Simarro F."/>
            <person name="Pode-Shakked B."/>
            <person name="Skraban C."/>
            <person name="Slaugh R."/>
            <person name="Superti-Furga A."/>
            <person name="Thiffault I."/>
            <person name="van Jaabrsveld R.H."/>
            <person name="Vincent M."/>
            <person name="Wang H.G."/>
            <person name="Zacher P."/>
            <person name="Rush E."/>
            <person name="Pitt G.S."/>
            <person name="Au P.Y.B."/>
            <person name="Shashi V."/>
        </authorList>
    </citation>
    <scope>VARIANTS NEDHLSS 161-ARG--LEU-2221 DEL; LEU-166; ARG-177; TRP-324; MET-403; 528-TRP--LEU-2221 DEL; ARG-601; THR-611; ARG-614; PRO-614; PHE-657; ILE-743 DEL; ALA-1187; VAL-1408; LEU-1411 AND 1989-ARG--LEU-2221 DEL</scope>
    <scope>CHARACTERIZATION OF VARIANT NEDHLSS VAL-1408</scope>
    <scope>FUNCTION</scope>
    <scope>TRANSPORTER ACTIVITY</scope>
</reference>
<reference key="49">
    <citation type="journal article" date="2021" name="Genet. Med.">
        <authorList>
            <consortium name="Undiagnosed Diseases Network"/>
            <person name="Rodan L.H."/>
            <person name="Spillmann R.C."/>
            <person name="Kurata H.T."/>
            <person name="Lamothe S.M."/>
            <person name="Maghera J."/>
            <person name="Jamra R.A."/>
            <person name="Alkelai A."/>
            <person name="Antonarakis S.E."/>
            <person name="Atallah I."/>
            <person name="Bar-Yosef O."/>
            <person name="Bilan F."/>
            <person name="Bjorgo K."/>
            <person name="Blanc X."/>
            <person name="Van Bogaert P."/>
            <person name="Bolkier Y."/>
            <person name="Burrage L.C."/>
            <person name="Christ B.U."/>
            <person name="Granadillo J.L."/>
            <person name="Dickson P."/>
            <person name="Donald K.A."/>
            <person name="Dubourg C."/>
            <person name="Eliyahu A."/>
            <person name="Emrick L."/>
            <person name="Engleman K."/>
            <person name="Gonfiantini M.V."/>
            <person name="Good J.M."/>
            <person name="Kalser J."/>
            <person name="Kloeckner C."/>
            <person name="Lachmeijer G."/>
            <person name="Macchiaiolo M."/>
            <person name="Nicita F."/>
            <person name="Odent S."/>
            <person name="O'Heir E."/>
            <person name="Ortiz-Gonzalez X."/>
            <person name="Pacio-Miguez M."/>
            <person name="Palomares-Bralo M."/>
            <person name="Pena L."/>
            <person name="Platzer K."/>
            <person name="Quinodoz M."/>
            <person name="Ranza E."/>
            <person name="Rosenfeld J.A."/>
            <person name="Roulet-Perez E."/>
            <person name="Santani A."/>
            <person name="Santos-Simarro F."/>
            <person name="Pode-Shakked B."/>
            <person name="Skraban C."/>
            <person name="Slaugh R."/>
            <person name="Superti-Furga A."/>
            <person name="Thiffault I."/>
            <person name="van Jaabrsveld R.H."/>
            <person name="Vincent M."/>
            <person name="Wang H.G."/>
            <person name="Zacher P."/>
            <person name="Rush E."/>
            <person name="Pitt G.S."/>
            <person name="Au P.Y.B."/>
            <person name="Shashi V."/>
        </authorList>
    </citation>
    <scope>ERRATUM OF PUBMED:34163037</scope>
</reference>
<keyword id="KW-0002">3D-structure</keyword>
<keyword id="KW-0025">Alternative splicing</keyword>
<keyword id="KW-1269">Autism</keyword>
<keyword id="KW-1268">Autism spectrum disorder</keyword>
<keyword id="KW-0992">Brugada syndrome</keyword>
<keyword id="KW-0106">Calcium</keyword>
<keyword id="KW-0107">Calcium channel</keyword>
<keyword id="KW-0109">Calcium transport</keyword>
<keyword id="KW-0112">Calmodulin-binding</keyword>
<keyword id="KW-1003">Cell membrane</keyword>
<keyword id="KW-0966">Cell projection</keyword>
<keyword id="KW-0225">Disease variant</keyword>
<keyword id="KW-1015">Disulfide bond</keyword>
<keyword id="KW-0887">Epilepsy</keyword>
<keyword id="KW-0325">Glycoprotein</keyword>
<keyword id="KW-0945">Host-virus interaction</keyword>
<keyword id="KW-0991">Intellectual disability</keyword>
<keyword id="KW-0407">Ion channel</keyword>
<keyword id="KW-0406">Ion transport</keyword>
<keyword id="KW-0454">Long QT syndrome</keyword>
<keyword id="KW-0472">Membrane</keyword>
<keyword id="KW-0479">Metal-binding</keyword>
<keyword id="KW-0597">Phosphoprotein</keyword>
<keyword id="KW-0628">Postsynaptic cell membrane</keyword>
<keyword id="KW-1267">Proteomics identification</keyword>
<keyword id="KW-1185">Reference proteome</keyword>
<keyword id="KW-0677">Repeat</keyword>
<keyword id="KW-0770">Synapse</keyword>
<keyword id="KW-0812">Transmembrane</keyword>
<keyword id="KW-1133">Transmembrane helix</keyword>
<keyword id="KW-0813">Transport</keyword>
<keyword id="KW-0851">Voltage-gated channel</keyword>
<name>CAC1C_HUMAN</name>
<protein>
    <recommendedName>
        <fullName>Voltage-dependent L-type calcium channel subunit alpha-1C</fullName>
    </recommendedName>
    <alternativeName>
        <fullName>Calcium channel, L type, alpha-1 polypeptide, isoform 1, cardiac muscle</fullName>
    </alternativeName>
    <alternativeName>
        <fullName>Voltage-gated calcium channel subunit alpha Cav1.2</fullName>
    </alternativeName>
</protein>
<sequence length="2221" mass="248977">MVNENTRMYIPEENHQGSNYGSPRPAHANMNANAAAGLAPEHIPTPGAALSWQAAIDAARQAKLMGSAGNATISTVSSTQRKRQQYGKPKKQGSTTATRPPRALLCLTLKNPIRRACISIVEWKPFEIIILLTIFANCVALAIYIPFPEDDSNATNSNLERVEYLFLIIFTVEAFLKVIAYGLLFHPNAYLRNGWNLLDFIIVVVGLFSAILEQATKADGANALGGKGAGFDVKALRAFRVLRPLRLVSGVPSLQVVLNSIIKAMVPLLHIALLVLFVIIIYAIIGLELFMGKMHKTCYNQEGIADVPAEDDPSPCALETGHGRQCQNGTVCKPGWDGPKHGITNFDNFAFAMLTVFQCITMEGWTDVLYWVNDAVGRDWPWIYFVTLIIIGSFFVLNLVLGVLSGEFSKEREKAKARGDFQKLREKQQLEEDLKGYLDWITQAEDIDPENEDEGMDEEKPRNMSMPTSETESVNTENVAGGDIEGENCGARLAHRISKSKFSRYWRRWNRFCRRKCRAAVKSNVFYWLVIFLVFLNTLTIASEHYNQPNWLTEVQDTANKALLALFTAEMLLKMYSLGLQAYFVSLFNRFDCFVVCGGILETILVETKIMSPLGISVLRCVRLLRIFKITRYWNSLSNLVASLLNSVRSIASLLLLLFLFIIIFSLLGMQLFGGKFNFDEMQTRRSTFDNFPQSLLTVFQILTGEDWNSVMYDGIMAYGGPSFPGMLVCIYFIILFICGNYILLNVFLAIAVDNLADAESLTSAQKEEEEEKERKKLARTASPEKKQELVEKPAVGESKEEKIELKSITADGESPPATKINMDDLQPNENEDKSPYPNPETTGEEDEEEPEMPVGPRPRPLSELHLKEKAVPMPEASAFFIFSSNNRFRLQCHRIVNDTIFTNLILFFILLSSISLAAEDPVQHTSFRNHILFYFDIVFTTIFTIEIALKILGNADYVFTSIFTLEIILKMTAYGAFLHKGSFCRNYFNILDLLVVSVSLISFGIQSSAINVVKILRVLRVLRPLRAINRAKGLKHVVQCVFVAIRTIGNIVIVTTLLQFMFACIGVQLFKGKLYTCSDSSKQTEAECKGNYITYKDGEVDHPIIQPRSWENSKFDFDNVLAAMMALFTVSTFEGWPELLYRSIDSHTEDKGPIYNYRVEISIFFIIYIIIIAFFMMNIFVGFVIVTFQEQGEQEYKNCELDKNQRQCVEYALKARPLRRYIPKNQHQYKVWYVVNSTYFEYLMFVLILLNTICLAMQHYGQSCLFKIAMNILNMLFTGLFTVEMILKLIAFKPKGYFSDPWNVFDFLIVIGSIIDVILSETNHYFCDAWNTFDALIVVGSIVDIAITEVNPAEHTQCSPSMNAEENSRISITFFRLFRVMRLVKLLSRGEGIRTLLWTFIKSFQALPYVALLIVMLFFIYAVIGMQVFGKIALNDTTEINRNNNFQTFPQAVLLLFRCATGEAWQDIMLACMPGKKCAPESEPSNSTEGETPCGSSFAVFYFISFYMLCAFLIINLFVAVIMDNFDYLTRDWSILGPHHLDEFKRIWAEYDPEAKGRIKHLDVVTLLRRIQPPLGFGKLCPHRVACKRLVSMNMPLNSDGTVMFNATLFALVRTALRIKTEGNLEQANEELRAIIKKIWKRTSMKLLDQVVPPAGDDEVTVGKFYATFLIQEYFRKFKKRKEQGLVGKPSQRNALSLQAGLRTLHDIGPEIRRAISGDLTAEEELDKAMKEAVSAASEDDIFRRAGGLFGNHVSYYQSDGRSAFPQTFTTQRPLHINKAGSSQGDTESPSHEKLVDSTFTPSSYSSTGSNANINNANNTALGRLPRPAGYPSTVSTVEGHGPPLSPAIRVQEVAWKLSSNRERHVPMCEDLELRRDSGSAGTQAHCLLLRKANPSRCHSRESQAAMAGQEETSQDETYEVKMNHDTEACSEPSLLSTEMLSYQDDENRQLTLPEEDKRDIRQSPKRGFLRSASLGRRASFHLECLKRQKDRGGDISQKTVLPLHLVHHQALAVAGLSPLLQRSHSPASFPRPFATPPATPGSRGWPPQPVPTLRLEGVESSEKLNSSFPSIHCGSWAETTPGGGGSSAARRVRPVSLMVPSQAGAPGRQFHGSASSLVEAVLISEGLGQFAQDPKFIEVTTQELADACDMTIEEMESAADNILSGGAPQSPNGALLPFVNCRDAGQDRAGGEEDAGCVRARGRPSEEELQDSRVYVSSL</sequence>
<gene>
    <name type="primary">CACNA1C</name>
    <name type="synonym">CACH2</name>
    <name type="synonym">CACN2</name>
    <name type="synonym">CACNL1A1</name>
    <name type="synonym">CCHL1A1</name>
</gene>
<evidence type="ECO:0000250" key="1">
    <source>
        <dbReference type="UniProtKB" id="P07293"/>
    </source>
</evidence>
<evidence type="ECO:0000250" key="2">
    <source>
        <dbReference type="UniProtKB" id="P15381"/>
    </source>
</evidence>
<evidence type="ECO:0000250" key="3">
    <source>
        <dbReference type="UniProtKB" id="P22002"/>
    </source>
</evidence>
<evidence type="ECO:0000250" key="4">
    <source>
        <dbReference type="UniProtKB" id="Q01815"/>
    </source>
</evidence>
<evidence type="ECO:0000255" key="5"/>
<evidence type="ECO:0000256" key="6">
    <source>
        <dbReference type="SAM" id="MobiDB-lite"/>
    </source>
</evidence>
<evidence type="ECO:0000269" key="7">
    <source>
    </source>
</evidence>
<evidence type="ECO:0000269" key="8">
    <source>
    </source>
</evidence>
<evidence type="ECO:0000269" key="9">
    <source>
    </source>
</evidence>
<evidence type="ECO:0000269" key="10">
    <source>
    </source>
</evidence>
<evidence type="ECO:0000269" key="11">
    <source>
    </source>
</evidence>
<evidence type="ECO:0000269" key="12">
    <source>
    </source>
</evidence>
<evidence type="ECO:0000269" key="13">
    <source>
    </source>
</evidence>
<evidence type="ECO:0000269" key="14">
    <source>
    </source>
</evidence>
<evidence type="ECO:0000269" key="15">
    <source>
    </source>
</evidence>
<evidence type="ECO:0000269" key="16">
    <source>
    </source>
</evidence>
<evidence type="ECO:0000269" key="17">
    <source>
    </source>
</evidence>
<evidence type="ECO:0000269" key="18">
    <source>
    </source>
</evidence>
<evidence type="ECO:0000269" key="19">
    <source>
    </source>
</evidence>
<evidence type="ECO:0000269" key="20">
    <source>
    </source>
</evidence>
<evidence type="ECO:0000269" key="21">
    <source>
    </source>
</evidence>
<evidence type="ECO:0000269" key="22">
    <source>
    </source>
</evidence>
<evidence type="ECO:0000269" key="23">
    <source>
    </source>
</evidence>
<evidence type="ECO:0000269" key="24">
    <source>
    </source>
</evidence>
<evidence type="ECO:0000269" key="25">
    <source>
    </source>
</evidence>
<evidence type="ECO:0000269" key="26">
    <source>
    </source>
</evidence>
<evidence type="ECO:0000269" key="27">
    <source>
    </source>
</evidence>
<evidence type="ECO:0000269" key="28">
    <source>
    </source>
</evidence>
<evidence type="ECO:0000269" key="29">
    <source>
    </source>
</evidence>
<evidence type="ECO:0000269" key="30">
    <source>
    </source>
</evidence>
<evidence type="ECO:0000269" key="31">
    <source>
    </source>
</evidence>
<evidence type="ECO:0000269" key="32">
    <source>
    </source>
</evidence>
<evidence type="ECO:0000269" key="33">
    <source>
    </source>
</evidence>
<evidence type="ECO:0000269" key="34">
    <source>
    </source>
</evidence>
<evidence type="ECO:0000269" key="35">
    <source>
    </source>
</evidence>
<evidence type="ECO:0000269" key="36">
    <source>
    </source>
</evidence>
<evidence type="ECO:0000269" key="37">
    <source>
    </source>
</evidence>
<evidence type="ECO:0000269" key="38">
    <source>
    </source>
</evidence>
<evidence type="ECO:0000269" key="39">
    <source>
    </source>
</evidence>
<evidence type="ECO:0000269" key="40">
    <source>
    </source>
</evidence>
<evidence type="ECO:0000269" key="41">
    <source>
    </source>
</evidence>
<evidence type="ECO:0000269" key="42">
    <source>
    </source>
</evidence>
<evidence type="ECO:0000269" key="43">
    <source>
    </source>
</evidence>
<evidence type="ECO:0000269" key="44">
    <source>
    </source>
</evidence>
<evidence type="ECO:0000269" key="45">
    <source>
    </source>
</evidence>
<evidence type="ECO:0000269" key="46">
    <source>
    </source>
</evidence>
<evidence type="ECO:0000269" key="47">
    <source>
    </source>
</evidence>
<evidence type="ECO:0000269" key="48">
    <source ref="10"/>
</evidence>
<evidence type="ECO:0000303" key="49">
    <source>
    </source>
</evidence>
<evidence type="ECO:0000303" key="50">
    <source>
    </source>
</evidence>
<evidence type="ECO:0000303" key="51">
    <source>
    </source>
</evidence>
<evidence type="ECO:0000303" key="52">
    <source>
    </source>
</evidence>
<evidence type="ECO:0000303" key="53">
    <source>
    </source>
</evidence>
<evidence type="ECO:0000303" key="54">
    <source>
    </source>
</evidence>
<evidence type="ECO:0000303" key="55">
    <source>
    </source>
</evidence>
<evidence type="ECO:0000303" key="56">
    <source>
    </source>
</evidence>
<evidence type="ECO:0000303" key="57">
    <source>
    </source>
</evidence>
<evidence type="ECO:0000303" key="58">
    <source ref="10"/>
</evidence>
<evidence type="ECO:0000305" key="59"/>
<evidence type="ECO:0000305" key="60">
    <source>
    </source>
</evidence>
<evidence type="ECO:0007744" key="61">
    <source>
        <dbReference type="PDB" id="2BE6"/>
    </source>
</evidence>
<evidence type="ECO:0007744" key="62">
    <source>
        <dbReference type="PDB" id="2F3Z"/>
    </source>
</evidence>
<evidence type="ECO:0007744" key="63">
    <source>
        <dbReference type="PDB" id="2LQC"/>
    </source>
</evidence>
<evidence type="ECO:0007744" key="64">
    <source>
        <dbReference type="PDB" id="3G43"/>
    </source>
</evidence>
<evidence type="ECO:0007744" key="65">
    <source>
        <dbReference type="PDB" id="3OXQ"/>
    </source>
</evidence>
<evidence type="ECO:0007829" key="66">
    <source>
        <dbReference type="PDB" id="2F3Y"/>
    </source>
</evidence>
<evidence type="ECO:0007829" key="67">
    <source>
        <dbReference type="PDB" id="2LQC"/>
    </source>
</evidence>
<evidence type="ECO:0007829" key="68">
    <source>
        <dbReference type="PDB" id="3G43"/>
    </source>
</evidence>
<evidence type="ECO:0007829" key="69">
    <source>
        <dbReference type="PDB" id="5V2Q"/>
    </source>
</evidence>
<evidence type="ECO:0007829" key="70">
    <source>
        <dbReference type="PDB" id="6U3B"/>
    </source>
</evidence>
<evidence type="ECO:0007829" key="71">
    <source>
        <dbReference type="PDB" id="8EOG"/>
    </source>
</evidence>
<evidence type="ECO:0007829" key="72">
    <source>
        <dbReference type="PDB" id="8EOI"/>
    </source>
</evidence>
<evidence type="ECO:0007829" key="73">
    <source>
        <dbReference type="PDB" id="8FD7"/>
    </source>
</evidence>
<evidence type="ECO:0007829" key="74">
    <source>
        <dbReference type="PDB" id="8FHS"/>
    </source>
</evidence>
<evidence type="ECO:0007829" key="75">
    <source>
        <dbReference type="PDB" id="8WE6"/>
    </source>
</evidence>
<evidence type="ECO:0007829" key="76">
    <source>
        <dbReference type="PDB" id="8WE7"/>
    </source>
</evidence>
<evidence type="ECO:0007829" key="77">
    <source>
        <dbReference type="PDB" id="8WE8"/>
    </source>
</evidence>
<evidence type="ECO:0007829" key="78">
    <source>
        <dbReference type="PDB" id="8WE9"/>
    </source>
</evidence>
<evidence type="ECO:0007829" key="79">
    <source>
        <dbReference type="PDB" id="8WEA"/>
    </source>
</evidence>
<proteinExistence type="evidence at protein level"/>